<feature type="chain" id="PRO_0000056001" description="Protein PML">
    <location>
        <begin position="1"/>
        <end position="882"/>
    </location>
</feature>
<feature type="zinc finger region" description="RING-type" evidence="5">
    <location>
        <begin position="57"/>
        <end position="92"/>
    </location>
</feature>
<feature type="zinc finger region" description="B box-type 1; atypical" evidence="4">
    <location>
        <begin position="124"/>
        <end position="166"/>
    </location>
</feature>
<feature type="zinc finger region" description="B box-type 2" evidence="4">
    <location>
        <begin position="183"/>
        <end position="236"/>
    </location>
</feature>
<feature type="region of interest" description="Disordered" evidence="6">
    <location>
        <begin position="1"/>
        <end position="48"/>
    </location>
</feature>
<feature type="region of interest" description="Interaction with PER2" evidence="56">
    <location>
        <begin position="448"/>
        <end position="555"/>
    </location>
</feature>
<feature type="region of interest" description="Disordered" evidence="6">
    <location>
        <begin position="467"/>
        <end position="589"/>
    </location>
</feature>
<feature type="region of interest" description="Sumo interaction motif (SIM)">
    <location>
        <begin position="556"/>
        <end position="562"/>
    </location>
</feature>
<feature type="coiled-coil region" evidence="3">
    <location>
        <begin position="228"/>
        <end position="253"/>
    </location>
</feature>
<feature type="short sequence motif" description="Nuclear localization signal">
    <location>
        <begin position="476"/>
        <end position="490"/>
    </location>
</feature>
<feature type="compositionally biased region" description="Polar residues" evidence="6">
    <location>
        <begin position="468"/>
        <end position="484"/>
    </location>
</feature>
<feature type="compositionally biased region" description="Basic and acidic residues" evidence="6">
    <location>
        <begin position="489"/>
        <end position="501"/>
    </location>
</feature>
<feature type="compositionally biased region" description="Polar residues" evidence="6">
    <location>
        <begin position="505"/>
        <end position="516"/>
    </location>
</feature>
<feature type="binding site">
    <location>
        <position position="57"/>
    </location>
    <ligand>
        <name>Zn(2+)</name>
        <dbReference type="ChEBI" id="CHEBI:29105"/>
        <label>1</label>
    </ligand>
</feature>
<feature type="binding site">
    <location>
        <position position="60"/>
    </location>
    <ligand>
        <name>Zn(2+)</name>
        <dbReference type="ChEBI" id="CHEBI:29105"/>
        <label>1</label>
    </ligand>
</feature>
<feature type="binding site">
    <location>
        <position position="72"/>
    </location>
    <ligand>
        <name>Zn(2+)</name>
        <dbReference type="ChEBI" id="CHEBI:29105"/>
        <label>2</label>
    </ligand>
</feature>
<feature type="binding site">
    <location>
        <position position="74"/>
    </location>
    <ligand>
        <name>Zn(2+)</name>
        <dbReference type="ChEBI" id="CHEBI:29105"/>
        <label>2</label>
    </ligand>
</feature>
<feature type="binding site">
    <location>
        <position position="77"/>
    </location>
    <ligand>
        <name>Zn(2+)</name>
        <dbReference type="ChEBI" id="CHEBI:29105"/>
        <label>1</label>
    </ligand>
</feature>
<feature type="binding site">
    <location>
        <position position="80"/>
    </location>
    <ligand>
        <name>Zn(2+)</name>
        <dbReference type="ChEBI" id="CHEBI:29105"/>
        <label>1</label>
    </ligand>
</feature>
<feature type="binding site">
    <location>
        <position position="88"/>
    </location>
    <ligand>
        <name>Zn(2+)</name>
        <dbReference type="ChEBI" id="CHEBI:29105"/>
        <label>2</label>
    </ligand>
</feature>
<feature type="binding site">
    <location>
        <position position="91"/>
    </location>
    <ligand>
        <name>Zn(2+)</name>
        <dbReference type="ChEBI" id="CHEBI:29105"/>
        <label>2</label>
    </ligand>
</feature>
<feature type="binding site" evidence="4">
    <location>
        <position position="129"/>
    </location>
    <ligand>
        <name>Zn(2+)</name>
        <dbReference type="ChEBI" id="CHEBI:29105"/>
        <label>3</label>
    </ligand>
</feature>
<feature type="binding site" evidence="4">
    <location>
        <position position="132"/>
    </location>
    <ligand>
        <name>Zn(2+)</name>
        <dbReference type="ChEBI" id="CHEBI:29105"/>
        <label>3</label>
    </ligand>
</feature>
<feature type="binding site" evidence="4">
    <location>
        <position position="151"/>
    </location>
    <ligand>
        <name>Zn(2+)</name>
        <dbReference type="ChEBI" id="CHEBI:29105"/>
        <label>3</label>
    </ligand>
</feature>
<feature type="binding site" evidence="4">
    <location>
        <position position="155"/>
    </location>
    <ligand>
        <name>Zn(2+)</name>
        <dbReference type="ChEBI" id="CHEBI:29105"/>
        <label>3</label>
    </ligand>
</feature>
<feature type="binding site" evidence="4">
    <location>
        <position position="189"/>
    </location>
    <ligand>
        <name>Zn(2+)</name>
        <dbReference type="ChEBI" id="CHEBI:29105"/>
        <label>4</label>
    </ligand>
</feature>
<feature type="binding site" evidence="4">
    <location>
        <position position="194"/>
    </location>
    <ligand>
        <name>Zn(2+)</name>
        <dbReference type="ChEBI" id="CHEBI:29105"/>
        <label>4</label>
    </ligand>
</feature>
<feature type="binding site" evidence="4">
    <location>
        <position position="215"/>
    </location>
    <ligand>
        <name>Zn(2+)</name>
        <dbReference type="ChEBI" id="CHEBI:29105"/>
        <label>4</label>
    </ligand>
</feature>
<feature type="binding site" evidence="4">
    <location>
        <position position="222"/>
    </location>
    <ligand>
        <name>Zn(2+)</name>
        <dbReference type="ChEBI" id="CHEBI:29105"/>
        <label>4</label>
    </ligand>
</feature>
<feature type="site" description="Breakpoint for translocation to form PML-RARA oncogene in type A APL">
    <location>
        <begin position="394"/>
        <end position="395"/>
    </location>
</feature>
<feature type="site" description="(Microbial infection) Cleavage by protease 3C of enterovirus 71" evidence="73">
    <location>
        <begin position="430"/>
        <end position="431"/>
    </location>
</feature>
<feature type="site" description="(Microbial infection) Cleavage by protease 3C of enterovirus 71" evidence="73">
    <location>
        <begin position="444"/>
        <end position="445"/>
    </location>
</feature>
<feature type="site" description="Breakpoint for translocation to form PML-RARA oncogene in type B APL">
    <location>
        <begin position="552"/>
        <end position="553"/>
    </location>
</feature>
<feature type="modified residue" description="Phosphoserine; by HIPK2" evidence="39 96">
    <location>
        <position position="8"/>
    </location>
</feature>
<feature type="modified residue" description="Phosphoserine; by HIPK2 and MAPK1" evidence="95 96">
    <location>
        <position position="36"/>
    </location>
</feature>
<feature type="modified residue" description="Phosphoserine; by HIPK2 and MAPK1" evidence="39 95">
    <location>
        <position position="38"/>
    </location>
</feature>
<feature type="modified residue" description="Phosphoserine" evidence="95">
    <location>
        <position position="48"/>
    </location>
</feature>
<feature type="modified residue" description="Phosphoserine; by CHEK2" evidence="18">
    <location>
        <position position="117"/>
    </location>
</feature>
<feature type="modified residue" description="Phosphoserine; by MAPK1 and MAPK7" evidence="53 90 91 95 96">
    <location>
        <position position="403"/>
    </location>
</feature>
<feature type="modified residue" description="N6-acetyllysine; alternate" evidence="38 56">
    <location>
        <position position="487"/>
    </location>
</feature>
<feature type="modified residue" description="Phosphoserine" evidence="2">
    <location>
        <position position="493"/>
    </location>
</feature>
<feature type="modified residue" description="Phosphoserine" evidence="2">
    <location>
        <position position="504"/>
    </location>
</feature>
<feature type="modified residue" description="Phosphoserine; by MAPK1" evidence="53 95">
    <location>
        <position position="505"/>
    </location>
</feature>
<feature type="modified residue" description="Phosphoserine" evidence="95">
    <location>
        <position position="512"/>
    </location>
</feature>
<feature type="modified residue" description="N6-acetyllysine" evidence="89">
    <location>
        <position position="515"/>
    </location>
</feature>
<feature type="modified residue" description="Phosphoserine; by CDK1 and CDK2" evidence="50 53 90 91 93 94 95 96">
    <location>
        <position position="518"/>
    </location>
</feature>
<feature type="modified residue" description="Phosphoserine; by MAPK1" evidence="53 90 91 93 94 95 96">
    <location>
        <position position="527"/>
    </location>
</feature>
<feature type="modified residue" description="Phosphoserine; by MAPK1" evidence="90 91 92 94 95 96">
    <location>
        <position position="530"/>
    </location>
</feature>
<feature type="modified residue" description="Phosphoserine; by CK2" evidence="57">
    <location>
        <position position="565"/>
    </location>
</feature>
<feature type="modified residue" description="Phosphothreonine" evidence="95">
    <location>
        <position position="867"/>
    </location>
</feature>
<feature type="cross-link" description="Glycyl lysine isopeptide (Lys-Gly) (interchain with G-Cter in SUMO1); alternate" evidence="11">
    <location>
        <position position="65"/>
    </location>
</feature>
<feature type="cross-link" description="Glycyl lysine isopeptide (Lys-Gly) (interchain with G-Cter in SUMO2); alternate" evidence="97 98 99 100">
    <location>
        <position position="65"/>
    </location>
</feature>
<feature type="cross-link" description="Glycyl lysine isopeptide (Lys-Gly) (interchain with G-Cter in SUMO1); alternate" evidence="11">
    <location>
        <position position="160"/>
    </location>
</feature>
<feature type="cross-link" description="Glycyl lysine isopeptide (Lys-Gly) (interchain with G-Cter in SUMO1P1/SUMO5); alternate" evidence="69">
    <location>
        <position position="160"/>
    </location>
</feature>
<feature type="cross-link" description="Glycyl lysine isopeptide (Lys-Gly) (interchain with G-Cter in SUMO2); alternate" evidence="98 99 100">
    <location>
        <position position="160"/>
    </location>
</feature>
<feature type="cross-link" description="Glycyl lysine isopeptide (Lys-Gly) (interchain with G-Cter in /SUMO5); alternate" evidence="69">
    <location>
        <position position="380"/>
    </location>
</feature>
<feature type="cross-link" description="Glycyl lysine isopeptide (Lys-Gly) (interchain with G-Cter in SUMO2); alternate" evidence="97 98 100">
    <location>
        <position position="380"/>
    </location>
</feature>
<feature type="cross-link" description="Glycyl lysine isopeptide (Lys-Gly) (interchain with G-Cter in ubiquitin); alternate" evidence="37">
    <location>
        <position position="380"/>
    </location>
</feature>
<feature type="cross-link" description="Glycyl lysine isopeptide (Lys-Gly) (interchain with G-Cter in SUMO2)" evidence="98 100">
    <location>
        <position position="394"/>
    </location>
</feature>
<feature type="cross-link" description="Glycyl lysine isopeptide (Lys-Gly) (interchain with G-Cter in SUMO1P1/SUMO5); alternate" evidence="69">
    <location>
        <position position="400"/>
    </location>
</feature>
<feature type="cross-link" description="Glycyl lysine isopeptide (Lys-Gly) (interchain with G-Cter in ubiquitin); alternate" evidence="37">
    <location>
        <position position="400"/>
    </location>
</feature>
<feature type="cross-link" description="Glycyl lysine isopeptide (Lys-Gly) (interchain with G-Cter in SUMO2); alternate" evidence="100">
    <location>
        <position position="401"/>
    </location>
</feature>
<feature type="cross-link" description="Glycyl lysine isopeptide (Lys-Gly) (interchain with G-Cter in ubiquitin); alternate" evidence="37">
    <location>
        <position position="401"/>
    </location>
</feature>
<feature type="cross-link" description="Glycyl lysine isopeptide (Lys-Gly) (interchain with G-Cter in SUMO2)" evidence="100">
    <location>
        <position position="460"/>
    </location>
</feature>
<feature type="cross-link" description="Glycyl lysine isopeptide (Lys-Gly) (interchain with G-Cter in SUMO2); alternate" evidence="100">
    <location>
        <position position="476"/>
    </location>
</feature>
<feature type="cross-link" description="Glycyl lysine isopeptide (Lys-Gly) (interchain with G-Cter in ubiquitin); alternate" evidence="37">
    <location>
        <position position="476"/>
    </location>
</feature>
<feature type="cross-link" description="Glycyl lysine isopeptide (Lys-Gly) (interchain with G-Cter in SUMO2)" evidence="98 100">
    <location>
        <position position="478"/>
    </location>
</feature>
<feature type="cross-link" description="Glycyl lysine isopeptide (Lys-Gly) (interchain with G-Cter in SUMO2); alternate" evidence="100">
    <location>
        <position position="487"/>
    </location>
</feature>
<feature type="cross-link" description="Glycyl lysine isopeptide (Lys-Gly) (interchain with G-Cter in SUMO1); alternate" evidence="11">
    <location>
        <position position="490"/>
    </location>
</feature>
<feature type="cross-link" description="Glycyl lysine isopeptide (Lys-Gly) (interchain with G-Cter in SUMO1P1/SUMO5); alternate" evidence="69">
    <location>
        <position position="490"/>
    </location>
</feature>
<feature type="cross-link" description="Glycyl lysine isopeptide (Lys-Gly) (interchain with G-Cter in SUMO2); alternate" evidence="97 98 99 100">
    <location>
        <position position="490"/>
    </location>
</feature>
<feature type="cross-link" description="Glycyl lysine isopeptide (Lys-Gly) (interchain with G-Cter in SUMO1); alternate">
    <location>
        <position position="497"/>
    </location>
</feature>
<feature type="cross-link" description="Glycyl lysine isopeptide (Lys-Gly) (interchain with G-Cter in SUMO1P1/SUMO5); alternate" evidence="69">
    <location>
        <position position="497"/>
    </location>
</feature>
<feature type="cross-link" description="Glycyl lysine isopeptide (Lys-Gly) (interchain with G-Cter in SUMO2); alternate" evidence="100">
    <location>
        <position position="497"/>
    </location>
</feature>
<feature type="splice variant" id="VSP_040590" description="In isoform PML-11, isoform PML-12 and isoform PML-13." evidence="78 80 85 86">
    <location>
        <begin position="419"/>
        <end position="466"/>
    </location>
</feature>
<feature type="splice variant" id="VSP_040591" description="In isoform PML-7." evidence="78">
    <original>PEEAERVKAQVQALGLA</original>
    <variation>LPPPAHALTGPAQSSTH</variation>
    <location>
        <begin position="419"/>
        <end position="435"/>
    </location>
</feature>
<feature type="splice variant" id="VSP_040592" description="In isoform PML-14." evidence="78">
    <original>PEEAE</original>
    <variation>RNALW</variation>
    <location>
        <begin position="419"/>
        <end position="423"/>
    </location>
</feature>
<feature type="splice variant" id="VSP_040593" description="In isoform PML-14." evidence="78">
    <location>
        <begin position="424"/>
        <end position="882"/>
    </location>
</feature>
<feature type="splice variant" id="VSP_040594" description="In isoform PML-7." evidence="78">
    <location>
        <begin position="436"/>
        <end position="882"/>
    </location>
</feature>
<feature type="splice variant" id="VSP_005742" description="In isoform PML-6." evidence="78 81 84">
    <original>EERVVVIS</original>
    <variation>GRERNALW</variation>
    <location>
        <begin position="553"/>
        <end position="560"/>
    </location>
</feature>
<feature type="splice variant" id="VSP_005743" description="In isoform PML-6." evidence="78 81 84">
    <location>
        <begin position="561"/>
        <end position="882"/>
    </location>
</feature>
<feature type="splice variant" id="VSP_040595" description="In isoform PML-2 and isoform PML-13." evidence="78 80 85">
    <original>SSRELDDSSSESSDLQLEGPSTLRVLDENLADPQAEDRPLVFFDLKIDNETQKISQLAAVNRESKFRVVIQPEAFFSIYSKAVSLEVGLQHFLSFLSSMRRPILACYKLWGPGLPNFFRALEDINRLWEFQEAISGFLAALPLIRERVPGASSFKLKNLAQTYLARNMSERSAMAAVLAMRDLCRLLEVSPGPQLAQHVYPFSSLQCFASLQPLVQAAVLPRAEARLLALHNVSFMELLSAHRRDRQGGLKKYSRYLSLQTTTLPPAQPAFNLQALGTYFEGLLEGPALARAEGVSTPLAGRGLAERASQQS</original>
    <variation>CMEPMETAEPQSSPAHSSPAHSSPAHSSPVQSLLRAQGASSLPCGTYHPPAWPPHQPAEQAATPDAEPHSEPPDHQERPAVHRGIRYLLYRAQRAIRLRHALRLHPQLHRAPIRTWSPHVVQASTPAITGPLNHPANAQEHPAQLQRGISPPHRIRGAVRSRSRSLRGSSHLSQWLNNFFALPFSSMASQLDMSSVVGAGESRAQTLGAGVPPGDSVRGSMEASQVQVPLEASPITFPPPCAPERPPISPVPGARQAGL</variation>
    <location>
        <begin position="571"/>
        <end position="882"/>
    </location>
</feature>
<feature type="splice variant" id="VSP_005741" description="In isoform PML-8." evidence="78 83">
    <original>SSRELDDSSSESSDLQLEGPSTLRVLDENLADPQAEDRPLVFFDLKIDNETQKISQLAAVNRESKFRVVIQPEAFFSIYSKAVSLEVGLQHFLSFLSSMRRPILACYKLWGPGLPNFFRALEDINRLWEFQEAISGFLAALPLIRERVPGASSFKLKNLAQTYLARNMSERSAMAAVLAMRDLCRLLEVSPGPQLAQHVYPFSSLQCFASLQPLVQAAVLPRAEARLLALHNVSFMELLSAHRRDRQGGLKKYSRYLSLQTTTLPPAQPAFNLQALGTYFEGLLEGPALARAEGVSTPLAGRGLAERASQQS</original>
    <variation>CMEPMETAEPQSSPAHSSPAHSSPVQSLLRAQGASSLPCGTYHPPAWPPHQPAEQAATPDAEPHSEPPDHQERPAVHRGIRYLLYRAQRAIRLRHALRLHPQLHRAPIRTWSPHVVQASTPAITGPLNHPANAQEHPAQLQRGISPPHRIRGAVRSRSRSLRGSSHLSQWLNNFFALPFSSMASQLDMSSVVGAGESRAQTLGAGVPPGDSVRGSMEASQVQVPLEASPITFPPPCAPERPPISPVPGARQAGL</variation>
    <location>
        <begin position="571"/>
        <end position="882"/>
    </location>
</feature>
<feature type="splice variant" id="VSP_040596" description="In isoform PML-3." evidence="82">
    <original>SSRELDDSSSESSDLQLEGPSTLRVLDENLADPQAEDRPLVFFDLKIDNETQKISQLAAVNRESKFRVVIQ</original>
    <variation>VSSSPQSEVLYWKVHGAHGDRRATVLASPLLASPLLASPLLASPVSAESTRSLQPALWHIPPPSLASPPAR</variation>
    <location>
        <begin position="571"/>
        <end position="641"/>
    </location>
</feature>
<feature type="splice variant" id="VSP_005739" description="In isoform PML-5." evidence="78 83">
    <original>SSRELDDSSSESSDLQLEGPSTLRVLDENLADPQAEDRPLV</original>
    <variation>VSGPEVQPRTPASPHFRSQGAQPQQVTLRLALRLGNFPVRH</variation>
    <location>
        <begin position="571"/>
        <end position="611"/>
    </location>
</feature>
<feature type="splice variant" id="VSP_005740" description="In isoform PML-5." evidence="78 83">
    <location>
        <begin position="612"/>
        <end position="882"/>
    </location>
</feature>
<feature type="splice variant" id="VSP_005744" description="In isoform PML-4 and isoform PML-12." evidence="78 79">
    <original>TQKISQLAAVNRE</original>
    <variation>SGFSWGYPHPFLI</variation>
    <location>
        <begin position="621"/>
        <end position="633"/>
    </location>
</feature>
<feature type="splice variant" id="VSP_005745" description="In isoform PML-4 and isoform PML-12." evidence="78 79">
    <location>
        <begin position="634"/>
        <end position="882"/>
    </location>
</feature>
<feature type="splice variant" id="VSP_040597" description="In isoform PML-3." evidence="82">
    <location>
        <begin position="642"/>
        <end position="882"/>
    </location>
</feature>
<feature type="sequence variant" id="VAR_052090" description="In dbSNP:rs5742915." evidence="13 34">
    <original>F</original>
    <variation>L</variation>
    <location>
        <position position="645"/>
    </location>
</feature>
<feature type="mutagenesis site" description="Strongly reduced sumoylation; when associated with S-60." evidence="32">
    <original>C</original>
    <variation>S</variation>
    <location>
        <position position="57"/>
    </location>
</feature>
<feature type="mutagenesis site" description="Strongly reduced sumoylation; when associated with S-57." evidence="32">
    <original>C</original>
    <variation>S</variation>
    <location>
        <position position="60"/>
    </location>
</feature>
<feature type="mutagenesis site" description="Loss of one sumoylation. No effect on nuclear body formation. Loss of 2 sumoylations; when associated with R-490 with or without R-133 or R-150. No effect on nuclear body formation; when associated with R-490. Loss the ability to be conjugated by SUMO1P1/SUMO5 but could be conjugated by SUMO1; when associated with R-160 and R-490." evidence="69 77">
    <original>K</original>
    <variation>R</variation>
    <location>
        <position position="65"/>
    </location>
</feature>
<feature type="mutagenesis site" description="Loss of one sumoylation. No effect on nuclear body formation. Loss of 2 sumoylations; when associated with R-490 with or without R-133 or R-150. No effect on nuclear body formation; when associated with R-490. No sumoylation nor nuclear body formation; when associated with R-160 and R-490." evidence="77">
    <original>K</original>
    <variation>R</variation>
    <location>
        <position position="65"/>
    </location>
</feature>
<feature type="mutagenesis site" description="No effect on sumoylation levels.">
    <original>K</original>
    <variation>R</variation>
    <location>
        <position position="68"/>
    </location>
</feature>
<feature type="mutagenesis site" description="No nuclear microspeckle location, no sumoylation and loss of intrinsic transcriptional repressor activity of PML-RARA oncoprotein; when associated with R-89." evidence="30">
    <original>C</original>
    <variation>S</variation>
    <location>
        <position position="88"/>
    </location>
</feature>
<feature type="mutagenesis site" description="No nuclear microspeckle location, no sumoylation and loss of intrinsic transcriptional repressor activity of PML-RARA oncoprotein; when associated with S-88." evidence="30">
    <original>P</original>
    <variation>R</variation>
    <location>
        <position position="89"/>
    </location>
</feature>
<feature type="mutagenesis site" description="Loss of 2 sumoylations; when associated with R-65 and R-490." evidence="77">
    <original>K</original>
    <variation>R</variation>
    <location>
        <position position="133"/>
    </location>
</feature>
<feature type="mutagenesis site" description="Loss of 2 sumoylations; when associated with R-65 and R-490." evidence="77">
    <original>K</original>
    <variation>R</variation>
    <location>
        <position position="150"/>
    </location>
</feature>
<feature type="mutagenesis site" description="Compromised the formation of high molecular weight species of SUMO1P1/SUMO5 conjugation on PML. Loss of 2 sumoylations; when associated with or without R-65. No sumoylation nor nuclear body formation; when associated with or without R-65 and R-490. Loss the ability to be conjugated by SUMO1P1/SUMO5 but could be conjugated by SUMO1; when associated with R-65 and R-490." evidence="69 77">
    <original>K</original>
    <variation>R</variation>
    <location>
        <position position="160"/>
    </location>
</feature>
<feature type="mutagenesis site" description="Loss of 2 sumoylations; when associated with or without R-65. No sumoylation nor nuclear body formation; when associated with or without R-65 and R-490." evidence="77">
    <original>K</original>
    <variation>R</variation>
    <location>
        <position position="160"/>
    </location>
</feature>
<feature type="mutagenesis site" description="Does not affect SUMO1P1/SUMO5 conjugation." evidence="69">
    <original>K</original>
    <variation>R</variation>
    <location>
        <position position="380"/>
    </location>
</feature>
<feature type="mutagenesis site" description="Does not affect SUMO1P1/SUMO5 conjugation." evidence="69">
    <original>K</original>
    <variation>R</variation>
    <location>
        <position position="400"/>
    </location>
</feature>
<feature type="mutagenesis site" description="Loss of cleavage by enterovirus 71 protease 3C." evidence="73">
    <original>Q</original>
    <variation>A</variation>
    <location>
        <position position="430"/>
    </location>
</feature>
<feature type="mutagenesis site" description="Loss of cleavage by enterovirus 71 protease 3C." evidence="73">
    <original>Q</original>
    <variation>A</variation>
    <location>
        <position position="444"/>
    </location>
</feature>
<feature type="mutagenesis site" description="Loss of nuclear localization; when associated with A-490." evidence="35 38">
    <original>K</original>
    <variation>A</variation>
    <location>
        <position position="487"/>
    </location>
</feature>
<feature type="mutagenesis site" description="Loss of nuclear localization. Reduced acetylation. Further decrease in acetylation; when associated with R-515." evidence="35 38">
    <original>K</original>
    <variation>R</variation>
    <location>
        <position position="487"/>
    </location>
</feature>
<feature type="mutagenesis site" description="Loss of nuclear localization; when associated with A-487." evidence="35 77">
    <original>K</original>
    <variation>A</variation>
    <location>
        <position position="490"/>
    </location>
</feature>
<feature type="mutagenesis site" description="Abolished conjugation of one SUMO1P1/SUMO5. Loss of 2 sumoylations; when associated with R-65 with or without R-133. No effect on nuclear body formation; when associated with R-65. No sumoylation nor nuclear body formation; when associated with R-65 and R-160. Loss the ability to be conjugated by SUMO1P1/SUMO5 but could be conjugated by SUMO1; when associated with R-65 and R-160." evidence="35 69 77">
    <original>K</original>
    <variation>R</variation>
    <location>
        <position position="490"/>
    </location>
</feature>
<feature type="mutagenesis site" description="Loss of 2 sumoylations; when associated with R-65 with or without R-133. No effect on nuclear body formation; when associated with R-65. No sumoylation nor nuclear body formation; when associated with R-65 and R-160." evidence="35 77">
    <original>K</original>
    <variation>R</variation>
    <location>
        <position position="490"/>
    </location>
</feature>
<feature type="mutagenesis site" description="Does not affect SUMO1P1/SUMO5 conjugation." evidence="69">
    <original>K</original>
    <variation>R</variation>
    <location>
        <position position="497"/>
    </location>
</feature>
<feature type="mutagenesis site" description="Slightly reduced acetylation. Further decrease in acetylation; when associated with R-487." evidence="38">
    <original>K</original>
    <variation>R</variation>
    <location>
        <position position="515"/>
    </location>
</feature>
<feature type="mutagenesis site" description="Abolishes ubiquitination by the BCR(KLHL20) E3 ubiquitin ligase complex." evidence="50">
    <original>S</original>
    <variation>A</variation>
    <location>
        <position position="518"/>
    </location>
</feature>
<feature type="mutagenesis site" description="Abolishes SUMO1 binding.">
    <original>VVVI</original>
    <variation>AAAS</variation>
    <location>
        <begin position="556"/>
        <end position="559"/>
    </location>
</feature>
<feature type="sequence conflict" description="In Ref. 7; AAP88913 and 10; AAH00080/AAH20994." evidence="87" ref="7 10">
    <original>E</original>
    <variation>D</variation>
    <location>
        <position position="224"/>
    </location>
</feature>
<feature type="sequence conflict" description="In Ref. 2; AAA60351/AAA60388/AAA60390, 4; AAA60352 and 5; AAG50182/AAG50184/AAG50185." evidence="87" ref="2 4 5">
    <original>P</original>
    <variation>A</variation>
    <location>
        <position position="419"/>
    </location>
</feature>
<feature type="strand" evidence="102">
    <location>
        <begin position="54"/>
        <end position="56"/>
    </location>
</feature>
<feature type="turn" evidence="102">
    <location>
        <begin position="58"/>
        <end position="60"/>
    </location>
</feature>
<feature type="strand" evidence="102">
    <location>
        <begin position="62"/>
        <end position="66"/>
    </location>
</feature>
<feature type="helix" evidence="102">
    <location>
        <begin position="78"/>
        <end position="82"/>
    </location>
</feature>
<feature type="turn" evidence="102">
    <location>
        <begin position="89"/>
        <end position="91"/>
    </location>
</feature>
<feature type="strand" evidence="101">
    <location>
        <begin position="93"/>
        <end position="96"/>
    </location>
</feature>
<feature type="strand" evidence="103">
    <location>
        <begin position="121"/>
        <end position="126"/>
    </location>
</feature>
<feature type="turn" evidence="103">
    <location>
        <begin position="130"/>
        <end position="132"/>
    </location>
</feature>
<feature type="strand" evidence="103">
    <location>
        <begin position="138"/>
        <end position="140"/>
    </location>
</feature>
<feature type="turn" evidence="103">
    <location>
        <begin position="141"/>
        <end position="144"/>
    </location>
</feature>
<feature type="strand" evidence="103">
    <location>
        <begin position="145"/>
        <end position="147"/>
    </location>
</feature>
<feature type="helix" evidence="103">
    <location>
        <begin position="149"/>
        <end position="158"/>
    </location>
</feature>
<feature type="strand" evidence="103">
    <location>
        <begin position="163"/>
        <end position="165"/>
    </location>
</feature>
<feature type="strand" evidence="105">
    <location>
        <begin position="202"/>
        <end position="204"/>
    </location>
</feature>
<feature type="turn" evidence="105">
    <location>
        <begin position="205"/>
        <end position="207"/>
    </location>
</feature>
<feature type="helix" evidence="105">
    <location>
        <begin position="213"/>
        <end position="218"/>
    </location>
</feature>
<feature type="strand" evidence="104">
    <location>
        <begin position="556"/>
        <end position="558"/>
    </location>
</feature>
<feature type="modified residue" description="Phosphoserine" evidence="90">
    <location sequence="P29590-2">
        <position position="565"/>
    </location>
</feature>
<feature type="sequence conflict" description="In Ref. 5; AAG50181." evidence="87" ref="5">
    <original>P</original>
    <variation>A</variation>
    <location sequence="P29590-2">
        <position position="578"/>
    </location>
</feature>
<feature type="modified residue" description="Phosphoserine" evidence="90">
    <location sequence="P29590-4">
        <position position="518"/>
    </location>
</feature>
<feature type="modified residue" description="Phosphoserine" evidence="90">
    <location sequence="P29590-4">
        <position position="527"/>
    </location>
</feature>
<feature type="modified residue" description="Phosphoserine" evidence="90">
    <location sequence="P29590-4">
        <position position="530"/>
    </location>
</feature>
<feature type="sequence conflict" description="In Ref. 5; AAG50187." evidence="87" ref="5">
    <original>L</original>
    <variation>V</variation>
    <location sequence="P29590-10">
        <position position="419"/>
    </location>
</feature>
<name>PML_HUMAN</name>
<dbReference type="EC" id="2.3.2.-" evidence="46 71"/>
<dbReference type="EMBL" id="S50913">
    <property type="protein sequence ID" value="AAB19601.2"/>
    <property type="molecule type" value="mRNA"/>
</dbReference>
<dbReference type="EMBL" id="M79462">
    <property type="protein sequence ID" value="AAA60388.1"/>
    <property type="status" value="ALT_INIT"/>
    <property type="molecule type" value="mRNA"/>
</dbReference>
<dbReference type="EMBL" id="M79463">
    <property type="protein sequence ID" value="AAA60351.1"/>
    <property type="status" value="ALT_INIT"/>
    <property type="molecule type" value="mRNA"/>
</dbReference>
<dbReference type="EMBL" id="M79464">
    <property type="protein sequence ID" value="AAA60390.1"/>
    <property type="status" value="ALT_INIT"/>
    <property type="molecule type" value="mRNA"/>
</dbReference>
<dbReference type="EMBL" id="X63131">
    <property type="protein sequence ID" value="CAA44841.1"/>
    <property type="molecule type" value="mRNA"/>
</dbReference>
<dbReference type="EMBL" id="M73778">
    <property type="protein sequence ID" value="AAA60125.1"/>
    <property type="molecule type" value="mRNA"/>
</dbReference>
<dbReference type="EMBL" id="M80185">
    <property type="protein sequence ID" value="AAA60352.1"/>
    <property type="status" value="ALT_INIT"/>
    <property type="molecule type" value="mRNA"/>
</dbReference>
<dbReference type="EMBL" id="AF230401">
    <property type="protein sequence ID" value="AAG50180.1"/>
    <property type="molecule type" value="mRNA"/>
</dbReference>
<dbReference type="EMBL" id="AF230402">
    <property type="protein sequence ID" value="AAG50181.1"/>
    <property type="molecule type" value="mRNA"/>
</dbReference>
<dbReference type="EMBL" id="AF230403">
    <property type="protein sequence ID" value="AAG50182.1"/>
    <property type="molecule type" value="mRNA"/>
</dbReference>
<dbReference type="EMBL" id="AF230405">
    <property type="protein sequence ID" value="AAG50184.1"/>
    <property type="molecule type" value="mRNA"/>
</dbReference>
<dbReference type="EMBL" id="AF230406">
    <property type="protein sequence ID" value="AAG50185.1"/>
    <property type="molecule type" value="mRNA"/>
</dbReference>
<dbReference type="EMBL" id="AF230407">
    <property type="protein sequence ID" value="AAG50186.1"/>
    <property type="molecule type" value="mRNA"/>
</dbReference>
<dbReference type="EMBL" id="AF230408">
    <property type="protein sequence ID" value="AAG50187.1"/>
    <property type="molecule type" value="mRNA"/>
</dbReference>
<dbReference type="EMBL" id="AF230409">
    <property type="protein sequence ID" value="AAG50188.1"/>
    <property type="molecule type" value="mRNA"/>
</dbReference>
<dbReference type="EMBL" id="AF230410">
    <property type="protein sequence ID" value="AAG50189.1"/>
    <property type="molecule type" value="mRNA"/>
</dbReference>
<dbReference type="EMBL" id="AF230411">
    <property type="protein sequence ID" value="AAG50190.1"/>
    <property type="molecule type" value="mRNA"/>
</dbReference>
<dbReference type="EMBL" id="BT009911">
    <property type="protein sequence ID" value="AAP88913.1"/>
    <property type="molecule type" value="mRNA"/>
</dbReference>
<dbReference type="EMBL" id="AB209411">
    <property type="protein sequence ID" value="BAD92648.1"/>
    <property type="status" value="ALT_INIT"/>
    <property type="molecule type" value="mRNA"/>
</dbReference>
<dbReference type="EMBL" id="AC013486">
    <property type="status" value="NOT_ANNOTATED_CDS"/>
    <property type="molecule type" value="Genomic_DNA"/>
</dbReference>
<dbReference type="EMBL" id="AC108137">
    <property type="status" value="NOT_ANNOTATED_CDS"/>
    <property type="molecule type" value="Genomic_DNA"/>
</dbReference>
<dbReference type="EMBL" id="BC000080">
    <property type="protein sequence ID" value="AAH00080.2"/>
    <property type="molecule type" value="mRNA"/>
</dbReference>
<dbReference type="EMBL" id="BC020994">
    <property type="protein sequence ID" value="AAH20994.1"/>
    <property type="molecule type" value="mRNA"/>
</dbReference>
<dbReference type="EMBL" id="X64800">
    <property type="protein sequence ID" value="CAA46026.1"/>
    <property type="molecule type" value="Genomic_DNA"/>
</dbReference>
<dbReference type="EMBL" id="AB067754">
    <property type="protein sequence ID" value="BAB62809.1"/>
    <property type="status" value="ALT_SEQ"/>
    <property type="molecule type" value="mRNA"/>
</dbReference>
<dbReference type="CCDS" id="CCDS10255.1">
    <molecule id="P29590-1"/>
</dbReference>
<dbReference type="CCDS" id="CCDS10256.1">
    <molecule id="P29590-10"/>
</dbReference>
<dbReference type="CCDS" id="CCDS10257.1">
    <molecule id="P29590-8"/>
</dbReference>
<dbReference type="CCDS" id="CCDS10258.1">
    <molecule id="P29590-13"/>
</dbReference>
<dbReference type="CCDS" id="CCDS45297.1">
    <molecule id="P29590-5"/>
</dbReference>
<dbReference type="CCDS" id="CCDS45298.1">
    <molecule id="P29590-2"/>
</dbReference>
<dbReference type="CCDS" id="CCDS45299.1">
    <molecule id="P29590-4"/>
</dbReference>
<dbReference type="CCDS" id="CCDS45300.1">
    <molecule id="P29590-14"/>
</dbReference>
<dbReference type="CCDS" id="CCDS58386.1">
    <molecule id="P29590-12"/>
</dbReference>
<dbReference type="PIR" id="A40044">
    <property type="entry name" value="A40044"/>
</dbReference>
<dbReference type="PIR" id="I38054">
    <property type="entry name" value="I38054"/>
</dbReference>
<dbReference type="PIR" id="S19244">
    <property type="entry name" value="S19244"/>
</dbReference>
<dbReference type="PIR" id="S42516">
    <property type="entry name" value="S42516"/>
</dbReference>
<dbReference type="PIR" id="S44381">
    <property type="entry name" value="S44381"/>
</dbReference>
<dbReference type="RefSeq" id="NP_002666.1">
    <molecule id="P29590-5"/>
    <property type="nucleotide sequence ID" value="NM_002675.4"/>
</dbReference>
<dbReference type="RefSeq" id="NP_150241.2">
    <molecule id="P29590-1"/>
    <property type="nucleotide sequence ID" value="NM_033238.3"/>
</dbReference>
<dbReference type="RefSeq" id="NP_150242.1">
    <molecule id="P29590-8"/>
    <property type="nucleotide sequence ID" value="NM_033239.3"/>
</dbReference>
<dbReference type="RefSeq" id="NP_150243.2">
    <molecule id="P29590-2"/>
    <property type="nucleotide sequence ID" value="NM_033240.3"/>
</dbReference>
<dbReference type="RefSeq" id="NP_150247.2">
    <molecule id="P29590-4"/>
    <property type="nucleotide sequence ID" value="NM_033244.4"/>
</dbReference>
<dbReference type="RefSeq" id="NP_150249.1">
    <molecule id="P29590-14"/>
    <property type="nucleotide sequence ID" value="NM_033246.3"/>
</dbReference>
<dbReference type="RefSeq" id="NP_150250.2">
    <molecule id="P29590-10"/>
    <property type="nucleotide sequence ID" value="NM_033247.3"/>
</dbReference>
<dbReference type="RefSeq" id="NP_150252.1">
    <molecule id="P29590-12"/>
    <property type="nucleotide sequence ID" value="NM_033249.3"/>
</dbReference>
<dbReference type="RefSeq" id="NP_150253.2">
    <molecule id="P29590-13"/>
    <property type="nucleotide sequence ID" value="NM_033250.3"/>
</dbReference>
<dbReference type="PDB" id="1BOR">
    <property type="method" value="NMR"/>
    <property type="chains" value="A=49-104"/>
</dbReference>
<dbReference type="PDB" id="2MVW">
    <property type="method" value="NMR"/>
    <property type="chains" value="A/B=120-168"/>
</dbReference>
<dbReference type="PDB" id="2MWX">
    <property type="method" value="NMR"/>
    <property type="chains" value="A=49-104"/>
</dbReference>
<dbReference type="PDB" id="4WJN">
    <property type="method" value="X-ray"/>
    <property type="resolution" value="1.50 A"/>
    <property type="chains" value="B=547-573"/>
</dbReference>
<dbReference type="PDB" id="4WJO">
    <property type="method" value="X-ray"/>
    <property type="resolution" value="1.46 A"/>
    <property type="chains" value="B=547-573"/>
</dbReference>
<dbReference type="PDB" id="5YUF">
    <property type="method" value="X-ray"/>
    <property type="resolution" value="1.60 A"/>
    <property type="chains" value="A/B/C/D=49-99"/>
</dbReference>
<dbReference type="PDB" id="6IMQ">
    <property type="method" value="X-ray"/>
    <property type="resolution" value="2.06 A"/>
    <property type="chains" value="A/B/C/D=120-168"/>
</dbReference>
<dbReference type="PDB" id="6UYO">
    <property type="method" value="X-ray"/>
    <property type="resolution" value="1.64 A"/>
    <property type="chains" value="B/D=547-574"/>
</dbReference>
<dbReference type="PDB" id="6UYP">
    <property type="method" value="X-ray"/>
    <property type="resolution" value="1.42 A"/>
    <property type="chains" value="B=547-574"/>
</dbReference>
<dbReference type="PDB" id="6UYQ">
    <property type="method" value="X-ray"/>
    <property type="resolution" value="1.50 A"/>
    <property type="chains" value="B=547-574"/>
</dbReference>
<dbReference type="PDB" id="6UYR">
    <property type="method" value="X-ray"/>
    <property type="resolution" value="1.30 A"/>
    <property type="chains" value="B=547-574"/>
</dbReference>
<dbReference type="PDB" id="6UYS">
    <property type="method" value="X-ray"/>
    <property type="resolution" value="1.59 A"/>
    <property type="chains" value="B/D=547-574"/>
</dbReference>
<dbReference type="PDB" id="6UYT">
    <property type="method" value="X-ray"/>
    <property type="resolution" value="1.66 A"/>
    <property type="chains" value="B=547-574"/>
</dbReference>
<dbReference type="PDB" id="6UYU">
    <property type="method" value="X-ray"/>
    <property type="resolution" value="1.66 A"/>
    <property type="chains" value="B/D=547-574"/>
</dbReference>
<dbReference type="PDB" id="6UYV">
    <property type="method" value="X-ray"/>
    <property type="resolution" value="1.40 A"/>
    <property type="chains" value="B=547-574"/>
</dbReference>
<dbReference type="PDB" id="8DJH">
    <property type="method" value="X-ray"/>
    <property type="resolution" value="1.77 A"/>
    <property type="chains" value="B=546-573"/>
</dbReference>
<dbReference type="PDB" id="8DJI">
    <property type="method" value="X-ray"/>
    <property type="resolution" value="1.97 A"/>
    <property type="chains" value="B=547-574"/>
</dbReference>
<dbReference type="PDB" id="8J25">
    <property type="method" value="X-ray"/>
    <property type="resolution" value="2.60 A"/>
    <property type="chains" value="A=183-236"/>
</dbReference>
<dbReference type="PDB" id="8J2P">
    <property type="method" value="X-ray"/>
    <property type="resolution" value="2.09 A"/>
    <property type="chains" value="A/E=183-236"/>
</dbReference>
<dbReference type="PDB" id="8YTC">
    <property type="method" value="EM"/>
    <property type="resolution" value="5.30 A"/>
    <property type="chains" value="A/B=46-256"/>
</dbReference>
<dbReference type="PDBsum" id="1BOR"/>
<dbReference type="PDBsum" id="2MVW"/>
<dbReference type="PDBsum" id="2MWX"/>
<dbReference type="PDBsum" id="4WJN"/>
<dbReference type="PDBsum" id="4WJO"/>
<dbReference type="PDBsum" id="5YUF"/>
<dbReference type="PDBsum" id="6IMQ"/>
<dbReference type="PDBsum" id="6UYO"/>
<dbReference type="PDBsum" id="6UYP"/>
<dbReference type="PDBsum" id="6UYQ"/>
<dbReference type="PDBsum" id="6UYR"/>
<dbReference type="PDBsum" id="6UYS"/>
<dbReference type="PDBsum" id="6UYT"/>
<dbReference type="PDBsum" id="6UYU"/>
<dbReference type="PDBsum" id="6UYV"/>
<dbReference type="PDBsum" id="8DJH"/>
<dbReference type="PDBsum" id="8DJI"/>
<dbReference type="PDBsum" id="8J25"/>
<dbReference type="PDBsum" id="8J2P"/>
<dbReference type="PDBsum" id="8YTC"/>
<dbReference type="BMRB" id="P29590"/>
<dbReference type="EMDB" id="EMD-39571"/>
<dbReference type="SMR" id="P29590"/>
<dbReference type="BioGRID" id="111384">
    <property type="interactions" value="947"/>
</dbReference>
<dbReference type="CORUM" id="P29590"/>
<dbReference type="DIP" id="DIP-33053N"/>
<dbReference type="FunCoup" id="P29590">
    <property type="interactions" value="2387"/>
</dbReference>
<dbReference type="IntAct" id="P29590">
    <property type="interactions" value="175"/>
</dbReference>
<dbReference type="MINT" id="P29590"/>
<dbReference type="STRING" id="9606.ENSP00000268058"/>
<dbReference type="DrugBank" id="DB01169">
    <property type="generic name" value="Arsenic trioxide"/>
</dbReference>
<dbReference type="GlyGen" id="P29590">
    <property type="glycosylation" value="1 site, 1 O-linked glycan (1 site)"/>
</dbReference>
<dbReference type="iPTMnet" id="P29590"/>
<dbReference type="PhosphoSitePlus" id="P29590"/>
<dbReference type="SwissPalm" id="P29590"/>
<dbReference type="BioMuta" id="PML"/>
<dbReference type="DMDM" id="215274219"/>
<dbReference type="jPOST" id="P29590"/>
<dbReference type="MassIVE" id="P29590"/>
<dbReference type="PaxDb" id="9606-ENSP00000268058"/>
<dbReference type="PeptideAtlas" id="P29590"/>
<dbReference type="ProteomicsDB" id="19281"/>
<dbReference type="ProteomicsDB" id="54589">
    <molecule id="P29590-1"/>
</dbReference>
<dbReference type="ProteomicsDB" id="54590">
    <molecule id="P29590-10"/>
</dbReference>
<dbReference type="ProteomicsDB" id="54591">
    <molecule id="P29590-11"/>
</dbReference>
<dbReference type="ProteomicsDB" id="54592">
    <molecule id="P29590-12"/>
</dbReference>
<dbReference type="ProteomicsDB" id="54593">
    <molecule id="P29590-13"/>
</dbReference>
<dbReference type="ProteomicsDB" id="54594">
    <molecule id="P29590-14"/>
</dbReference>
<dbReference type="ProteomicsDB" id="54595">
    <molecule id="P29590-2"/>
</dbReference>
<dbReference type="ProteomicsDB" id="54596">
    <molecule id="P29590-3"/>
</dbReference>
<dbReference type="ProteomicsDB" id="54597">
    <molecule id="P29590-4"/>
</dbReference>
<dbReference type="ProteomicsDB" id="54598">
    <molecule id="P29590-5"/>
</dbReference>
<dbReference type="ProteomicsDB" id="54599">
    <molecule id="P29590-8"/>
</dbReference>
<dbReference type="ProteomicsDB" id="54600">
    <molecule id="P29590-9"/>
</dbReference>
<dbReference type="Pumba" id="P29590"/>
<dbReference type="Antibodypedia" id="1737">
    <property type="antibodies" value="598 antibodies from 44 providers"/>
</dbReference>
<dbReference type="DNASU" id="5371"/>
<dbReference type="Ensembl" id="ENST00000268058.8">
    <molecule id="P29590-1"/>
    <property type="protein sequence ID" value="ENSP00000268058.3"/>
    <property type="gene ID" value="ENSG00000140464.20"/>
</dbReference>
<dbReference type="Ensembl" id="ENST00000268059.10">
    <molecule id="P29590-8"/>
    <property type="protein sequence ID" value="ENSP00000268059.6"/>
    <property type="gene ID" value="ENSG00000140464.20"/>
</dbReference>
<dbReference type="Ensembl" id="ENST00000354026.10">
    <molecule id="P29590-13"/>
    <property type="protein sequence ID" value="ENSP00000315434.8"/>
    <property type="gene ID" value="ENSG00000140464.20"/>
</dbReference>
<dbReference type="Ensembl" id="ENST00000359928.8">
    <molecule id="P29590-14"/>
    <property type="protein sequence ID" value="ENSP00000353004.4"/>
    <property type="gene ID" value="ENSG00000140464.20"/>
</dbReference>
<dbReference type="Ensembl" id="ENST00000395132.6">
    <molecule id="P29590-10"/>
    <property type="protein sequence ID" value="ENSP00000378564.2"/>
    <property type="gene ID" value="ENSG00000140464.20"/>
</dbReference>
<dbReference type="Ensembl" id="ENST00000395135.7">
    <molecule id="P29590-5"/>
    <property type="protein sequence ID" value="ENSP00000378567.3"/>
    <property type="gene ID" value="ENSG00000140464.20"/>
</dbReference>
<dbReference type="Ensembl" id="ENST00000435786.6">
    <molecule id="P29590-2"/>
    <property type="protein sequence ID" value="ENSP00000395576.2"/>
    <property type="gene ID" value="ENSG00000140464.20"/>
</dbReference>
<dbReference type="Ensembl" id="ENST00000436891.7">
    <molecule id="P29590-4"/>
    <property type="protein sequence ID" value="ENSP00000394642.3"/>
    <property type="gene ID" value="ENSG00000140464.20"/>
</dbReference>
<dbReference type="Ensembl" id="ENST00000564428.5">
    <molecule id="P29590-12"/>
    <property type="protein sequence ID" value="ENSP00000457023.1"/>
    <property type="gene ID" value="ENSG00000140464.20"/>
</dbReference>
<dbReference type="Ensembl" id="ENST00000565898.5">
    <molecule id="P29590-11"/>
    <property type="protein sequence ID" value="ENSP00000455838.1"/>
    <property type="gene ID" value="ENSG00000140464.20"/>
</dbReference>
<dbReference type="Ensembl" id="ENST00000567543.5">
    <molecule id="P29590-14"/>
    <property type="protein sequence ID" value="ENSP00000456277.1"/>
    <property type="gene ID" value="ENSG00000140464.20"/>
</dbReference>
<dbReference type="Ensembl" id="ENST00000569477.5">
    <molecule id="P29590-9"/>
    <property type="protein sequence ID" value="ENSP00000455612.1"/>
    <property type="gene ID" value="ENSG00000140464.20"/>
</dbReference>
<dbReference type="Ensembl" id="ENST00000569965.5">
    <molecule id="P29590-4"/>
    <property type="protein sequence ID" value="ENSP00000456486.1"/>
    <property type="gene ID" value="ENSG00000140464.20"/>
</dbReference>
<dbReference type="GeneID" id="5371"/>
<dbReference type="KEGG" id="hsa:5371"/>
<dbReference type="MANE-Select" id="ENST00000268058.8">
    <property type="protein sequence ID" value="ENSP00000268058.3"/>
    <property type="RefSeq nucleotide sequence ID" value="NM_033238.3"/>
    <property type="RefSeq protein sequence ID" value="NP_150241.2"/>
</dbReference>
<dbReference type="UCSC" id="uc002awk.4">
    <molecule id="P29590-1"/>
    <property type="organism name" value="human"/>
</dbReference>
<dbReference type="AGR" id="HGNC:9113"/>
<dbReference type="CTD" id="5371"/>
<dbReference type="DisGeNET" id="5371"/>
<dbReference type="GeneCards" id="PML"/>
<dbReference type="HGNC" id="HGNC:9113">
    <property type="gene designation" value="PML"/>
</dbReference>
<dbReference type="HPA" id="ENSG00000140464">
    <property type="expression patterns" value="Low tissue specificity"/>
</dbReference>
<dbReference type="MalaCards" id="PML"/>
<dbReference type="MIM" id="102578">
    <property type="type" value="gene"/>
</dbReference>
<dbReference type="neXtProt" id="NX_P29590"/>
<dbReference type="OpenTargets" id="ENSG00000140464"/>
<dbReference type="Orphanet" id="520">
    <property type="disease" value="Acute promyelocytic leukemia"/>
</dbReference>
<dbReference type="PharmGKB" id="PA33439"/>
<dbReference type="VEuPathDB" id="HostDB:ENSG00000140464"/>
<dbReference type="eggNOG" id="KOG2177">
    <property type="taxonomic scope" value="Eukaryota"/>
</dbReference>
<dbReference type="GeneTree" id="ENSGT00510000048454"/>
<dbReference type="HOGENOM" id="CLU_009136_1_0_1"/>
<dbReference type="InParanoid" id="P29590"/>
<dbReference type="OrthoDB" id="10250935at2759"/>
<dbReference type="PAN-GO" id="P29590">
    <property type="GO annotations" value="7 GO annotations based on evolutionary models"/>
</dbReference>
<dbReference type="PhylomeDB" id="P29590"/>
<dbReference type="TreeFam" id="TF336434"/>
<dbReference type="PathwayCommons" id="P29590"/>
<dbReference type="Reactome" id="R-HSA-3108214">
    <property type="pathway name" value="SUMOylation of DNA damage response and repair proteins"/>
</dbReference>
<dbReference type="Reactome" id="R-HSA-3232142">
    <property type="pathway name" value="SUMOylation of ubiquitinylation proteins"/>
</dbReference>
<dbReference type="Reactome" id="R-HSA-6804758">
    <property type="pathway name" value="Regulation of TP53 Activity through Acetylation"/>
</dbReference>
<dbReference type="Reactome" id="R-HSA-877300">
    <property type="pathway name" value="Interferon gamma signaling"/>
</dbReference>
<dbReference type="Reactome" id="R-HSA-8934593">
    <property type="pathway name" value="Regulation of RUNX1 Expression and Activity"/>
</dbReference>
<dbReference type="Reactome" id="R-HSA-8948747">
    <property type="pathway name" value="Regulation of PTEN localization"/>
</dbReference>
<dbReference type="Reactome" id="R-HSA-9609690">
    <property type="pathway name" value="HCMV Early Events"/>
</dbReference>
<dbReference type="Reactome" id="R-HSA-9616222">
    <molecule id="P29590-4"/>
    <property type="pathway name" value="Transcriptional regulation of granulopoiesis"/>
</dbReference>
<dbReference type="SignaLink" id="P29590"/>
<dbReference type="SIGNOR" id="P29590"/>
<dbReference type="UniPathway" id="UPA00886"/>
<dbReference type="BioGRID-ORCS" id="5371">
    <property type="hits" value="21 hits in 1215 CRISPR screens"/>
</dbReference>
<dbReference type="CD-CODE" id="8C2F96ED">
    <property type="entry name" value="Centrosome"/>
</dbReference>
<dbReference type="CD-CODE" id="B5B9A610">
    <property type="entry name" value="PML body"/>
</dbReference>
<dbReference type="ChiTaRS" id="PML">
    <property type="organism name" value="human"/>
</dbReference>
<dbReference type="EvolutionaryTrace" id="P29590"/>
<dbReference type="GeneWiki" id="Promyelocytic_leukemia_protein"/>
<dbReference type="GenomeRNAi" id="5371"/>
<dbReference type="Pharos" id="P29590">
    <property type="development level" value="Tbio"/>
</dbReference>
<dbReference type="PRO" id="PR:P29590"/>
<dbReference type="Proteomes" id="UP000005640">
    <property type="component" value="Chromosome 15"/>
</dbReference>
<dbReference type="RNAct" id="P29590">
    <property type="molecule type" value="protein"/>
</dbReference>
<dbReference type="Bgee" id="ENSG00000140464">
    <property type="expression patterns" value="Expressed in omental fat pad and 171 other cell types or tissues"/>
</dbReference>
<dbReference type="ExpressionAtlas" id="P29590">
    <property type="expression patterns" value="baseline and differential"/>
</dbReference>
<dbReference type="GO" id="GO:0000781">
    <property type="term" value="C:chromosome, telomeric region"/>
    <property type="evidence" value="ECO:0000314"/>
    <property type="project" value="BHF-UCL"/>
</dbReference>
<dbReference type="GO" id="GO:0005737">
    <property type="term" value="C:cytoplasm"/>
    <property type="evidence" value="ECO:0000314"/>
    <property type="project" value="UniProtKB"/>
</dbReference>
<dbReference type="GO" id="GO:0005829">
    <property type="term" value="C:cytosol"/>
    <property type="evidence" value="ECO:0000250"/>
    <property type="project" value="UniProtKB"/>
</dbReference>
<dbReference type="GO" id="GO:0031901">
    <property type="term" value="C:early endosome membrane"/>
    <property type="evidence" value="ECO:0007669"/>
    <property type="project" value="UniProtKB-SubCell"/>
</dbReference>
<dbReference type="GO" id="GO:0005789">
    <property type="term" value="C:endoplasmic reticulum membrane"/>
    <property type="evidence" value="ECO:0007669"/>
    <property type="project" value="UniProtKB-SubCell"/>
</dbReference>
<dbReference type="GO" id="GO:0016363">
    <property type="term" value="C:nuclear matrix"/>
    <property type="evidence" value="ECO:0000314"/>
    <property type="project" value="UniProtKB"/>
</dbReference>
<dbReference type="GO" id="GO:0031965">
    <property type="term" value="C:nuclear membrane"/>
    <property type="evidence" value="ECO:0000314"/>
    <property type="project" value="UniProtKB"/>
</dbReference>
<dbReference type="GO" id="GO:0005730">
    <property type="term" value="C:nucleolus"/>
    <property type="evidence" value="ECO:0000314"/>
    <property type="project" value="UniProtKB"/>
</dbReference>
<dbReference type="GO" id="GO:0005654">
    <property type="term" value="C:nucleoplasm"/>
    <property type="evidence" value="ECO:0000314"/>
    <property type="project" value="UniProtKB"/>
</dbReference>
<dbReference type="GO" id="GO:0005634">
    <property type="term" value="C:nucleus"/>
    <property type="evidence" value="ECO:0000314"/>
    <property type="project" value="UniProtKB"/>
</dbReference>
<dbReference type="GO" id="GO:0016605">
    <property type="term" value="C:PML body"/>
    <property type="evidence" value="ECO:0000314"/>
    <property type="project" value="UniProtKB"/>
</dbReference>
<dbReference type="GO" id="GO:0050897">
    <property type="term" value="F:cobalt ion binding"/>
    <property type="evidence" value="ECO:0000314"/>
    <property type="project" value="UniProtKB"/>
</dbReference>
<dbReference type="GO" id="GO:0003677">
    <property type="term" value="F:DNA binding"/>
    <property type="evidence" value="ECO:0007669"/>
    <property type="project" value="UniProtKB-KW"/>
</dbReference>
<dbReference type="GO" id="GO:0042802">
    <property type="term" value="F:identical protein binding"/>
    <property type="evidence" value="ECO:0000353"/>
    <property type="project" value="IntAct"/>
</dbReference>
<dbReference type="GO" id="GO:0060090">
    <property type="term" value="F:molecular adaptor activity"/>
    <property type="evidence" value="ECO:0000314"/>
    <property type="project" value="UniProt"/>
</dbReference>
<dbReference type="GO" id="GO:0046982">
    <property type="term" value="F:protein heterodimerization activity"/>
    <property type="evidence" value="ECO:0000314"/>
    <property type="project" value="UniProtKB"/>
</dbReference>
<dbReference type="GO" id="GO:0042803">
    <property type="term" value="F:protein homodimerization activity"/>
    <property type="evidence" value="ECO:0000353"/>
    <property type="project" value="BHF-UCL"/>
</dbReference>
<dbReference type="GO" id="GO:0046332">
    <property type="term" value="F:SMAD binding"/>
    <property type="evidence" value="ECO:0007669"/>
    <property type="project" value="Ensembl"/>
</dbReference>
<dbReference type="GO" id="GO:0032183">
    <property type="term" value="F:SUMO binding"/>
    <property type="evidence" value="ECO:0000353"/>
    <property type="project" value="UniProtKB"/>
</dbReference>
<dbReference type="GO" id="GO:0019789">
    <property type="term" value="F:SUMO transferase activity"/>
    <property type="evidence" value="ECO:0000269"/>
    <property type="project" value="Reactome"/>
</dbReference>
<dbReference type="GO" id="GO:0003713">
    <property type="term" value="F:transcription coactivator activity"/>
    <property type="evidence" value="ECO:0000314"/>
    <property type="project" value="UniProtKB"/>
</dbReference>
<dbReference type="GO" id="GO:0031625">
    <property type="term" value="F:ubiquitin protein ligase binding"/>
    <property type="evidence" value="ECO:0000353"/>
    <property type="project" value="UniProtKB"/>
</dbReference>
<dbReference type="GO" id="GO:0061659">
    <property type="term" value="F:ubiquitin-like protein ligase activity"/>
    <property type="evidence" value="ECO:0000318"/>
    <property type="project" value="GO_Central"/>
</dbReference>
<dbReference type="GO" id="GO:0008270">
    <property type="term" value="F:zinc ion binding"/>
    <property type="evidence" value="ECO:0000314"/>
    <property type="project" value="UniProtKB"/>
</dbReference>
<dbReference type="GO" id="GO:0006915">
    <property type="term" value="P:apoptotic process"/>
    <property type="evidence" value="ECO:0000314"/>
    <property type="project" value="UniProtKB"/>
</dbReference>
<dbReference type="GO" id="GO:0060444">
    <property type="term" value="P:branching involved in mammary gland duct morphogenesis"/>
    <property type="evidence" value="ECO:0007669"/>
    <property type="project" value="Ensembl"/>
</dbReference>
<dbReference type="GO" id="GO:0045165">
    <property type="term" value="P:cell fate commitment"/>
    <property type="evidence" value="ECO:0007669"/>
    <property type="project" value="Ensembl"/>
</dbReference>
<dbReference type="GO" id="GO:0071353">
    <property type="term" value="P:cellular response to interleukin-4"/>
    <property type="evidence" value="ECO:0007669"/>
    <property type="project" value="Ensembl"/>
</dbReference>
<dbReference type="GO" id="GO:1990830">
    <property type="term" value="P:cellular response to leukemia inhibitory factor"/>
    <property type="evidence" value="ECO:0007669"/>
    <property type="project" value="Ensembl"/>
</dbReference>
<dbReference type="GO" id="GO:0090398">
    <property type="term" value="P:cellular senescence"/>
    <property type="evidence" value="ECO:0000314"/>
    <property type="project" value="UniProtKB"/>
</dbReference>
<dbReference type="GO" id="GO:0006338">
    <property type="term" value="P:chromatin remodeling"/>
    <property type="evidence" value="ECO:0000314"/>
    <property type="project" value="UniProtKB"/>
</dbReference>
<dbReference type="GO" id="GO:0032922">
    <property type="term" value="P:circadian regulation of gene expression"/>
    <property type="evidence" value="ECO:0000250"/>
    <property type="project" value="UniProtKB"/>
</dbReference>
<dbReference type="GO" id="GO:0030330">
    <property type="term" value="P:DNA damage response, signal transduction by p53 class mediator"/>
    <property type="evidence" value="ECO:0000250"/>
    <property type="project" value="UniProtKB"/>
</dbReference>
<dbReference type="GO" id="GO:0032469">
    <property type="term" value="P:endoplasmic reticulum calcium ion homeostasis"/>
    <property type="evidence" value="ECO:0000250"/>
    <property type="project" value="UniProtKB"/>
</dbReference>
<dbReference type="GO" id="GO:0043153">
    <property type="term" value="P:entrainment of circadian clock by photoperiod"/>
    <property type="evidence" value="ECO:0000250"/>
    <property type="project" value="UniProtKB"/>
</dbReference>
<dbReference type="GO" id="GO:0097191">
    <property type="term" value="P:extrinsic apoptotic signaling pathway"/>
    <property type="evidence" value="ECO:0007669"/>
    <property type="project" value="Ensembl"/>
</dbReference>
<dbReference type="GO" id="GO:0010761">
    <property type="term" value="P:fibroblast migration"/>
    <property type="evidence" value="ECO:0007669"/>
    <property type="project" value="Ensembl"/>
</dbReference>
<dbReference type="GO" id="GO:0045087">
    <property type="term" value="P:innate immune response"/>
    <property type="evidence" value="ECO:0000314"/>
    <property type="project" value="UniProtKB"/>
</dbReference>
<dbReference type="GO" id="GO:0008630">
    <property type="term" value="P:intrinsic apoptotic signaling pathway in response to DNA damage"/>
    <property type="evidence" value="ECO:0000314"/>
    <property type="project" value="UniProtKB"/>
</dbReference>
<dbReference type="GO" id="GO:0042771">
    <property type="term" value="P:intrinsic apoptotic signaling pathway in response to DNA damage by p53 class mediator"/>
    <property type="evidence" value="ECO:0000250"/>
    <property type="project" value="UniProtKB"/>
</dbReference>
<dbReference type="GO" id="GO:0070059">
    <property type="term" value="P:intrinsic apoptotic signaling pathway in response to endoplasmic reticulum stress"/>
    <property type="evidence" value="ECO:0007669"/>
    <property type="project" value="Ensembl"/>
</dbReference>
<dbReference type="GO" id="GO:0008631">
    <property type="term" value="P:intrinsic apoptotic signaling pathway in response to oxidative stress"/>
    <property type="evidence" value="ECO:0007669"/>
    <property type="project" value="Ensembl"/>
</dbReference>
<dbReference type="GO" id="GO:0051457">
    <property type="term" value="P:maintenance of protein location in nucleus"/>
    <property type="evidence" value="ECO:0000314"/>
    <property type="project" value="MGI"/>
</dbReference>
<dbReference type="GO" id="GO:0030099">
    <property type="term" value="P:myeloid cell differentiation"/>
    <property type="evidence" value="ECO:0007669"/>
    <property type="project" value="Ensembl"/>
</dbReference>
<dbReference type="GO" id="GO:0016525">
    <property type="term" value="P:negative regulation of angiogenesis"/>
    <property type="evidence" value="ECO:0000315"/>
    <property type="project" value="UniProtKB"/>
</dbReference>
<dbReference type="GO" id="GO:0030308">
    <property type="term" value="P:negative regulation of cell growth"/>
    <property type="evidence" value="ECO:0000314"/>
    <property type="project" value="UniProtKB"/>
</dbReference>
<dbReference type="GO" id="GO:0008285">
    <property type="term" value="P:negative regulation of cell population proliferation"/>
    <property type="evidence" value="ECO:0000315"/>
    <property type="project" value="BHF-UCL"/>
</dbReference>
<dbReference type="GO" id="GO:0045892">
    <property type="term" value="P:negative regulation of DNA-templated transcription"/>
    <property type="evidence" value="ECO:0000314"/>
    <property type="project" value="UniProtKB"/>
</dbReference>
<dbReference type="GO" id="GO:0032691">
    <property type="term" value="P:negative regulation of interleukin-1 beta production"/>
    <property type="evidence" value="ECO:0007669"/>
    <property type="project" value="Ensembl"/>
</dbReference>
<dbReference type="GO" id="GO:0045930">
    <property type="term" value="P:negative regulation of mitotic cell cycle"/>
    <property type="evidence" value="ECO:0000314"/>
    <property type="project" value="UniProtKB"/>
</dbReference>
<dbReference type="GO" id="GO:0032211">
    <property type="term" value="P:negative regulation of telomere maintenance via telomerase"/>
    <property type="evidence" value="ECO:0000315"/>
    <property type="project" value="UniProtKB"/>
</dbReference>
<dbReference type="GO" id="GO:0032938">
    <property type="term" value="P:negative regulation of translation in response to oxidative stress"/>
    <property type="evidence" value="ECO:0000314"/>
    <property type="project" value="UniProtKB"/>
</dbReference>
<dbReference type="GO" id="GO:2000059">
    <property type="term" value="P:negative regulation of ubiquitin-dependent protein catabolic process"/>
    <property type="evidence" value="ECO:0000315"/>
    <property type="project" value="UniProtKB"/>
</dbReference>
<dbReference type="GO" id="GO:0090402">
    <property type="term" value="P:oncogene-induced cell senescence"/>
    <property type="evidence" value="ECO:0007669"/>
    <property type="project" value="Ensembl"/>
</dbReference>
<dbReference type="GO" id="GO:0030578">
    <property type="term" value="P:PML body organization"/>
    <property type="evidence" value="ECO:0000314"/>
    <property type="project" value="UniProtKB"/>
</dbReference>
<dbReference type="GO" id="GO:0060058">
    <property type="term" value="P:positive regulation of apoptotic process involved in mammary gland involution"/>
    <property type="evidence" value="ECO:0000314"/>
    <property type="project" value="UniProtKB"/>
</dbReference>
<dbReference type="GO" id="GO:0002230">
    <property type="term" value="P:positive regulation of defense response to virus by host"/>
    <property type="evidence" value="ECO:0000315"/>
    <property type="project" value="UniProtKB"/>
</dbReference>
<dbReference type="GO" id="GO:2001238">
    <property type="term" value="P:positive regulation of extrinsic apoptotic signaling pathway"/>
    <property type="evidence" value="ECO:0000315"/>
    <property type="project" value="UniProtKB"/>
</dbReference>
<dbReference type="GO" id="GO:0048146">
    <property type="term" value="P:positive regulation of fibroblast proliferation"/>
    <property type="evidence" value="ECO:0007669"/>
    <property type="project" value="Ensembl"/>
</dbReference>
<dbReference type="GO" id="GO:1904816">
    <property type="term" value="P:positive regulation of protein localization to chromosome, telomeric region"/>
    <property type="evidence" value="ECO:0000314"/>
    <property type="project" value="BHF-UCL"/>
</dbReference>
<dbReference type="GO" id="GO:1901798">
    <property type="term" value="P:positive regulation of signal transduction by p53 class mediator"/>
    <property type="evidence" value="ECO:0007669"/>
    <property type="project" value="Ensembl"/>
</dbReference>
<dbReference type="GO" id="GO:0032206">
    <property type="term" value="P:positive regulation of telomere maintenance"/>
    <property type="evidence" value="ECO:0000315"/>
    <property type="project" value="BHF-UCL"/>
</dbReference>
<dbReference type="GO" id="GO:0043161">
    <property type="term" value="P:proteasome-mediated ubiquitin-dependent protein catabolic process"/>
    <property type="evidence" value="ECO:0000314"/>
    <property type="project" value="UniProtKB"/>
</dbReference>
<dbReference type="GO" id="GO:0006606">
    <property type="term" value="P:protein import into nucleus"/>
    <property type="evidence" value="ECO:0007669"/>
    <property type="project" value="Ensembl"/>
</dbReference>
<dbReference type="GO" id="GO:0050821">
    <property type="term" value="P:protein stabilization"/>
    <property type="evidence" value="ECO:0000314"/>
    <property type="project" value="UniProtKB"/>
</dbReference>
<dbReference type="GO" id="GO:0016925">
    <property type="term" value="P:protein sumoylation"/>
    <property type="evidence" value="ECO:0000304"/>
    <property type="project" value="Reactome"/>
</dbReference>
<dbReference type="GO" id="GO:0006605">
    <property type="term" value="P:protein targeting"/>
    <property type="evidence" value="ECO:0000314"/>
    <property type="project" value="UniProtKB"/>
</dbReference>
<dbReference type="GO" id="GO:0065003">
    <property type="term" value="P:protein-containing complex assembly"/>
    <property type="evidence" value="ECO:0000314"/>
    <property type="project" value="UniProtKB"/>
</dbReference>
<dbReference type="GO" id="GO:0031503">
    <property type="term" value="P:protein-containing complex localization"/>
    <property type="evidence" value="ECO:0007669"/>
    <property type="project" value="Ensembl"/>
</dbReference>
<dbReference type="GO" id="GO:0010522">
    <property type="term" value="P:regulation of calcium ion transport into cytosol"/>
    <property type="evidence" value="ECO:0000250"/>
    <property type="project" value="UniProtKB"/>
</dbReference>
<dbReference type="GO" id="GO:0030155">
    <property type="term" value="P:regulation of cell adhesion"/>
    <property type="evidence" value="ECO:0007669"/>
    <property type="project" value="Ensembl"/>
</dbReference>
<dbReference type="GO" id="GO:0051726">
    <property type="term" value="P:regulation of cell cycle"/>
    <property type="evidence" value="ECO:0000314"/>
    <property type="project" value="UniProtKB"/>
</dbReference>
<dbReference type="GO" id="GO:0042752">
    <property type="term" value="P:regulation of circadian rhythm"/>
    <property type="evidence" value="ECO:0000250"/>
    <property type="project" value="UniProtKB"/>
</dbReference>
<dbReference type="GO" id="GO:0006355">
    <property type="term" value="P:regulation of DNA-templated transcription"/>
    <property type="evidence" value="ECO:0000315"/>
    <property type="project" value="UniProtKB"/>
</dbReference>
<dbReference type="GO" id="GO:2000779">
    <property type="term" value="P:regulation of double-strand break repair"/>
    <property type="evidence" value="ECO:0000315"/>
    <property type="project" value="UniProtKB"/>
</dbReference>
<dbReference type="GO" id="GO:0034097">
    <property type="term" value="P:response to cytokine"/>
    <property type="evidence" value="ECO:0000314"/>
    <property type="project" value="BHF-UCL"/>
</dbReference>
<dbReference type="GO" id="GO:0010332">
    <property type="term" value="P:response to gamma radiation"/>
    <property type="evidence" value="ECO:0007669"/>
    <property type="project" value="Ensembl"/>
</dbReference>
<dbReference type="GO" id="GO:0001666">
    <property type="term" value="P:response to hypoxia"/>
    <property type="evidence" value="ECO:0000314"/>
    <property type="project" value="UniProtKB"/>
</dbReference>
<dbReference type="GO" id="GO:0009411">
    <property type="term" value="P:response to UV"/>
    <property type="evidence" value="ECO:0007669"/>
    <property type="project" value="Ensembl"/>
</dbReference>
<dbReference type="GO" id="GO:0048384">
    <property type="term" value="P:retinoic acid receptor signaling pathway"/>
    <property type="evidence" value="ECO:0007669"/>
    <property type="project" value="Ensembl"/>
</dbReference>
<dbReference type="GO" id="GO:0060395">
    <property type="term" value="P:SMAD protein signal transduction"/>
    <property type="evidence" value="ECO:0007669"/>
    <property type="project" value="Ensembl"/>
</dbReference>
<dbReference type="GO" id="GO:0044790">
    <property type="term" value="P:suppression of viral release by host"/>
    <property type="evidence" value="ECO:0000314"/>
    <property type="project" value="UniProtKB"/>
</dbReference>
<dbReference type="GO" id="GO:0007179">
    <property type="term" value="P:transforming growth factor beta receptor signaling pathway"/>
    <property type="evidence" value="ECO:0007669"/>
    <property type="project" value="Ensembl"/>
</dbReference>
<dbReference type="CDD" id="cd19804">
    <property type="entry name" value="Bbox1_TRIM19_C-V"/>
    <property type="match status" value="1"/>
</dbReference>
<dbReference type="CDD" id="cd19770">
    <property type="entry name" value="Bbox2_TRIM19_C-V"/>
    <property type="match status" value="1"/>
</dbReference>
<dbReference type="CDD" id="cd16579">
    <property type="entry name" value="RING-HC_PML_C-V"/>
    <property type="match status" value="1"/>
</dbReference>
<dbReference type="FunFam" id="3.30.40.10:FF:000178">
    <property type="entry name" value="PML isoform 6"/>
    <property type="match status" value="1"/>
</dbReference>
<dbReference type="Gene3D" id="3.30.160.60">
    <property type="entry name" value="Classic Zinc Finger"/>
    <property type="match status" value="1"/>
</dbReference>
<dbReference type="Gene3D" id="3.30.40.10">
    <property type="entry name" value="Zinc/RING finger domain, C3HC4 (zinc finger)"/>
    <property type="match status" value="1"/>
</dbReference>
<dbReference type="InterPro" id="IPR021978">
    <property type="entry name" value="PML-like_CC"/>
</dbReference>
<dbReference type="InterPro" id="IPR047153">
    <property type="entry name" value="TRIM45/56/19-like"/>
</dbReference>
<dbReference type="InterPro" id="IPR000315">
    <property type="entry name" value="Znf_B-box"/>
</dbReference>
<dbReference type="InterPro" id="IPR018957">
    <property type="entry name" value="Znf_C3HC4_RING-type"/>
</dbReference>
<dbReference type="InterPro" id="IPR001841">
    <property type="entry name" value="Znf_RING"/>
</dbReference>
<dbReference type="InterPro" id="IPR013083">
    <property type="entry name" value="Znf_RING/FYVE/PHD"/>
</dbReference>
<dbReference type="InterPro" id="IPR017907">
    <property type="entry name" value="Znf_RING_CS"/>
</dbReference>
<dbReference type="PANTHER" id="PTHR25462">
    <property type="entry name" value="BONUS, ISOFORM C-RELATED"/>
    <property type="match status" value="1"/>
</dbReference>
<dbReference type="PANTHER" id="PTHR25462:SF302">
    <property type="entry name" value="PROTEIN PML"/>
    <property type="match status" value="1"/>
</dbReference>
<dbReference type="Pfam" id="PF22586">
    <property type="entry name" value="ANCHR-like_BBOX"/>
    <property type="match status" value="1"/>
</dbReference>
<dbReference type="Pfam" id="PF25244">
    <property type="entry name" value="PML_C"/>
    <property type="match status" value="1"/>
</dbReference>
<dbReference type="Pfam" id="PF12126">
    <property type="entry name" value="PML_CC"/>
    <property type="match status" value="1"/>
</dbReference>
<dbReference type="Pfam" id="PF00097">
    <property type="entry name" value="zf-C3HC4"/>
    <property type="match status" value="1"/>
</dbReference>
<dbReference type="SMART" id="SM00336">
    <property type="entry name" value="BBOX"/>
    <property type="match status" value="1"/>
</dbReference>
<dbReference type="SMART" id="SM00184">
    <property type="entry name" value="RING"/>
    <property type="match status" value="1"/>
</dbReference>
<dbReference type="SUPFAM" id="SSF57850">
    <property type="entry name" value="RING/U-box"/>
    <property type="match status" value="1"/>
</dbReference>
<dbReference type="PROSITE" id="PS50119">
    <property type="entry name" value="ZF_BBOX"/>
    <property type="match status" value="2"/>
</dbReference>
<dbReference type="PROSITE" id="PS00518">
    <property type="entry name" value="ZF_RING_1"/>
    <property type="match status" value="1"/>
</dbReference>
<dbReference type="PROSITE" id="PS50089">
    <property type="entry name" value="ZF_RING_2"/>
    <property type="match status" value="1"/>
</dbReference>
<keyword id="KW-0002">3D-structure</keyword>
<keyword id="KW-0007">Acetylation</keyword>
<keyword id="KW-0010">Activator</keyword>
<keyword id="KW-0025">Alternative splicing</keyword>
<keyword id="KW-0051">Antiviral defense</keyword>
<keyword id="KW-0053">Apoptosis</keyword>
<keyword id="KW-0090">Biological rhythms</keyword>
<keyword id="KW-0160">Chromosomal rearrangement</keyword>
<keyword id="KW-0175">Coiled coil</keyword>
<keyword id="KW-0963">Cytoplasm</keyword>
<keyword id="KW-0238">DNA-binding</keyword>
<keyword id="KW-0256">Endoplasmic reticulum</keyword>
<keyword id="KW-0967">Endosome</keyword>
<keyword id="KW-0945">Host-virus interaction</keyword>
<keyword id="KW-0391">Immunity</keyword>
<keyword id="KW-0399">Innate immunity</keyword>
<keyword id="KW-1017">Isopeptide bond</keyword>
<keyword id="KW-0472">Membrane</keyword>
<keyword id="KW-0479">Metal-binding</keyword>
<keyword id="KW-0539">Nucleus</keyword>
<keyword id="KW-0597">Phosphoprotein</keyword>
<keyword id="KW-1267">Proteomics identification</keyword>
<keyword id="KW-0656">Proto-oncogene</keyword>
<keyword id="KW-1185">Reference proteome</keyword>
<keyword id="KW-0677">Repeat</keyword>
<keyword id="KW-0804">Transcription</keyword>
<keyword id="KW-0805">Transcription regulation</keyword>
<keyword id="KW-0808">Transferase</keyword>
<keyword id="KW-0043">Tumor suppressor</keyword>
<keyword id="KW-0832">Ubl conjugation</keyword>
<keyword id="KW-0862">Zinc</keyword>
<keyword id="KW-0863">Zinc-finger</keyword>
<sequence length="882" mass="97551">MEPAPARSPRPQQDPARPQEPTMPPPETPSEGRQPSPSPSPTERAPASEEEFQFLRCQQCQAEAKCPKLLPCLHTLCSGCLEASGMQCPICQAPWPLGADTPALDNVFFESLQRRLSVYRQIVDAQAVCTRCKESADFWCFECEQLLCAKCFEAHQWFLKHEARPLAELRNQSVREFLDGTRKTNNIFCSNPNHRTPTLTSIYCRGCSKPLCCSCALLDSSHSELKCDISAEIQQRQEELDAMTQALQEQDSAFGAVHAQMHAAVGQLGRARAETEELIRERVRQVVAHVRAQERELLEAVDARYQRDYEEMASRLGRLDAVLQRIRTGSALVQRMKCYASDQEVLDMHGFLRQALCRLRQEEPQSLQAAVRTDGFDEFKVRLQDLSSCITQGKDAAVSKKASPEAASTPRDPIDVDLPEEAERVKAQVQALGLAEAQPMAVVQSVPGAHPVPVYAFSIKGPSYGEDVSNTTTAQKRKCSQTQCPRKVIKMESEEGKEARLARSSPEQPRPSTSKAVSPPHLDGPPSPRSPVIGSEVFLPNSNHVASGAGEAEERVVVISSSEDSDAENSSSRELDDSSSESSDLQLEGPSTLRVLDENLADPQAEDRPLVFFDLKIDNETQKISQLAAVNRESKFRVVIQPEAFFSIYSKAVSLEVGLQHFLSFLSSMRRPILACYKLWGPGLPNFFRALEDINRLWEFQEAISGFLAALPLIRERVPGASSFKLKNLAQTYLARNMSERSAMAAVLAMRDLCRLLEVSPGPQLAQHVYPFSSLQCFASLQPLVQAAVLPRAEARLLALHNVSFMELLSAHRRDRQGGLKKYSRYLSLQTTTLPPAQPAFNLQALGTYFEGLLEGPALARAEGVSTPLAGRGLAERASQQS</sequence>
<reference key="1">
    <citation type="journal article" date="1991" name="Cell">
        <title>The PML-RAR alpha fusion mRNA generated by the t(15;17) translocation in acute promyelocytic leukemia encodes a functionally altered RAR.</title>
        <authorList>
            <person name="de The H."/>
            <person name="Lavau C."/>
            <person name="Marchio A."/>
            <person name="Chomienne C."/>
            <person name="Degos L."/>
            <person name="Dejean A."/>
        </authorList>
    </citation>
    <scope>NUCLEOTIDE SEQUENCE [MRNA] (ISOFORM PML-3)</scope>
    <scope>DISEASE</scope>
</reference>
<reference key="2">
    <citation type="journal article" date="1991" name="Science">
        <title>Characterization of a zinc finger gene disrupted by the t(15;17) in acute promyelocytic leukemia.</title>
        <authorList>
            <person name="Goddard A.D."/>
            <person name="Borrow J."/>
            <person name="Freemont P.S."/>
            <person name="Solomon E."/>
        </authorList>
    </citation>
    <scope>NUCLEOTIDE SEQUENCE [MRNA] (ISOFORMS PML-1; PML-5 AND PML-8)</scope>
    <scope>CHROMOSOMAL TRANSLOCATION WITH RARA</scope>
    <scope>DISEASE</scope>
    <scope>VARIANT LEU-645</scope>
</reference>
<reference key="3">
    <citation type="journal article" date="1992" name="EMBO J.">
        <title>Structure, localization and transcriptional properties of two classes of retinoic acid receptor alpha fusion proteins in acute promyelocytic leukemia (APL): structural similarities with a new family of oncoproteins.</title>
        <authorList>
            <person name="Kastner P."/>
            <person name="Perez A."/>
            <person name="Lutz Y."/>
            <person name="Rochette-Egly C."/>
            <person name="Gaub M.P."/>
            <person name="Durand B."/>
            <person name="Lanotte M."/>
            <person name="Berger R."/>
            <person name="Chambon P."/>
        </authorList>
    </citation>
    <scope>NUCLEOTIDE SEQUENCE [MRNA] (ISOFORM PML-4)</scope>
</reference>
<reference key="4">
    <citation type="journal article" date="1991" name="Cell">
        <title>Chromosomal translocation t(15;17) in human acute promyelocytic leukemia fuses RAR alpha with a novel putative transcription factor, PML.</title>
        <authorList>
            <person name="Kakizuka A."/>
            <person name="Miller W.H. Jr."/>
            <person name="Umenono K."/>
            <person name="Warrell R.P. Jr."/>
            <person name="Frankel S.R."/>
            <person name="Murty V.V."/>
            <person name="Dmitrovsky E."/>
            <person name="Evans R.M."/>
        </authorList>
    </citation>
    <scope>NUCLEOTIDE SEQUENCE [MRNA] (ISOFORM PML-6)</scope>
</reference>
<reference key="5">
    <citation type="journal article" date="2001" name="EMBO J.">
        <title>The tripartite motif family identifies cell compartments.</title>
        <authorList>
            <person name="Reymond A."/>
            <person name="Meroni G."/>
            <person name="Fantozzi A."/>
            <person name="Merla G."/>
            <person name="Cairo S."/>
            <person name="Luzi L."/>
            <person name="Riganelli D."/>
            <person name="Zanaria E."/>
            <person name="Messali S."/>
            <person name="Cainarca S."/>
            <person name="Guffanti A."/>
            <person name="Minucci S."/>
            <person name="Pelicci P.G."/>
            <person name="Ballabio A."/>
        </authorList>
    </citation>
    <scope>NUCLEOTIDE SEQUENCE [MRNA] (ISOFORMS PML-1; PML-2; PML-4; PML-5; PML-6; PML-7; PML-8; PML-12 AND PML-14)</scope>
    <scope>VARIANT LEU-645</scope>
</reference>
<reference key="6">
    <citation type="submission" date="1992-01" db="EMBL/GenBank/DDBJ databases">
        <authorList>
            <person name="Goddard A.D."/>
            <person name="Solomon E."/>
        </authorList>
    </citation>
    <scope>NUCLEOTIDE SEQUENCE [MRNA] (ISOFORM PML-6)</scope>
</reference>
<reference key="7">
    <citation type="submission" date="2003-08" db="EMBL/GenBank/DDBJ databases">
        <title>Cloning of human full-length CDSs in BD Creator(TM) system donor vector.</title>
        <authorList>
            <person name="Kalnine N."/>
            <person name="Chen X."/>
            <person name="Rolfs A."/>
            <person name="Halleck A."/>
            <person name="Hines L."/>
            <person name="Eisenstein S."/>
            <person name="Koundinya M."/>
            <person name="Raphael J."/>
            <person name="Moreira D."/>
            <person name="Kelley T."/>
            <person name="LaBaer J."/>
            <person name="Lin Y."/>
            <person name="Phelan M."/>
            <person name="Farmer A."/>
        </authorList>
    </citation>
    <scope>NUCLEOTIDE SEQUENCE [LARGE SCALE MRNA] (ISOFORM PML-13)</scope>
</reference>
<reference key="8">
    <citation type="submission" date="2005-03" db="EMBL/GenBank/DDBJ databases">
        <title>Homo sapiens protein coding cDNA.</title>
        <authorList>
            <person name="Totoki Y."/>
            <person name="Toyoda A."/>
            <person name="Takeda T."/>
            <person name="Sakaki Y."/>
            <person name="Tanaka A."/>
            <person name="Yokoyama S."/>
            <person name="Ohara O."/>
            <person name="Nagase T."/>
            <person name="Kikuno R.F."/>
        </authorList>
    </citation>
    <scope>NUCLEOTIDE SEQUENCE [LARGE SCALE MRNA] (ISOFORM PML-11)</scope>
    <source>
        <tissue>Brain</tissue>
    </source>
</reference>
<reference key="9">
    <citation type="journal article" date="2006" name="Nature">
        <title>Analysis of the DNA sequence and duplication history of human chromosome 15.</title>
        <authorList>
            <person name="Zody M.C."/>
            <person name="Garber M."/>
            <person name="Sharpe T."/>
            <person name="Young S.K."/>
            <person name="Rowen L."/>
            <person name="O'Neill K."/>
            <person name="Whittaker C.A."/>
            <person name="Kamal M."/>
            <person name="Chang J.L."/>
            <person name="Cuomo C.A."/>
            <person name="Dewar K."/>
            <person name="FitzGerald M.G."/>
            <person name="Kodira C.D."/>
            <person name="Madan A."/>
            <person name="Qin S."/>
            <person name="Yang X."/>
            <person name="Abbasi N."/>
            <person name="Abouelleil A."/>
            <person name="Arachchi H.M."/>
            <person name="Baradarani L."/>
            <person name="Birditt B."/>
            <person name="Bloom S."/>
            <person name="Bloom T."/>
            <person name="Borowsky M.L."/>
            <person name="Burke J."/>
            <person name="Butler J."/>
            <person name="Cook A."/>
            <person name="DeArellano K."/>
            <person name="DeCaprio D."/>
            <person name="Dorris L. III"/>
            <person name="Dors M."/>
            <person name="Eichler E.E."/>
            <person name="Engels R."/>
            <person name="Fahey J."/>
            <person name="Fleetwood P."/>
            <person name="Friedman C."/>
            <person name="Gearin G."/>
            <person name="Hall J.L."/>
            <person name="Hensley G."/>
            <person name="Johnson E."/>
            <person name="Jones C."/>
            <person name="Kamat A."/>
            <person name="Kaur A."/>
            <person name="Locke D.P."/>
            <person name="Madan A."/>
            <person name="Munson G."/>
            <person name="Jaffe D.B."/>
            <person name="Lui A."/>
            <person name="Macdonald P."/>
            <person name="Mauceli E."/>
            <person name="Naylor J.W."/>
            <person name="Nesbitt R."/>
            <person name="Nicol R."/>
            <person name="O'Leary S.B."/>
            <person name="Ratcliffe A."/>
            <person name="Rounsley S."/>
            <person name="She X."/>
            <person name="Sneddon K.M.B."/>
            <person name="Stewart S."/>
            <person name="Sougnez C."/>
            <person name="Stone S.M."/>
            <person name="Topham K."/>
            <person name="Vincent D."/>
            <person name="Wang S."/>
            <person name="Zimmer A.R."/>
            <person name="Birren B.W."/>
            <person name="Hood L."/>
            <person name="Lander E.S."/>
            <person name="Nusbaum C."/>
        </authorList>
    </citation>
    <scope>NUCLEOTIDE SEQUENCE [LARGE SCALE GENOMIC DNA]</scope>
</reference>
<reference key="10">
    <citation type="journal article" date="2004" name="Genome Res.">
        <title>The status, quality, and expansion of the NIH full-length cDNA project: the Mammalian Gene Collection (MGC).</title>
        <authorList>
            <consortium name="The MGC Project Team"/>
        </authorList>
    </citation>
    <scope>NUCLEOTIDE SEQUENCE [LARGE SCALE MRNA] (ISOFORM PML-13)</scope>
    <source>
        <tissue>Kidney</tissue>
    </source>
</reference>
<reference key="11">
    <citation type="journal article" date="1992" name="Oncogene">
        <title>Molecular rearrangements of the MYL gene in acute promyelocytic leukemia (APL, M3) define a breakpoint cluster region as well as some molecular variants.</title>
        <authorList>
            <person name="Tong J.H."/>
            <person name="Dong S."/>
            <person name="Geng J.P."/>
            <person name="Huang W."/>
            <person name="Wang Z.Y."/>
            <person name="Sun G.L."/>
            <person name="Chen S.J."/>
            <person name="Chen Z."/>
            <person name="Larsen C.-J."/>
            <person name="Berger R."/>
        </authorList>
    </citation>
    <scope>NUCLEOTIDE SEQUENCE [GENOMIC DNA] OF 419-466</scope>
    <scope>CHROMOSOMAL TRANSLOCATION WITH RARA</scope>
</reference>
<reference key="12">
    <citation type="journal article" date="2003" name="Leuk. Lymphoma">
        <title>Cytogenetics, FISH and RT-PCR analysis of acute promyelocytic leukemia: structure of the fusion point in a case lacking classic t(15;17) translocation.</title>
        <authorList>
            <person name="Fujita K."/>
            <person name="Oba R."/>
            <person name="Harada H."/>
            <person name="Mori H."/>
            <person name="Niikura H."/>
            <person name="Isoyama K."/>
            <person name="Omine M."/>
        </authorList>
    </citation>
    <scope>NUCLEOTIDE SEQUENCE [MRNA] OF 454-503</scope>
    <scope>CHROMOSOMAL TRANSLOCATION WITH RARA</scope>
</reference>
<reference key="13">
    <citation type="journal article" date="1998" name="J. Biol. Chem.">
        <title>Identification of three major sentrinization sites in PML.</title>
        <authorList>
            <person name="Kamitani T."/>
            <person name="Kito K."/>
            <person name="Nguyen H.P."/>
            <person name="Wada H."/>
            <person name="Fukuda-Kamitani T."/>
            <person name="Yeh E.T.H."/>
        </authorList>
    </citation>
    <scope>SUMOYLATION AT LYS-65; LYS-160 AND LYS-490</scope>
    <scope>MUTAGENESIS OF LYS-65; LYS-133; LYS-150; LYS-160 AND LYS-490</scope>
    <scope>SUBCELLULAR LOCATION</scope>
    <scope>FUNCTION</scope>
</reference>
<reference key="14">
    <citation type="journal article" date="1998" name="J. Cell Sci.">
        <title>Ret finger protein is a normal component of PML nuclear bodies and interacts directly with PML.</title>
        <authorList>
            <person name="Cao T."/>
            <person name="Duprez E."/>
            <person name="Borden K.L."/>
            <person name="Freemont P.S."/>
            <person name="Etkin L.D."/>
        </authorList>
    </citation>
    <scope>INTERACTION WITH TRIM27</scope>
</reference>
<reference key="15">
    <citation type="journal article" date="1998" name="J. Virol.">
        <title>An arenavirus RING (zinc-binding) protein binds the oncoprotein promyelocyte leukemia protein (PML) and relocates PML nuclear bodies to the cytoplasm.</title>
        <authorList>
            <person name="Borden K.L."/>
            <person name="Campbell-Dwyer E.J."/>
            <person name="Salvato M.S."/>
        </authorList>
    </citation>
    <scope>INTERACTION WITH LASSA VIRUS Z PROTEIN (MICROBIAL INFECTION)</scope>
</reference>
<reference key="16">
    <citation type="journal article" date="1999" name="J. Virol.">
        <title>Viral immediate-early proteins abrogate the modification by SUMO-1 of PML and Sp100 proteins, correlating with nuclear body disruption.</title>
        <authorList>
            <person name="Mueller S."/>
            <person name="Dejean A."/>
        </authorList>
    </citation>
    <scope>INHIBITION OF SUMOYLATION BY HHV-5 (MICROBIAL INFECTION)</scope>
</reference>
<reference key="17">
    <citation type="journal article" date="1999" name="Nat. Genet.">
        <title>A RA-dependent, tumour-growth suppressive transcription complex is the target of the PML-RARalpha and T18 oncoproteins.</title>
        <authorList>
            <person name="Zhong S."/>
            <person name="Delva L."/>
            <person name="Rachez C."/>
            <person name="Cenciarelli C."/>
            <person name="Gandini D."/>
            <person name="Zhang H."/>
            <person name="Kalantry S."/>
            <person name="Freedman L.P."/>
            <person name="Pandolfi P.P."/>
        </authorList>
    </citation>
    <scope>FUNCTION</scope>
    <scope>INTERACTION WITH RARA; RXRA AND TRIM24</scope>
</reference>
<reference key="18">
    <citation type="journal article" date="2000" name="Blood">
        <title>Role of SUMO-1-modified PML in nuclear body formation.</title>
        <authorList>
            <person name="Zhong S."/>
            <person name="Muller S."/>
            <person name="Ronchetti S."/>
            <person name="Freemont P.S."/>
            <person name="Dejean A."/>
            <person name="Pandolfi P.P."/>
        </authorList>
    </citation>
    <scope>SUMOYLATION AT LYS-65; LYS-160 AND LYS-490</scope>
</reference>
<reference key="19">
    <citation type="journal article" date="2000" name="J. Exp. Med.">
        <title>Promyelocytic leukemia protein (PML) and Daxx participate in a novel nuclear pathway for apoptosis.</title>
        <authorList>
            <person name="Zhong S."/>
            <person name="Salomoni P."/>
            <person name="Ronchetti S."/>
            <person name="Guo A."/>
            <person name="Ruggero D."/>
            <person name="Pandolfi P.P."/>
        </authorList>
    </citation>
    <scope>FUNCTION</scope>
    <scope>INTERACTION WITH DAXX</scope>
</reference>
<reference key="20">
    <citation type="journal article" date="2000" name="Mol. Cell. Biol.">
        <title>Sequestration and inhibition of Daxx-mediated transcriptional repression by PML.</title>
        <authorList>
            <person name="Li H."/>
            <person name="Leo C."/>
            <person name="Zhu J."/>
            <person name="Wu X."/>
            <person name="O'Neil J."/>
            <person name="Park E.-J."/>
            <person name="Chen J.D."/>
        </authorList>
    </citation>
    <scope>INTERACTION WITH DAXX</scope>
    <scope>SUBCELLULAR LOCATION</scope>
</reference>
<reference key="21">
    <citation type="journal article" date="2000" name="Nat. Cell Biol.">
        <title>The function of PML in p53-dependent apoptosis.</title>
        <authorList>
            <person name="Guo A."/>
            <person name="Salomoni P."/>
            <person name="Luo J."/>
            <person name="Shih A."/>
            <person name="Zhong S."/>
            <person name="Gu W."/>
            <person name="Pandolfi P.P."/>
        </authorList>
    </citation>
    <scope>FUNCTION</scope>
    <scope>INTERACTION WITH TP53</scope>
    <scope>SUBCELLULAR LOCATION</scope>
</reference>
<reference key="22">
    <citation type="journal article" date="2001" name="EMBO J.">
        <title>PML mediates the interferon-induced antiviral state against a complex retrovirus via its association with the viral transactivator.</title>
        <authorList>
            <person name="Regad T."/>
            <person name="Saib A."/>
            <person name="Lallemand-Breitenbach V."/>
            <person name="Pandolfi P.P."/>
            <person name="de The H."/>
            <person name="Chelbi-Alix M.K."/>
        </authorList>
    </citation>
    <scope>FUNCTION IN HUMAN FOAMY VIRUS RESTRICTION</scope>
    <scope>INTERACTION WITH HUMAN FOAMY VIRUS BEL1 AND BET (MICROBIAL INFECTION)</scope>
    <scope>SUBCELLULAR LOCATION</scope>
</reference>
<reference key="23">
    <citation type="journal article" date="2001" name="EMBO J.">
        <title>PML RING suppresses oncogenic transformation by reducing the affinity of eIF4E for mRNA.</title>
        <authorList>
            <person name="Cohen N."/>
            <person name="Sharma M."/>
            <person name="Kentsis A."/>
            <person name="Perez J.M."/>
            <person name="Strudwick S."/>
            <person name="Borden K.L."/>
        </authorList>
    </citation>
    <scope>FUNCTION</scope>
    <scope>INTERACTION WITH EIF4E</scope>
</reference>
<reference key="24">
    <citation type="journal article" date="2001" name="J. Mol. Biol.">
        <title>The RING domains of the promyelocytic leukemia protein PML and the arenaviral protein Z repress translation by directly inhibiting translation initiation factor eIF4E.</title>
        <authorList>
            <person name="Kentsis A."/>
            <person name="Dwyer E.C."/>
            <person name="Perez J.M."/>
            <person name="Sharma M."/>
            <person name="Chen A."/>
            <person name="Pan Z.Q."/>
            <person name="Borden K.L."/>
        </authorList>
    </citation>
    <scope>FUNCTION</scope>
    <scope>INTERACTION WITH EIF4E</scope>
</reference>
<reference key="25">
    <citation type="journal article" date="2001" name="Oncogene">
        <title>PML protein isoforms and the RBCC/TRIM motif.</title>
        <authorList>
            <person name="Jensen K."/>
            <person name="Shiels C."/>
            <person name="Freemont P.S."/>
        </authorList>
    </citation>
    <scope>NOMENCLATURE OF ISOFORMS PML-1 THROUGH PML-7</scope>
</reference>
<reference key="26">
    <citation type="journal article" date="2002" name="EMBO J.">
        <title>Human SIR2 deacetylates p53 and antagonizes PML/p53-induced cellular senescence.</title>
        <authorList>
            <person name="Langley E."/>
            <person name="Pearson M."/>
            <person name="Faretta M."/>
            <person name="Bauer U.-M."/>
            <person name="Frye R.A."/>
            <person name="Minucci S."/>
            <person name="Pelicci P.G."/>
            <person name="Kouzarides T."/>
        </authorList>
    </citation>
    <scope>INTERACTION WITH SIRT1</scope>
</reference>
<reference key="27">
    <citation type="journal article" date="2002" name="Mol. Cell">
        <title>SUMO-1 protease-1 regulates gene transcription through PML.</title>
        <authorList>
            <person name="Best J.L."/>
            <person name="Ganiatsas S."/>
            <person name="Agarwal S."/>
            <person name="Changou A."/>
            <person name="Salomoni P."/>
            <person name="Shirihai O."/>
            <person name="Meluh P.B."/>
            <person name="Pandolfi P.P."/>
            <person name="Zon L.I."/>
        </authorList>
    </citation>
    <scope>SUMOYLATION</scope>
    <scope>DESUMOYLATION BY SENP2</scope>
</reference>
<reference key="28">
    <citation type="journal article" date="2002" name="Nat. Cell Biol.">
        <title>PML-dependent apoptosis after DNA damage is regulated by the checkpoint kinase hCds1/Chk2.</title>
        <authorList>
            <person name="Yang S."/>
            <person name="Kuo C."/>
            <person name="Bisi J.E."/>
            <person name="Kim M.K."/>
        </authorList>
    </citation>
    <scope>FUNCTION IN DNA REPAIR</scope>
    <scope>PHOSPHORYLATION AT SER-117 BY CHEK2</scope>
    <scope>INTERACTION WITH CHEK2</scope>
</reference>
<reference key="29">
    <citation type="journal article" date="2002" name="Oncogene">
        <title>Rabies virus P and small P products interact directly with PML and reorganize PML nuclear bodies.</title>
        <authorList>
            <person name="Blondel D."/>
            <person name="Regad T."/>
            <person name="Poisson N."/>
            <person name="Pavie B."/>
            <person name="Harper F."/>
            <person name="Pandolfi P.P."/>
            <person name="De The H."/>
            <person name="Chelbi-Alix M.K."/>
        </authorList>
    </citation>
    <scope>INTERACTION WITH RABIES VIRUS PHOSPHOPROTEINS</scope>
    <scope>SUBCELLULAR LOCATION</scope>
    <scope>FUNCTION</scope>
</reference>
<reference key="30">
    <citation type="journal article" date="2003" name="J. Biol. Chem.">
        <title>The promyelocytic leukemia protein protects p53 from Mdm2-mediated inhibition and degradation.</title>
        <authorList>
            <person name="Louria-Hayon I."/>
            <person name="Grossman T."/>
            <person name="Sionov R.V."/>
            <person name="Alsheich O."/>
            <person name="Pandolfi P.P."/>
            <person name="Haupt Y."/>
        </authorList>
    </citation>
    <scope>FUNCTION</scope>
    <scope>SUBCELLULAR LOCATION</scope>
    <scope>INTERACTION WITH CHEK2 AND TP53</scope>
</reference>
<reference key="31">
    <citation type="journal article" date="2003" name="Mol. Cell. Biol.">
        <title>PML colocalizes with and stabilizes the DNA damage response protein TopBP1.</title>
        <authorList>
            <person name="Xu Z.-X."/>
            <person name="Timanova-Atanasova A."/>
            <person name="Zhao R.-X."/>
            <person name="Chang K.-S."/>
        </authorList>
    </citation>
    <scope>INTERACTION WITH TOPBP1</scope>
</reference>
<reference key="32">
    <citation type="journal article" date="2004" name="J. Biol. Chem.">
        <title>The coiled-coil domain is the structural determinant for mammalian homologues of Drosophila Sina-mediated degradation of promyelocytic leukemia protein and other tripartite motif proteins by the proteasome.</title>
        <authorList>
            <person name="Fanelli M."/>
            <person name="Fantozzi A."/>
            <person name="De Luca P."/>
            <person name="Caprodossi S."/>
            <person name="Matsuzawa S."/>
            <person name="Lazar M.A."/>
            <person name="Pelicci P.G."/>
            <person name="Minucci S."/>
        </authorList>
    </citation>
    <scope>INTERACTION WITH SIAH1</scope>
    <scope>DEGRADATION</scope>
</reference>
<reference key="33">
    <citation type="journal article" date="2004" name="J. Virol.">
        <title>Ability of the human cytomegalovirus IE1 protein to modulate sumoylation of PML correlates with its functional activities in transcriptional regulation and infectivity in cultured fibroblast cells.</title>
        <authorList>
            <person name="Lee H.R."/>
            <person name="Kim D.J."/>
            <person name="Lee J.M."/>
            <person name="Choi C.Y."/>
            <person name="Ahn B.Y."/>
            <person name="Hayward G.S."/>
            <person name="Ahn J.H."/>
        </authorList>
    </citation>
    <scope>INHIBITION OF SUMOYLATION BY HHV-5 (MICROBIAL INFECTION)</scope>
    <scope>INTERACTION WITH HHV-5 IMMEDIATE EARLY PROTEIN IE1 (MICROBIAL INFECTION)</scope>
</reference>
<reference key="34">
    <citation type="journal article" date="2004" name="J. Biol. Chem.">
        <title>Myeloid Elf-1-like factor, an ETS transcription factor, up-regulates lysozyme transcription in epithelial cells through interaction with promyelocytic leukemia protein.</title>
        <authorList>
            <person name="Suico M.A."/>
            <person name="Yoshida H."/>
            <person name="Seki Y."/>
            <person name="Uchikawa T."/>
            <person name="Lu Z."/>
            <person name="Shuto T."/>
            <person name="Matsuzaki K."/>
            <person name="Nakao M."/>
            <person name="Li J.-D."/>
            <person name="Kai H."/>
        </authorList>
    </citation>
    <scope>FUNCTION</scope>
    <scope>INTERACTION WITH ELF4</scope>
    <scope>SUBCELLULAR LOCATION</scope>
</reference>
<reference key="35">
    <citation type="journal article" date="2004" name="J. Mol. Biol.">
        <title>The Ankrd2 protein, a link between the sarcomere and the nucleus in skeletal muscle.</title>
        <authorList>
            <person name="Kojic S."/>
            <person name="Medeot E."/>
            <person name="Guccione E."/>
            <person name="Krmac H."/>
            <person name="Zara I."/>
            <person name="Martinelli V."/>
            <person name="Valle G."/>
            <person name="Faulkner G."/>
        </authorList>
    </citation>
    <scope>INTERACTION WITH ANKRD2</scope>
</reference>
<reference key="36">
    <citation type="journal article" date="2004" name="Nat. Cell Biol.">
        <title>PML regulates p53 stability by sequestering Mdm2 to the nucleolus.</title>
        <authorList>
            <person name="Bernardi R."/>
            <person name="Scaglioni P.P."/>
            <person name="Bergmann S."/>
            <person name="Horn H.F."/>
            <person name="Vousden K.H."/>
            <person name="Pandolfi P.P."/>
        </authorList>
    </citation>
    <scope>FUNCTION</scope>
    <scope>INTERACTION WITH MDM2 AND RPL11</scope>
    <scope>PHOSPHORYLATION BY ATR IN RESPONSE TO DNA DAMAGE</scope>
    <scope>SUBCELLULAR LOCATION</scope>
</reference>
<reference key="37">
    <citation type="journal article" date="2004" name="Nat. Struct. Mol. Biol.">
        <title>PML bodies control the nuclear dynamics and function of the CHFR mitotic checkpoint protein.</title>
        <authorList>
            <person name="Daniels M.J."/>
            <person name="Marson A."/>
            <person name="Venkitaraman A.R."/>
        </authorList>
    </citation>
    <scope>SUBCELLULAR LOCATION</scope>
    <scope>INTERACTION WITH CHFR</scope>
</reference>
<reference key="38">
    <citation type="journal article" date="2004" name="Nature">
        <title>Cytoplasmic PML function in TGF-beta signalling.</title>
        <authorList>
            <person name="Lin H.K."/>
            <person name="Bergmann S."/>
            <person name="Pandolfi P.P."/>
        </authorList>
    </citation>
    <scope>FUNCTION</scope>
    <scope>SUBCELLULAR LOCATION</scope>
    <scope>INTERACTION WITH TGFBR1; TGFBR2; SMAD2; SMAD3 AND ZFYVE9/SARA</scope>
</reference>
<reference key="39">
    <citation type="journal article" date="2005" name="Biochem. Biophys. Res. Commun.">
        <title>Requirement of the coiled-coil domain of PML-RARalpha oncoprotein for localization, sumoylation, and inhibition of monocyte differentiation.</title>
        <authorList>
            <person name="Kim Y.E."/>
            <person name="Kim D.Y."/>
            <person name="Lee J.M."/>
            <person name="Kim S.T."/>
            <person name="Han T.H."/>
            <person name="Ahn J.H."/>
        </authorList>
    </citation>
    <scope>INTERACTION OF PML-RARALPHA ONCOPROTEIN WITH UBE2I</scope>
    <scope>SUBCELLULAR LOCATION</scope>
    <scope>SUMOYLATION</scope>
    <scope>MUTAGENESIS OF CYS-88 AND PRO-89</scope>
</reference>
<reference key="40">
    <citation type="journal article" date="2006" name="Cancer Res.">
        <title>Characterization of endogenous human promyelocytic leukemia isoforms.</title>
        <authorList>
            <person name="Condemine W."/>
            <person name="Takahashi Y."/>
            <person name="Zhu J."/>
            <person name="Puvion-Dutilleul F."/>
            <person name="Guegan S."/>
            <person name="Janin A."/>
            <person name="de The H."/>
        </authorList>
    </citation>
    <scope>SUBCELLULAR LOCATION</scope>
</reference>
<reference key="41">
    <citation type="journal article" date="2006" name="Cell">
        <title>Global, in vivo, and site-specific phosphorylation dynamics in signaling networks.</title>
        <authorList>
            <person name="Olsen J.V."/>
            <person name="Blagoev B."/>
            <person name="Gnad F."/>
            <person name="Macek B."/>
            <person name="Kumar C."/>
            <person name="Mortensen P."/>
            <person name="Mann M."/>
        </authorList>
    </citation>
    <scope>PHOSPHORYLATION [LARGE SCALE ANALYSIS] AT SER-403; SER-518; SER-527 AND SER-530</scope>
    <scope>PHOSPHORYLATION [LARGE SCALE ANALYSIS] AT SER-565 (ISOFORM PML-5)</scope>
    <scope>PHOSPHORYLATION [LARGE SCALE ANALYSIS] AT SER-518; SER-527 AND SER-530 (ISOFORM PML-6)</scope>
    <scope>IDENTIFICATION BY MASS SPECTROMETRY [LARGE SCALE ANALYSIS]</scope>
    <source>
        <tissue>Cervix carcinoma</tissue>
    </source>
</reference>
<reference key="42">
    <citation type="journal article" date="2006" name="J. Cell Biol.">
        <title>Promyelocytic leukemia nuclear bodies behave as DNA damage sensors whose response to DNA double-strand breaks is regulated by NBS1 and the kinases ATM, Chk2, and ATR.</title>
        <authorList>
            <person name="Dellaire G."/>
            <person name="Ching R.W."/>
            <person name="Ahmed K."/>
            <person name="Jalali F."/>
            <person name="Tse K.C."/>
            <person name="Bristow R.G."/>
            <person name="Bazett-Jones D.P."/>
        </authorList>
    </citation>
    <scope>FUNCTION</scope>
</reference>
<reference key="43">
    <citation type="journal article" date="2006" name="J. Virol.">
        <title>Cross talk between PML and p53 during poliovirus infection: implications for antiviral defense.</title>
        <authorList>
            <person name="Pampin M."/>
            <person name="Simonin Y."/>
            <person name="Blondel B."/>
            <person name="Percherancier Y."/>
            <person name="Chelbi-Alix M.K."/>
        </authorList>
    </citation>
    <scope>FUNCTION IN POLIOVIRUS RESTRICTION</scope>
</reference>
<reference key="44">
    <citation type="journal article" date="2006" name="Mol. Cell">
        <title>The mechanisms of PML-nuclear body formation.</title>
        <authorList>
            <person name="Shen T.H."/>
            <person name="Lin H.K."/>
            <person name="Scaglioni P.P."/>
            <person name="Yung T.M."/>
            <person name="Pandolfi P.P."/>
        </authorList>
    </citation>
    <scope>SUBUNIT</scope>
    <scope>SUMOYLATION</scope>
    <scope>SUMO-BINDING MOTIF</scope>
    <scope>MUTAGENESIS OF CYS-57 AND CYS-60</scope>
    <scope>SUBCELLULAR LOCATION</scope>
</reference>
<reference key="45">
    <citation type="journal article" date="2008" name="Genes Cells">
        <title>Modulation of M2-type pyruvate kinase activity by the cytoplasmic PML tumor suppressor protein.</title>
        <authorList>
            <person name="Shimada N."/>
            <person name="Shinagawa T."/>
            <person name="Ishii S."/>
        </authorList>
    </citation>
    <scope>INTERACTION WITH PKM</scope>
    <scope>FUNCTION</scope>
    <scope>SUBCELLULAR LOCATION</scope>
    <scope>DOMAIN</scope>
    <scope>MUTAGENESIS OF LYS-487 AND LYS-490</scope>
</reference>
<reference key="46">
    <citation type="journal article" date="2008" name="J. Biol. Chem.">
        <title>Acetylation of PML is involved in histone deacetylase inhibitor-mediated apoptosis.</title>
        <authorList>
            <person name="Hayakawa F."/>
            <person name="Abe A."/>
            <person name="Kitabayashi I."/>
            <person name="Pandolfi P.P."/>
            <person name="Naoe T."/>
        </authorList>
    </citation>
    <scope>ACETYLATION AT LYS-487 AND LYS-515</scope>
    <scope>MUTAGENESIS OF LYS-487 AND LYS-515</scope>
</reference>
<reference key="47">
    <citation type="journal article" date="2008" name="J. Virol.">
        <title>Nuclear domain 10 components promyelocytic leukemia protein and hDaxx independently contribute to an intrinsic antiviral defense against human cytomegalovirus infection.</title>
        <authorList>
            <person name="Tavalai N."/>
            <person name="Papior P."/>
            <person name="Rechter S."/>
            <person name="Stamminger T."/>
        </authorList>
    </citation>
    <scope>FUNCTION IN HHV-5 RESTRICTION</scope>
</reference>
<reference key="48">
    <citation type="journal article" date="2008" name="Nature">
        <title>The deubiquitinylation and localization of PTEN are regulated by a HAUSP-PML network.</title>
        <authorList>
            <person name="Song M.S."/>
            <person name="Salmena L."/>
            <person name="Carracedo A."/>
            <person name="Egia A."/>
            <person name="Lo-Coco F."/>
            <person name="Teruya-Feldstein J."/>
            <person name="Pandolfi P.P."/>
        </authorList>
    </citation>
    <scope>FUNCTION</scope>
    <scope>SUBCELLULAR LOCATION</scope>
</reference>
<reference key="49">
    <citation type="journal article" date="2008" name="Nat. Cell Biol.">
        <title>RNF4 is a poly-SUMO-specific E3 ubiquitin ligase required for arsenic-induced PML degradation.</title>
        <authorList>
            <person name="Tatham M.H."/>
            <person name="Geoffroy M.C."/>
            <person name="Shen L."/>
            <person name="Plechanovova A."/>
            <person name="Hattersley N."/>
            <person name="Jaffray E.G."/>
            <person name="Palvimo J.J."/>
            <person name="Hay R.T."/>
        </authorList>
    </citation>
    <scope>POLYUBIQUITINATION AT LYS-380; LYS-400; LYS-401 AND LYS-476 BY RNF4</scope>
    <scope>PROTEASOMAL DEGRADATION</scope>
    <scope>SUMOYLATION</scope>
</reference>
<reference key="50">
    <citation type="journal article" date="2007" name="Nat. Cell Biol.">
        <title>Functional interaction between PML and SATB1 regulates chromatin-loop architecture and transcription of the MHC class I locus.</title>
        <authorList>
            <person name="Kumar P.P."/>
            <person name="Bischof O."/>
            <person name="Purbey P.K."/>
            <person name="Notani D."/>
            <person name="Urlaub H."/>
            <person name="Dejean A."/>
            <person name="Galande S."/>
        </authorList>
    </citation>
    <scope>FUNCTION</scope>
    <scope>INTERACTION WITH SATB1</scope>
</reference>
<reference key="51">
    <citation type="journal article" date="2008" name="J. Cell Biol.">
        <title>The eIF4E RNA regulon promotes the Akt signaling pathway.</title>
        <authorList>
            <person name="Culjkovic B."/>
            <person name="Tan K."/>
            <person name="Orolicki S."/>
            <person name="Amri A."/>
            <person name="Meloche S."/>
            <person name="Borden K.L."/>
        </authorList>
    </citation>
    <scope>FUNCTION</scope>
</reference>
<reference key="52">
    <citation type="journal article" date="2008" name="PLoS ONE">
        <title>A role for cytoplasmic PML in cellular resistance to viral infection.</title>
        <authorList>
            <person name="McNally B.A."/>
            <person name="Trgovcich J."/>
            <person name="Maul G.G."/>
            <person name="Liu Y."/>
            <person name="Zheng P."/>
        </authorList>
    </citation>
    <scope>FUNCTION IN HHV-1 RESTRICTION</scope>
    <scope>SUBCELLULAR LOCATION</scope>
</reference>
<reference key="53">
    <citation type="journal article" date="2008" name="Proc. Natl. Acad. Sci. U.S.A.">
        <title>A quantitative atlas of mitotic phosphorylation.</title>
        <authorList>
            <person name="Dephoure N."/>
            <person name="Zhou C."/>
            <person name="Villen J."/>
            <person name="Beausoleil S.A."/>
            <person name="Bakalarski C.E."/>
            <person name="Elledge S.J."/>
            <person name="Gygi S.P."/>
        </authorList>
    </citation>
    <scope>PHOSPHORYLATION [LARGE SCALE ANALYSIS] AT SER-403; SER-518; SER-527 AND SER-530</scope>
    <scope>IDENTIFICATION BY MASS SPECTROMETRY [LARGE SCALE ANALYSIS]</scope>
    <source>
        <tissue>Cervix carcinoma</tissue>
    </source>
</reference>
<reference key="54">
    <citation type="journal article" date="2009" name="Biochem. Biophys. Res. Commun.">
        <title>Differential suppressive effect of promyelocytic leukemia protein on the replication of different subtypes/strains of influenza A virus.</title>
        <authorList>
            <person name="Li W."/>
            <person name="Wang G."/>
            <person name="Zhang H."/>
            <person name="Zhang D."/>
            <person name="Zeng J."/>
            <person name="Chen X."/>
            <person name="Xu Y."/>
            <person name="Li K."/>
        </authorList>
    </citation>
    <scope>FUNCTION IN INFLUENZA A VIRUS RESTRICTION</scope>
</reference>
<reference key="55">
    <citation type="journal article" date="2009" name="J. Cell Sci.">
        <title>PML-IV functions as a negative regulator of telomerase by interacting with TERT.</title>
        <authorList>
            <person name="Oh W."/>
            <person name="Ghim J."/>
            <person name="Lee E.W."/>
            <person name="Yang M.R."/>
            <person name="Kim E.T."/>
            <person name="Ahn J.H."/>
            <person name="Song J."/>
        </authorList>
    </citation>
    <scope>FUNCTION</scope>
    <scope>INTERACTION WITH TERT</scope>
</reference>
<reference key="56">
    <citation type="journal article" date="2009" name="Oncogene">
        <title>PML tumor suppressor is regulated by HIPK2-mediated phosphorylation in response to DNA damage.</title>
        <authorList>
            <person name="Gresko E."/>
            <person name="Ritterhoff S."/>
            <person name="Sevilla-Perez J."/>
            <person name="Roscic A."/>
            <person name="Froebius K."/>
            <person name="Kotevic I."/>
            <person name="Vichalkovski A."/>
            <person name="Hess D."/>
            <person name="Hemmings B.A."/>
            <person name="Schmitz M.L."/>
        </authorList>
    </citation>
    <scope>PHOSPHORYLATION AT SER-8 AND SER-38 BY HIPK2</scope>
    <scope>INTERACTION WITH HIPK2</scope>
</reference>
<reference key="57">
    <citation type="journal article" date="2009" name="Sci. Signal.">
        <title>Quantitative phosphoproteomic analysis of T cell receptor signaling reveals system-wide modulation of protein-protein interactions.</title>
        <authorList>
            <person name="Mayya V."/>
            <person name="Lundgren D.H."/>
            <person name="Hwang S.-I."/>
            <person name="Rezaul K."/>
            <person name="Wu L."/>
            <person name="Eng J.K."/>
            <person name="Rodionov V."/>
            <person name="Han D.K."/>
        </authorList>
    </citation>
    <scope>PHOSPHORYLATION [LARGE SCALE ANALYSIS] AT SER-530</scope>
    <scope>IDENTIFICATION BY MASS SPECTROMETRY [LARGE SCALE ANALYSIS]</scope>
    <source>
        <tissue>Leukemic T-cell</tissue>
    </source>
</reference>
<reference key="58">
    <citation type="journal article" date="2010" name="J. Cell Sci.">
        <title>Two-step colocalization of MORC3 with PML nuclear bodies.</title>
        <authorList>
            <person name="Mimura Y."/>
            <person name="Takahashi K."/>
            <person name="Kawata K."/>
            <person name="Akazawa T."/>
            <person name="Inoue N."/>
        </authorList>
    </citation>
    <scope>INTERACTION WITH MORC3</scope>
    <scope>SUBCELLULAR LOCATION</scope>
</reference>
<reference key="59">
    <citation type="journal article" date="2010" name="J. Virol.">
        <title>Resistance to rabies virus infection conferred by the PMLIV isoform.</title>
        <authorList>
            <person name="Blondel D."/>
            <person name="Kheddache S."/>
            <person name="Lahaye X."/>
            <person name="Dianoux L."/>
            <person name="Chelbi-Alix M.K."/>
        </authorList>
    </citation>
    <scope>FUNCTION IN RABIES VIRUS RESTRICTION</scope>
</reference>
<reference key="60">
    <citation type="journal article" date="2010" name="J. Virol.">
        <title>Epstein-Barr virus nuclear antigen 1 Hijacks the host kinase CK2 to disrupt PML nuclear bodies.</title>
        <authorList>
            <person name="Sivachandran N."/>
            <person name="Cao J.Y."/>
            <person name="Frappier L."/>
        </authorList>
    </citation>
    <scope>PHOSPHORYLATION BY CK2 (MICROBIAL INFECTION)</scope>
    <scope>SUBCELLULAR LOCATION</scope>
</reference>
<reference key="61">
    <citation type="journal article" date="2010" name="Oncogene">
        <title>SUMO modification of E1B-55K oncoprotein regulates isoform-specific binding to the tumour suppressor protein PML.</title>
        <authorList>
            <person name="Wimmer P."/>
            <person name="Schreiner S."/>
            <person name="Everett R.D."/>
            <person name="Sirma H."/>
            <person name="Groitl P."/>
            <person name="Dobner T."/>
        </authorList>
    </citation>
    <scope>INTERACTION OF PML-4 AND PML-5 WITH HADV5 E1B-55K (MICROBIAL INFECTION)</scope>
</reference>
<reference key="62">
    <citation type="journal article" date="2010" name="Mol. Biol. Cell">
        <title>Arsenic-induced SUMO-dependent recruitment of RNF4 into PML nuclear bodies.</title>
        <authorList>
            <person name="Geoffroy M.C."/>
            <person name="Jaffray E.G."/>
            <person name="Walker K.J."/>
            <person name="Hay R.T."/>
        </authorList>
    </citation>
    <scope>SUMOYLATION</scope>
    <scope>UBIQUITINATION</scope>
</reference>
<reference key="63">
    <citation type="journal article" date="2010" name="PLoS ONE">
        <title>Functional polymorphism of the CK2alpha intronless gene plays oncogenic roles in lung cancer.</title>
        <authorList>
            <person name="Hung M.S."/>
            <person name="Lin Y.C."/>
            <person name="Mao J.H."/>
            <person name="Kim I.J."/>
            <person name="Xu Z."/>
            <person name="Yang C.T."/>
            <person name="Jablons D.M."/>
            <person name="You L."/>
        </authorList>
    </citation>
    <scope>INTERACTION WITH CSNK2A1 AND CSNK2A3</scope>
</reference>
<reference key="64">
    <citation type="journal article" date="2010" name="Sci. Signal.">
        <title>Quantitative phosphoproteomics reveals widespread full phosphorylation site occupancy during mitosis.</title>
        <authorList>
            <person name="Olsen J.V."/>
            <person name="Vermeulen M."/>
            <person name="Santamaria A."/>
            <person name="Kumar C."/>
            <person name="Miller M.L."/>
            <person name="Jensen L.J."/>
            <person name="Gnad F."/>
            <person name="Cox J."/>
            <person name="Jensen T.S."/>
            <person name="Nigg E.A."/>
            <person name="Brunak S."/>
            <person name="Mann M."/>
        </authorList>
    </citation>
    <scope>PHOSPHORYLATION [LARGE SCALE ANALYSIS] AT SER-518 AND SER-527</scope>
    <scope>IDENTIFICATION BY MASS SPECTROMETRY [LARGE SCALE ANALYSIS]</scope>
    <source>
        <tissue>Cervix carcinoma</tissue>
    </source>
</reference>
<reference key="65">
    <citation type="journal article" date="2010" name="Science">
        <title>Arsenic trioxide controls the fate of the PML-RARalpha oncoprotein by directly binding PML.</title>
        <authorList>
            <person name="Zhang X.W."/>
            <person name="Yan X.J."/>
            <person name="Zhou Z.R."/>
            <person name="Yang F.F."/>
            <person name="Wu Z.Y."/>
            <person name="Sun H.B."/>
            <person name="Liang W.X."/>
            <person name="Song A.X."/>
            <person name="Lallemand-Breitenbach V."/>
            <person name="Jeanne M."/>
            <person name="Zhang Q.Y."/>
            <person name="Yang H.Y."/>
            <person name="Huang Q.H."/>
            <person name="Zhou G.B."/>
            <person name="Tong J.H."/>
            <person name="Zhang Y."/>
            <person name="Wu J.H."/>
            <person name="Hu H.Y."/>
            <person name="de The H."/>
            <person name="Chen S.J."/>
            <person name="Chen Z."/>
        </authorList>
    </citation>
    <scope>INTERACTION WITH UBC9</scope>
    <scope>SUBUNIT</scope>
    <scope>UBIQUITINATION</scope>
    <scope>SUMOYLATION</scope>
    <scope>ARSENIC BINDING</scope>
    <scope>DOMAIN</scope>
    <scope>IDENTIFICATION BY MASS SPECTROMETRY</scope>
</reference>
<reference key="66">
    <citation type="journal article" date="2011" name="BMC Syst. Biol.">
        <title>Initial characterization of the human central proteome.</title>
        <authorList>
            <person name="Burkard T.R."/>
            <person name="Planyavsky M."/>
            <person name="Kaupe I."/>
            <person name="Breitwieser F.P."/>
            <person name="Buerckstuemmer T."/>
            <person name="Bennett K.L."/>
            <person name="Superti-Furga G."/>
            <person name="Colinge J."/>
        </authorList>
    </citation>
    <scope>IDENTIFICATION BY MASS SPECTROMETRY [LARGE SCALE ANALYSIS]</scope>
</reference>
<reference key="67">
    <citation type="journal article" date="2011" name="Biochemistry (Mosc.)">
        <title>Promyelocytic leukemia protein interacts with werner syndrome helicase and regulates double-strand break repair in gamma-irradiation-induced DNA damage responses.</title>
        <authorList>
            <person name="Liu J."/>
            <person name="Song Y."/>
            <person name="Qian J."/>
            <person name="Liu B."/>
            <person name="Dong Y."/>
            <person name="Tian B."/>
            <person name="Sun Z."/>
        </authorList>
    </citation>
    <scope>FUNCTION</scope>
    <scope>INTERACTION WITH WRN</scope>
</reference>
<reference key="68">
    <citation type="journal article" date="2011" name="Cancer Cell">
        <title>A Cullin3-KLHL20 Ubiquitin ligase-dependent pathway targets PML to potentiate HIF-1 signaling and prostate cancer progression.</title>
        <authorList>
            <person name="Yuan W.C."/>
            <person name="Lee Y.R."/>
            <person name="Huang S.F."/>
            <person name="Lin Y.M."/>
            <person name="Chen T.Y."/>
            <person name="Chung H.C."/>
            <person name="Tsai C.H."/>
            <person name="Chen H.Y."/>
            <person name="Chiang C.T."/>
            <person name="Lai C.K."/>
            <person name="Lu L.T."/>
            <person name="Chen C.H."/>
            <person name="Gu D.L."/>
            <person name="Pu Y.S."/>
            <person name="Jou Y.S."/>
            <person name="Lu K.P."/>
            <person name="Hsiao P.W."/>
            <person name="Shih H.M."/>
            <person name="Chen R.H."/>
        </authorList>
    </citation>
    <scope>UBIQUITINATION</scope>
    <scope>PHOSPHORYLATION AT SER-518</scope>
    <scope>MUTAGENESIS OF SER-518</scope>
</reference>
<reference key="69">
    <citation type="journal article" date="2011" name="Cell Death Differ.">
        <title>The role of PML in the control of apoptotic cell fate: a new key player at ER-mitochondria sites.</title>
        <authorList>
            <person name="Pinton P."/>
            <person name="Giorgi C."/>
            <person name="Pandolfi P.P."/>
        </authorList>
    </citation>
    <scope>REVIEW ON FUNCTION</scope>
</reference>
<reference key="70">
    <citation type="journal article" date="2011" name="Curr. Opin. Cell Biol.">
        <title>The nuclear bodies inside out: PML conquers the cytoplasm.</title>
        <authorList>
            <person name="Carracedo A."/>
            <person name="Ito K."/>
            <person name="Pandolfi P.P."/>
        </authorList>
    </citation>
    <scope>REVIEW ON FUNCTION</scope>
</reference>
<reference key="71">
    <citation type="journal article" date="2011" name="J. Biol. Chem.">
        <title>Mitogen-activated protein kinase extracellular signal-regulated kinase 2 phosphorylates and promotes Pin1 protein-dependent promyelocytic leukemia protein turnover.</title>
        <authorList>
            <person name="Lim J.H."/>
            <person name="Liu Y."/>
            <person name="Reineke E."/>
            <person name="Kao H.Y."/>
        </authorList>
    </citation>
    <scope>PHOSPHORYLATION AT SER-403; SER-505; SER-518 AND SER-527</scope>
    <scope>INTERACTION WITH PIN1 AND MAPK1</scope>
</reference>
<reference key="72">
    <citation type="journal article" date="2011" name="J. Cell Sci.">
        <title>PML isoforms I and II participate in PML-dependent restriction of HSV-1 replication.</title>
        <authorList>
            <person name="Cuchet D."/>
            <person name="Sykes A."/>
            <person name="Nicolas A."/>
            <person name="Orr A."/>
            <person name="Murray J."/>
            <person name="Sirma H."/>
            <person name="Heeren J."/>
            <person name="Bartelt A."/>
            <person name="Everett R.D."/>
        </authorList>
    </citation>
    <scope>FUNCTION IN HSV-1 RESTRICTION</scope>
</reference>
<reference key="73">
    <citation type="journal article" date="2011" name="J. Interferon Cytokine Res.">
        <title>Role of promyelocytic leukemia protein in host antiviral defense.</title>
        <authorList>
            <person name="Geoffroy M.C."/>
            <person name="Chelbi-Alix M.K."/>
        </authorList>
    </citation>
    <scope>REVIEW ON FUNCTION IN ANTIVIRAL DEFENSE</scope>
</reference>
<reference key="74">
    <citation type="journal article" date="2011" name="J. Virol.">
        <title>Promyelocytic leukemia isoform IV confers resistance to encephalomyocarditis virus via the sequestration of 3D polymerase in nuclear bodies.</title>
        <authorList>
            <person name="Maroui M.A."/>
            <person name="Pampin M."/>
            <person name="Chelbi-Alix M.K."/>
        </authorList>
    </citation>
    <scope>FUNCTION IN EMCV RESTRICTION</scope>
    <scope>INTERACTION WITH EMCV P3D-POL (MICROBIAL INFECTION)</scope>
</reference>
<reference key="75">
    <citation type="journal article" date="2011" name="Mol. Biol. Cell">
        <title>The SUMO protease SENP6 is a direct regulator of PML nuclear bodies.</title>
        <authorList>
            <person name="Hattersley N."/>
            <person name="Shen L."/>
            <person name="Jaffray E.G."/>
            <person name="Hay R.T."/>
        </authorList>
    </citation>
    <scope>SUMOYLATION</scope>
    <scope>DESUMOYLATION BY SENP6</scope>
</reference>
<reference key="76">
    <citation type="journal article" date="2011" name="Mol. Neurobiol.">
        <title>The role of PML in the nervous system.</title>
        <authorList>
            <person name="Salomoni P."/>
            <person name="Betts-Henderson J."/>
        </authorList>
    </citation>
    <scope>REVIEW ON FUNCTION</scope>
</reference>
<reference key="77">
    <citation type="journal article" date="2011" name="Oncogene">
        <title>SUMO E3 ligase activity of TRIM proteins.</title>
        <authorList>
            <person name="Chu Y."/>
            <person name="Yang X."/>
        </authorList>
    </citation>
    <scope>FUNCTION</scope>
    <scope>CATALYTIC ACTIVITY</scope>
    <scope>PATHWAY</scope>
</reference>
<reference key="78">
    <citation type="journal article" date="2011" name="PLoS Pathog.">
        <title>Entrapment of viral capsids in nuclear PML cages is an intrinsic antiviral host defense against Varicella-Zoster virus.</title>
        <authorList>
            <person name="Reichelt M."/>
            <person name="Wang L."/>
            <person name="Sommer M."/>
            <person name="Perrino J."/>
            <person name="Nour A.M."/>
            <person name="Sen N."/>
            <person name="Baiker A."/>
            <person name="Zerboni L."/>
            <person name="Arvin A.M."/>
        </authorList>
    </citation>
    <scope>FUNCTION IN VARICELLA ZOSTER RESTRICTION</scope>
    <scope>SUBCELLULAR LOCATION</scope>
    <scope>INTERACTION WITH VZV VP26 (MICROBIAL INFECTION)</scope>
</reference>
<reference key="79">
    <citation type="journal article" date="2011" name="Sci. Signal.">
        <title>System-wide temporal characterization of the proteome and phosphoproteome of human embryonic stem cell differentiation.</title>
        <authorList>
            <person name="Rigbolt K.T."/>
            <person name="Prokhorova T.A."/>
            <person name="Akimov V."/>
            <person name="Henningsen J."/>
            <person name="Johansen P.T."/>
            <person name="Kratchmarova I."/>
            <person name="Kassem M."/>
            <person name="Mann M."/>
            <person name="Olsen J.V."/>
            <person name="Blagoev B."/>
        </authorList>
    </citation>
    <scope>PHOSPHORYLATION [LARGE SCALE ANALYSIS] AT SER-518; SER-527 AND SER-530</scope>
    <scope>IDENTIFICATION BY MASS SPECTROMETRY [LARGE SCALE ANALYSIS]</scope>
</reference>
<reference key="80">
    <citation type="journal article" date="2012" name="Cancer Res.">
        <title>The SUMO E3-ligase PIAS1 regulates the tumor suppressor PML and its oncogenic counterpart PML-RARA.</title>
        <authorList>
            <person name="Rabellino A."/>
            <person name="Carter B."/>
            <person name="Konstantinidou G."/>
            <person name="Wu S.Y."/>
            <person name="Rimessi A."/>
            <person name="Byers L.A."/>
            <person name="Heymach J.V."/>
            <person name="Girard L."/>
            <person name="Chiang C.M."/>
            <person name="Teruya-Feldstein J."/>
            <person name="Scaglioni P.P."/>
        </authorList>
    </citation>
    <scope>SUMOYLATION AT LYS-65 AND LYS-160</scope>
    <scope>PHOSPHORYLATION AT SER-565</scope>
    <scope>SUBCELLULAR LOCATION</scope>
    <scope>INTERACTION WITH PIAS1; PIAS2 AND CSNK2A1</scope>
</reference>
<reference key="81">
    <citation type="journal article" date="2012" name="Cell Death Differ.">
        <title>MageA2 restrains cellular senescence by targeting the function of PMLIV/p53 axis at the PML-NBs.</title>
        <authorList>
            <person name="Peche L.Y."/>
            <person name="Scolz M."/>
            <person name="Ladelfa M.F."/>
            <person name="Monte M."/>
            <person name="Schneider C."/>
        </authorList>
    </citation>
    <scope>SUBCELLULAR LOCATION</scope>
    <scope>INTERACTION WITH MAGEA2</scope>
</reference>
<reference key="82">
    <citation type="journal article" date="2012" name="Cell Death Dis.">
        <title>Role of the promyelocytic leukaemia protein in cell death regulation.</title>
        <authorList>
            <person name="Salomoni P."/>
            <person name="Dvorkina M."/>
            <person name="Michod D."/>
        </authorList>
    </citation>
    <scope>REVIEW ON FUNCTION</scope>
</reference>
<reference key="83">
    <citation type="journal article" date="2012" name="EMBO J.">
        <title>Physical and functional interaction between PML and TBX2 in the establishment of cellular senescence.</title>
        <authorList>
            <person name="Martin N."/>
            <person name="Benhamed M."/>
            <person name="Nacerddine K."/>
            <person name="Demarque M.D."/>
            <person name="van Lohuizen M."/>
            <person name="Dejean A."/>
            <person name="Bischof O."/>
        </authorList>
    </citation>
    <scope>FUNCTION</scope>
    <scope>INTERACTION WITH TBX2; TBX3; E2F4 AND RBL2</scope>
</reference>
<reference key="84">
    <citation type="journal article" date="2012" name="EMBO J.">
        <title>PML regulates PER2 nuclear localization and circadian function.</title>
        <authorList>
            <person name="Miki T."/>
            <person name="Xu Z."/>
            <person name="Chen-Goodspeed M."/>
            <person name="Liu M."/>
            <person name="Van Oort-Jansen A."/>
            <person name="Rea M.A."/>
            <person name="Zhao Z."/>
            <person name="Lee C.C."/>
            <person name="Chang K.S."/>
        </authorList>
    </citation>
    <scope>FUNCTION IN CIRCADIAN CLOCK</scope>
    <scope>SUBCELLULAR LOCATION</scope>
    <scope>INTERACTION WITH PER2</scope>
    <scope>ACETYLATION AT LYS-487</scope>
    <scope>DEACETYLATION BY SIRT1</scope>
</reference>
<reference key="85">
    <citation type="journal article" date="2012" name="Front. Oncol.">
        <title>Post-translational modifications of PML: consequences and implications.</title>
        <authorList>
            <person name="Cheng X."/>
            <person name="Kao H.Y."/>
        </authorList>
    </citation>
    <scope>REVIEW ON PTM</scope>
</reference>
<reference key="86">
    <citation type="journal article" date="2012" name="Gastroenterology">
        <title>Beta-catenin inhibits promyelocytic leukemia protein tumor suppressor function in colorectal cancer cells.</title>
        <authorList>
            <person name="Satow R."/>
            <person name="Shitashige M."/>
            <person name="Jigami T."/>
            <person name="Fukami K."/>
            <person name="Honda K."/>
            <person name="Kitabayashi I."/>
            <person name="Yamada T."/>
        </authorList>
    </citation>
    <scope>FUNCTION</scope>
    <scope>SUBCELLULAR LOCATION</scope>
    <scope>SUMOYLATION AT LYS-490</scope>
    <scope>INTERACTION WITH HDAC7; RANBP2 AND CTNNB1-TCF7L2 COMPLEX</scope>
</reference>
<reference key="87">
    <citation type="journal article" date="2012" name="J. Biochem.">
        <title>Moloney murine leukemia virus integrase and reverse transcriptase interact with PML proteins.</title>
        <authorList>
            <person name="Okino Y."/>
            <person name="Inayoshi Y."/>
            <person name="Kojima Y."/>
            <person name="Kidani S."/>
            <person name="Kaneoka H."/>
            <person name="Honkawa A."/>
            <person name="Higuchi H."/>
            <person name="Nishijima K."/>
            <person name="Miyake K."/>
            <person name="Iijima S."/>
        </authorList>
    </citation>
    <scope>INTERACTION WITH MOMLV IN AND RT (MICROBIAL INFECTION)</scope>
    <scope>SUBCELLULAR LOCATION</scope>
</reference>
<reference key="88">
    <citation type="journal article" date="2012" name="J. Biol. Chem.">
        <title>Promyelocytic leukemia protein (PML) regulates endothelial cell network formation and migration in response to tumor necrosis factor alpha (TNFalpha) and interferon alpha (IFNalpha).</title>
        <authorList>
            <person name="Cheng X."/>
            <person name="Liu Y."/>
            <person name="Chu H."/>
            <person name="Kao H.Y."/>
        </authorList>
    </citation>
    <scope>FUNCTION</scope>
</reference>
<reference key="89">
    <citation type="journal article" date="2012" name="J. Biol. Chem.">
        <title>Contribution of the C-terminal regions of promyelocytic leukemia protein (PML) isoforms II and V to PML nuclear body formation.</title>
        <authorList>
            <person name="Geng Y."/>
            <person name="Monajembashi S."/>
            <person name="Shao A."/>
            <person name="Cui D."/>
            <person name="He W."/>
            <person name="Chen Z."/>
            <person name="Hemmerich P."/>
            <person name="Tang J."/>
        </authorList>
    </citation>
    <scope>DOMAIN C-TERMINAL</scope>
</reference>
<reference key="90">
    <citation type="journal article" date="2012" name="J. Biomed. Sci.">
        <title>The role of PML ubiquitination in human malignancies.</title>
        <authorList>
            <person name="Chen R.H."/>
            <person name="Lee Y.R."/>
            <person name="Yuan W.C."/>
        </authorList>
    </citation>
    <scope>REVIEW ON UBIQUITINATION</scope>
</reference>
<reference key="91">
    <citation type="journal article" date="2012" name="J. Cell Biol.">
        <title>PML promotes MHC class II gene expression by stabilizing the class II transactivator.</title>
        <authorList>
            <person name="Ulbricht T."/>
            <person name="Alzrigat M."/>
            <person name="Horch A."/>
            <person name="Reuter N."/>
            <person name="von Mikecz A."/>
            <person name="Steimle V."/>
            <person name="Schmitt E."/>
            <person name="Kraemer O.H."/>
            <person name="Stamminger T."/>
            <person name="Hemmerich P."/>
        </authorList>
    </citation>
    <scope>FUNCTION</scope>
    <scope>SUBCELLULAR LOCATION</scope>
    <scope>INTERACTION WITH CIITA</scope>
</reference>
<reference key="92">
    <citation type="journal article" date="2012" name="J. Clin. Invest.">
        <title>A metabolic prosurvival role for PML in breast cancer.</title>
        <authorList>
            <person name="Carracedo A."/>
            <person name="Weiss D."/>
            <person name="Leliaert A.K."/>
            <person name="Bhasin M."/>
            <person name="de Boer V.C."/>
            <person name="Laurent G."/>
            <person name="Adams A.C."/>
            <person name="Sundvall M."/>
            <person name="Song S.J."/>
            <person name="Ito K."/>
            <person name="Finley L.S."/>
            <person name="Egia A."/>
            <person name="Libermann T."/>
            <person name="Gerhart-Hines Z."/>
            <person name="Puigserver P."/>
            <person name="Haigis M.C."/>
            <person name="Maratos-Flier E."/>
            <person name="Richardson A.L."/>
            <person name="Schafer Z.T."/>
            <person name="Pandolfi P.P."/>
        </authorList>
    </citation>
    <scope>FUNCTION</scope>
    <scope>TISSUE SPECIFICITY</scope>
</reference>
<reference key="93">
    <citation type="journal article" date="2012" name="J. Virol.">
        <title>Herpes simplex virus 1 ubiquitin ligase ICP0 interacts with PML isoform I and induces its SUMO-independent degradation.</title>
        <authorList>
            <person name="Cuchet-Lourenco D."/>
            <person name="Vanni E."/>
            <person name="Glass M."/>
            <person name="Orr A."/>
            <person name="Everett R.D."/>
        </authorList>
    </citation>
    <scope>INTERACTION WITH HHV-1 ICP0 (MICROBIAL INFECTION)</scope>
</reference>
<reference key="94">
    <citation type="journal article" date="2012" name="PLoS ONE">
        <title>TRIM16 acts as an E3 ubiquitin ligase and can heterodimerize with other TRIM family members.</title>
        <authorList>
            <person name="Bell J.L."/>
            <person name="Malyukova A."/>
            <person name="Holien J.K."/>
            <person name="Koach J."/>
            <person name="Parker M.W."/>
            <person name="Kavallaris M."/>
            <person name="Marshall G.M."/>
            <person name="Cheung B.B."/>
        </authorList>
    </citation>
    <scope>INTERACTION WITH TRIM16</scope>
</reference>
<reference key="95">
    <citation type="journal article" date="2013" name="J. Proteome Res.">
        <title>Toward a comprehensive characterization of a human cancer cell phosphoproteome.</title>
        <authorList>
            <person name="Zhou H."/>
            <person name="Di Palma S."/>
            <person name="Preisinger C."/>
            <person name="Peng M."/>
            <person name="Polat A.N."/>
            <person name="Heck A.J."/>
            <person name="Mohammed S."/>
        </authorList>
    </citation>
    <scope>PHOSPHORYLATION [LARGE SCALE ANALYSIS] AT SER-36; SER-38; SER-48; SER-403; SER-505; SER-512; SER-518; SER-527; SER-530 AND THR-867</scope>
    <scope>IDENTIFICATION BY MASS SPECTROMETRY [LARGE SCALE ANALYSIS]</scope>
    <source>
        <tissue>Cervix carcinoma</tissue>
        <tissue>Erythroleukemia</tissue>
    </source>
</reference>
<reference key="96">
    <citation type="journal article" date="2013" name="Oncogene">
        <title>BMK1 is involved in the regulation of p53 through disrupting the PML-MDM2 interaction.</title>
        <authorList>
            <person name="Yang Q."/>
            <person name="Liao L."/>
            <person name="Deng X."/>
            <person name="Chen R."/>
            <person name="Gray N.S."/>
            <person name="Yates J.R. III"/>
            <person name="Lee J.D."/>
        </authorList>
    </citation>
    <scope>SUBCELLULAR LOCATION</scope>
    <scope>INTERACTION WITH MDM2 AND MAPK7</scope>
</reference>
<reference key="97">
    <citation type="journal article" date="2013" name="Oncogene">
        <title>The epigenetic regulator UHRF1 promotes ubiquitination-mediated degradation of the tumor-suppressor protein promyelocytic leukemia protein.</title>
        <authorList>
            <person name="Guan D."/>
            <person name="Factor D."/>
            <person name="Liu Y."/>
            <person name="Wang Z."/>
            <person name="Kao H.Y."/>
        </authorList>
    </citation>
    <scope>UBIQUITINATION BY UHRF1</scope>
</reference>
<reference key="98">
    <citation type="journal article" date="2012" name="PLoS ONE">
        <title>Requirement of PML SUMO interacting motif for RNF4- or arsenic trioxide-induced degradation of nuclear PML isoforms.</title>
        <authorList>
            <person name="Maroui M.A."/>
            <person name="Kheddache-Atmane S."/>
            <person name="El Asmi F."/>
            <person name="Dianoux L."/>
            <person name="Aubry M."/>
            <person name="Chelbi-Alix M.K."/>
        </authorList>
    </citation>
    <scope>SUMOYLATION</scope>
    <scope>INTERACTION WITH RNF4</scope>
    <scope>DOMAIN SIM</scope>
</reference>
<reference key="99">
    <citation type="journal article" date="2013" name="Biochem. Biophys. Res. Commun.">
        <title>PML tumor suppressor protein is required for HCV production.</title>
        <authorList>
            <person name="Kuroki M."/>
            <person name="Ariumi Y."/>
            <person name="Hijikata M."/>
            <person name="Ikeda M."/>
            <person name="Dansako H."/>
            <person name="Wakita T."/>
            <person name="Shimotohno K."/>
            <person name="Kato N."/>
        </authorList>
    </citation>
    <scope>FUNCTION</scope>
</reference>
<reference key="100">
    <citation type="journal article" date="2013" name="Blood">
        <title>Selective inhibition of the NLRP3 inflammasome by targeting to promyelocytic leukemia protein in mouse and human.</title>
        <authorList>
            <person name="Lo Y.H."/>
            <person name="Huang Y.W."/>
            <person name="Wu Y.H."/>
            <person name="Tsai C.S."/>
            <person name="Lin Y.C."/>
            <person name="Mo S.T."/>
            <person name="Kuo W.C."/>
            <person name="Chuang Y.T."/>
            <person name="Jiang S.T."/>
            <person name="Shih H.M."/>
            <person name="Lai M.Z."/>
        </authorList>
    </citation>
    <scope>INTERACTION WITH NLRP3</scope>
</reference>
<reference key="101">
    <citation type="journal article" date="2013" name="J. Virol.">
        <title>The adenoviral oncogene E1A-13S interacts with a specific isoform of the tumor suppressor PML to enhance viral transcription.</title>
        <authorList>
            <person name="Berscheminski J."/>
            <person name="Groitl P."/>
            <person name="Dobner T."/>
            <person name="Wimmer P."/>
            <person name="Schreiner S."/>
        </authorList>
    </citation>
    <scope>FUNCTION</scope>
    <scope>INTERACTION WITH HUMAN ADENOVIRUS 2 E1A (MICROBIAL INFECTION)</scope>
</reference>
<reference key="102">
    <citation type="journal article" date="2013" name="Proc. Natl. Acad. Sci. U.S.A.">
        <title>MOZ increases p53 acetylation and premature senescence through its complex formation with PML.</title>
        <authorList>
            <person name="Rokudai S."/>
            <person name="Laptenko O."/>
            <person name="Arnal S.M."/>
            <person name="Taya Y."/>
            <person name="Kitabayashi I."/>
            <person name="Prives C."/>
        </authorList>
    </citation>
    <scope>FUNCTION</scope>
    <scope>INTERACTION WITH KAT6A</scope>
</reference>
<reference key="103">
    <citation type="journal article" date="2014" name="J. Proteomics">
        <title>An enzyme assisted RP-RPLC approach for in-depth analysis of human liver phosphoproteome.</title>
        <authorList>
            <person name="Bian Y."/>
            <person name="Song C."/>
            <person name="Cheng K."/>
            <person name="Dong M."/>
            <person name="Wang F."/>
            <person name="Huang J."/>
            <person name="Sun D."/>
            <person name="Wang L."/>
            <person name="Ye M."/>
            <person name="Zou H."/>
        </authorList>
    </citation>
    <scope>PHOSPHORYLATION [LARGE SCALE ANALYSIS] AT SER-8; SER-36; SER-403; SER-518; SER-527 AND SER-530</scope>
    <scope>IDENTIFICATION BY MASS SPECTROMETRY [LARGE SCALE ANALYSIS]</scope>
    <source>
        <tissue>Liver</tissue>
    </source>
</reference>
<reference key="104">
    <citation type="journal article" date="2014" name="Nat. Struct. Mol. Biol.">
        <title>Uncovering global SUMOylation signaling networks in a site-specific manner.</title>
        <authorList>
            <person name="Hendriks I.A."/>
            <person name="D'Souza R.C."/>
            <person name="Yang B."/>
            <person name="Verlaan-de Vries M."/>
            <person name="Mann M."/>
            <person name="Vertegaal A.C."/>
        </authorList>
    </citation>
    <scope>SUMOYLATION [LARGE SCALE ANALYSIS] AT LYS-65; LYS-380 AND LYS-490</scope>
    <scope>IDENTIFICATION BY MASS SPECTROMETRY [LARGE SCALE ANALYSIS]</scope>
</reference>
<reference key="105">
    <citation type="journal article" date="2015" name="Cell Rep.">
        <title>SUMO-2 orchestrates chromatin modifiers in response to DNA damage.</title>
        <authorList>
            <person name="Hendriks I.A."/>
            <person name="Treffers L.W."/>
            <person name="Verlaan-de Vries M."/>
            <person name="Olsen J.V."/>
            <person name="Vertegaal A.C."/>
        </authorList>
    </citation>
    <scope>SUMOYLATION [LARGE SCALE ANALYSIS] AT LYS-65; LYS-160 AND LYS-490</scope>
    <scope>IDENTIFICATION BY MASS SPECTROMETRY [LARGE SCALE ANALYSIS]</scope>
</reference>
<reference key="106">
    <citation type="journal article" date="2015" name="Mol. Cell. Proteomics">
        <title>System-wide analysis of SUMOylation dynamics in response to replication stress reveals novel small ubiquitin-like modified target proteins and acceptor lysines relevant for genome stability.</title>
        <authorList>
            <person name="Xiao Z."/>
            <person name="Chang J.G."/>
            <person name="Hendriks I.A."/>
            <person name="Sigurdsson J.O."/>
            <person name="Olsen J.V."/>
            <person name="Vertegaal A.C."/>
        </authorList>
    </citation>
    <scope>SUMOYLATION [LARGE SCALE ANALYSIS] AT LYS-65; LYS-160; LYS-380; LYS-394; LYS-478 AND LYS-490</scope>
    <scope>IDENTIFICATION BY MASS SPECTROMETRY [LARGE SCALE ANALYSIS]</scope>
</reference>
<reference key="107">
    <citation type="journal article" date="2016" name="Oncogene">
        <title>PML isoforms IV and V contribute to adenovirus-mediated oncogenic transformation by functionally inhibiting the tumor-suppressor p53.</title>
        <authorList>
            <person name="Wimmer P."/>
            <person name="Berscheminski J."/>
            <person name="Blanchette P."/>
            <person name="Groitl P."/>
            <person name="Branton P.E."/>
            <person name="Hay R.T."/>
            <person name="Dobner T."/>
            <person name="Schreiner S."/>
        </authorList>
    </citation>
    <scope>INTERACTION OF PML-4 AND PML-5 WITH HADV5 E1B-55K (MICROBIAL INFECTION)</scope>
</reference>
<reference key="108">
    <citation type="journal article" date="2016" name="Sci. Rep.">
        <title>SUMO5, a novel poly-sumo isoform, regulates pml nuclear bodies.</title>
        <authorList>
            <person name="Liang Y.C."/>
            <person name="Lee C.C."/>
            <person name="Yao Y.L."/>
            <person name="Lai C.C."/>
            <person name="Schmitz M.L."/>
            <person name="Yang W.M."/>
        </authorList>
    </citation>
    <scope>SUMOYLATION AT LYS-160; LYS-380; LYS-400; LYS-490 AND LYS-497</scope>
    <scope>MUTAGENESIS OF LYS-65; LYS-160; LYS-380; LYS-400; LYS-490 AND LYS-497</scope>
    <scope>SUBCELLULAR LOCATION</scope>
</reference>
<reference key="109">
    <citation type="journal article" date="2017" name="Nat. Commun.">
        <title>HSP70-Hrd1 axis precludes the oncorepressor potential of N-terminal misfolded Blimp-1s in lymphoma cells.</title>
        <authorList>
            <person name="Wang W.F."/>
            <person name="Yan L."/>
            <person name="Liu Z."/>
            <person name="Liu L.X."/>
            <person name="Lin J."/>
            <person name="Liu Z.Y."/>
            <person name="Chen X.P."/>
            <person name="Zhang W."/>
            <person name="Xu Z.Z."/>
            <person name="Shi T."/>
            <person name="Li J.M."/>
            <person name="Zhao Y.L."/>
            <person name="Meng G."/>
            <person name="Xia Y."/>
            <person name="Li J.Y."/>
            <person name="Zhu J."/>
        </authorList>
    </citation>
    <scope>INTERACTION WITH PRDM1</scope>
</reference>
<reference key="110">
    <citation type="journal article" date="2017" name="J. Virol.">
        <title>The Human Cytomegalovirus IE1 Protein Antagonizes PML Nuclear Body-Mediated Intrinsic Immunity via the Inhibition of PML De Novo SUMOylation.</title>
        <authorList>
            <person name="Schilling E.M."/>
            <person name="Scherer M."/>
            <person name="Reuter N."/>
            <person name="Schweininger J."/>
            <person name="Muller Y.A."/>
            <person name="Stamminger T."/>
        </authorList>
    </citation>
    <scope>INHIBITION OF SUMOYLATION BY HHV-5 (MICROBIAL INFECTION)</scope>
    <scope>INTERACTION WITH HHV-5 IMMEDIATE EARLY PROTEIN IE1 (MICROBIAL INFECTION)</scope>
</reference>
<reference key="111">
    <citation type="journal article" date="2017" name="Nat. Struct. Mol. Biol.">
        <title>Site-specific mapping of the human SUMO proteome reveals co-modification with phosphorylation.</title>
        <authorList>
            <person name="Hendriks I.A."/>
            <person name="Lyon D."/>
            <person name="Young C."/>
            <person name="Jensen L.J."/>
            <person name="Vertegaal A.C."/>
            <person name="Nielsen M.L."/>
        </authorList>
    </citation>
    <scope>SUMOYLATION [LARGE SCALE ANALYSIS] AT LYS-65; LYS-160; LYS-380; LYS-394; LYS-401; LYS-460; LYS-476; LYS-478; LYS-487; LYS-490 AND LYS-497</scope>
    <scope>IDENTIFICATION BY MASS SPECTROMETRY [LARGE SCALE ANALYSIS]</scope>
</reference>
<reference key="112">
    <citation type="journal article" date="2017" name="J. Virol.">
        <title>The ND10 Component Promyelocytic Leukemia Protein Acts as an E3 Ligase for SUMOylation of the Major Immediate Early Protein IE1 of Human Cytomegalovirus.</title>
        <authorList>
            <person name="Reuter N."/>
            <person name="Schilling E.M."/>
            <person name="Scherer M."/>
            <person name="Mueller R."/>
            <person name="Stamminger T."/>
        </authorList>
    </citation>
    <scope>FUNCTION</scope>
    <scope>CATALYTIC ACTIVITY</scope>
    <scope>PATHWAY</scope>
    <scope>INTERACTION WITH HHV-5 IMMEDIATE EARLY PROTEIN IE1 (MICROBIAL INFECTION)</scope>
</reference>
<reference key="113">
    <citation type="journal article" date="2021" name="Virol. J.">
        <title>3C protease of enterovirus 71 cleaves promyelocytic leukemia protein and impairs PML-NBs production.</title>
        <authorList>
            <person name="Li Z."/>
            <person name="Wu Y."/>
            <person name="Li H."/>
            <person name="Li W."/>
            <person name="Tan J."/>
            <person name="Qiao W."/>
        </authorList>
    </citation>
    <scope>CLEAVAGE BY ENTEROVIRUS 71 PROTEASE 3C (MICROBIAL INFECTION)</scope>
    <scope>CLEAVAGE SITE</scope>
    <scope>MUTAGENESIS OF GLN-430 AND GLN-444</scope>
</reference>
<reference key="114">
    <citation type="journal article" date="2022" name="Elife">
        <title>The Nse5/6-like SIMC1-SLF2 complex localizes SMC5/6 to viral replication centers.</title>
        <authorList>
            <person name="Oravcova M."/>
            <person name="Nie M."/>
            <person name="Zilio N."/>
            <person name="Maeda S."/>
            <person name="Jami-Alahmadi Y."/>
            <person name="Lazzerini-Denchi E."/>
            <person name="Wohlschlegel J.A."/>
            <person name="Ulrich H.D."/>
            <person name="Otomo T."/>
            <person name="Boddy M.N."/>
        </authorList>
    </citation>
    <scope>SUBCELLULAR LOCATION</scope>
</reference>
<reference key="115">
    <citation type="journal article" date="1995" name="EMBO J.">
        <title>The solution structure of the RING finger domain from the acute promyelocytic leukaemia proto-oncoprotein PML.</title>
        <authorList>
            <person name="Borden K.L.B."/>
            <person name="Boddy M.N."/>
            <person name="Lally J."/>
            <person name="O'Reilly N.J."/>
            <person name="Martin S."/>
            <person name="Howe K."/>
            <person name="Solomon E."/>
            <person name="Freemont P.S."/>
        </authorList>
    </citation>
    <scope>STRUCTURE BY NMR OF 49-104</scope>
</reference>
<gene>
    <name type="primary">PML</name>
    <name type="synonym">MYL</name>
    <name type="synonym">PP8675</name>
    <name type="synonym">RNF71</name>
    <name type="synonym">TRIM19</name>
</gene>
<comment type="function">
    <text evidence="15 16 36">Functions via its association with PML-nuclear bodies (PML-NBs) in a wide range of important cellular processes, including tumor suppression, transcriptional regulation, apoptosis, senescence, DNA damage response, and viral defense mechanisms. Acts as the scaffold of PML-NBs allowing other proteins to shuttle in and out, a process which is regulated by SUMO-mediated modifications and interactions. Inhibits EIF4E-mediated mRNA nuclear export by reducing EIF4E affinity for the 5' 7-methylguanosine (m7G) cap of target mRNAs (PubMed:11500381, PubMed:11575918, PubMed:18391071). Isoform PML-4 has a multifaceted role in the regulation of apoptosis and growth suppression: activates RB1 and inhibits AKT1 via interactions with PP1 and PP2A phosphatases respectively, negatively affects the PI3K pathway by inhibiting MTOR and activating PTEN, and positively regulates p53/TP53 by acting at different levels (by promoting its acetylation and phosphorylation and by inhibiting its MDM2-dependent degradation). Isoform PML-4 also: acts as a transcriptional repressor of TBX2 during cellular senescence and the repression is dependent on a functional RBL2/E2F4 repressor complex, regulates double-strand break repair in gamma-irradiation-induced DNA damage responses via its interaction with WRN, acts as a negative regulator of telomerase by interacting with TERT, and regulates PER2 nuclear localization and circadian function. Isoform PML-6 inhibits specifically the activity of the tetrameric form of PKM. The nuclear isoforms (isoform PML-1, isoform PML-2, isoform PML-3, isoform PML-4 and isoform PML-5) in concert with SATB1 are involved in local chromatin-loop remodeling and gene expression regulation at the MHC-I locus. Isoform PML-2 is required for efficient IFN-gamma induced MHC II gene transcription via regulation of CIITA. Cytoplasmic PML is involved in the regulation of the TGF-beta signaling pathway. PML also regulates transcription activity of ELF4 and can act as an important mediator for TNF-alpha- and IFN-alpha-mediated inhibition of endothelial cell network formation and migration.</text>
</comment>
<comment type="function">
    <text evidence="46 71">Exhibits antiviral activity against both DNA and RNA viruses. The antiviral activity can involve one or several isoform(s) and can be enhanced by the permanent PML-NB-associated protein DAXX or by the recruitment of p53/TP53 within these structures. Isoform PML-4 restricts varicella zoster virus (VZV) via sequestration of virion capsids in PML-NBs thereby preventing their nuclear egress and inhibiting formation of infectious virus particles. The sumoylated isoform PML-4 restricts rabies virus by inhibiting viral mRNA and protein synthesis. The cytoplasmic isoform PML-14 can restrict herpes simplex virus-1 (HHV-1) replication by sequestering the viral E3 ubiquitin-protein ligase ICP0 in the cytoplasm. Isoform PML-6 shows restriction activity towards human cytomegalovirus (HHV-5) and influenza A virus strains PR8(H1N1) and ST364(H3N2). Sumoylated isoform PML-4 and isoform PML-12 show antiviral activity against encephalomyocarditis virus (EMCV) by promoting nuclear sequestration of viral polymerase (P3D-POL) within PML NBs. Isoform PML-3 exhibits antiviral activity against poliovirus by inducing apoptosis in infected cells through the recruitment and the activation of p53/TP53 in the PML-NBs. Isoform PML-3 represses human foamy virus (HFV) transcription by complexing the HFV transactivator, bel1/tas, preventing its binding to viral DNA. PML may positively regulate infectious hepatitis C viral (HCV) production and isoform PML-2 may enhance adenovirus transcription. Functions as an E3 SUMO-protein ligase that sumoylates (HHV-5) immediate early protein IE1, thereby participating in the antiviral response (PubMed:20972456, PubMed:28250117). Isoforms PML-3 and PML-6 display the highest levels of sumoylation activity (PubMed:20972456, PubMed:28250117).</text>
</comment>
<comment type="pathway">
    <text evidence="46 71">Protein modification; protein sumoylation.</text>
</comment>
<comment type="subunit">
    <text evidence="8 9 10 12 15 16 17 18 20 21 22 23 24 25 27 28 29 30 32 33 35 39 40 41 42 43 49 52 53 54 55 56 57 58 61 63 64 66 67 72 76">Key component of PML bodies. PML bodies are formed by the interaction of PML homodimers (via SUMO-binding motif) with sumoylated PML, leading to the assembly of higher oligomers. Several types of PML bodies have been observed. PML bodies can form hollow spheres that can sequester target proteins inside. Interacts (via SUMO-binding motif) with sumoylated proteins. Interacts (via C-terminus) with p53/TP53. Recruits p53/TP53 and CHEK2 into PML bodies, which promotes p53/TP53 phosphorylation at 'Ser-20' and prevents its proteasomal degradation. Interacts with MDM2, and sequesters MDM2 in the nucleolus, thereby preventing ubiquitination of p53/TP53. Interaction with PML-RARA oncoprotein and certain viral proteins causes disassembly of PML bodies and abolishes the normal PML function. Interacts with HIPK2, TERT, SIRT1, TOPBP1, TRIM27 and TRIM69. Interacts with ELF4 (via C-terminus). Interacts with ITPR3. Interacts (in the cytoplasm) with TGFBR1, TGFBR2 and PKM. Interacts (via the coiled-coil domain and when sumoylated) with SATB1. Interacts with UBE2I; the interaction is enhanced by arsenic binding. Interacts (PML-RARA oncoprotein, via the coiled-coil domain) with UBE2I; the interaction is enhanced by arsenic binding and is required for PML-RARA oncoprotein sumoylation and inhibition of RARA transactivational activity. Interacts with RB1, PPP1A, SMAD2, SMAD3, DAXX, RPL11 and MTOR. Interacts with PPARGC1A and KAT2A. Interacts with CSNK2A1 and CSNK2A3. Interacts with ANKRD2; the interaction is direct. Interacts (via SUMO-interacting motif) with sumoylated MORC3 (PubMed:20501696). Isoform PML-1, isoform PML-2, isoform PML-3, isoform PML-4, isoform PML-5 and isoform PML-6 interact with RNF4. Isoform PML-1 interacts with NLRP3. Isoform PML-1, isoform PML-2, isoform PML-3, isoform PML-4 and isoform PML-5 interact with MAGEA2, RBL2, PER2 and E2F4. Isoform PML-2 interacts with CIITA. Isoform PML-2, isoform PML-3 and isoform PML-4 interact with TBX2. Isoform PML-4 interacts with RANBP2, HDAC7, KAT6A, WRN, PIN1, TBX3 and phosphorylated MAPK1/ERK2. Isoform PML-4 interacts with the CTNNB1 and TCF7L2/TCF4 complex. Isoform PML-4 preferentially interacts with MAPK7/BMK1 although other isoforms (isoform PML-1, isoform PML-2, isoform PML-3 and isoform PML-6) also interact with it. Isoform PML-12 interacts with PIAS1, PIAS2 (isoform PIAS2-alpha) and CSNK2A1/CK2. Interacts with TRIM16. Interacts with PRDM1/Blimp-1 (PubMed:28842558). Interacts (via RING-type zinc finger) with EIF4E; the interaction results in conformational changes of both interacting proteins and reduces EIF4E affinity for the 5' m7G cap of mRNA, thus reducing EIF4E-mediated mRNA nuclear export (PubMed:11500381, PubMed:11575918).</text>
</comment>
<comment type="subunit">
    <text evidence="75">(Microbial infection) Interacts with Lassa virus Z protein and rabies virus phosphoprotein.</text>
</comment>
<comment type="subunit">
    <text evidence="62">(Microbial infection) Isoform PML-1 interacts with herpes simplex virus-1/HHV-1 ICP0.</text>
</comment>
<comment type="subunit">
    <text evidence="65">(Microbial infection) Isoform PML-2 interacts with human adenovirus 2 E1A and this interaction stimulates E1A-dependent transcriptional activation.</text>
</comment>
<comment type="subunit">
    <text evidence="48">(Microbial infection) Isoform PML-4 interacts with VZV capsid protein VP26/ORF23 capsid protein.</text>
</comment>
<comment type="subunit">
    <text evidence="51">(Microbial infection) The sumoylated isoform PML-4 interacts with encephalomyocarditis virus (EMCV) RNA-directed RNA polymerase 3D-POL (P3D-POL).</text>
</comment>
<comment type="subunit">
    <text evidence="59">(Microbial infection) Isoform PML-6 interacts with moloney murine leukemia virus (MoMLV) integrase (IN) and reverse transcriptase (RT).</text>
</comment>
<comment type="subunit">
    <text evidence="44 65 68">(Microbial infection) Isoform PML-4 and isoform PML-5 interact with human adenovirus 5 E1B-55K protein; these interactions promote efficient subnuclear targeting of E1B-55K to PML nuclear bodies.</text>
</comment>
<comment type="subunit">
    <text evidence="14">(Microbial infection) Isoform PML-3 interacts (via RING-type zinc finger) with human foamy virus bel1/tas and bet.</text>
</comment>
<comment type="subunit">
    <text evidence="70 71 88">(Microbial infection) Interacts with human cytomegalovirus (HHV-5) immediate early protein IE1; this interaction mediates PML desumoylation and PML-mediated sumoylation of IE1.</text>
</comment>
<comment type="interaction">
    <interactant intactId="EBI-295890">
        <id>P29590</id>
    </interactant>
    <interactant intactId="EBI-347804">
        <id>P68400</id>
        <label>CSNK2A1</label>
    </interactant>
    <organismsDiffer>false</organismsDiffer>
    <experiments>2</experiments>
</comment>
<comment type="interaction">
    <interactant intactId="EBI-295890">
        <id>P29590</id>
    </interactant>
    <interactant intactId="EBI-77321">
        <id>Q9UER7</id>
        <label>DAXX</label>
    </interactant>
    <organismsDiffer>false</organismsDiffer>
    <experiments>6</experiments>
</comment>
<comment type="interaction">
    <interactant intactId="EBI-295890">
        <id>P29590</id>
    </interactant>
    <interactant intactId="EBI-494743">
        <id>P25445</id>
        <label>FAS</label>
    </interactant>
    <organismsDiffer>false</organismsDiffer>
    <experiments>4</experiments>
</comment>
<comment type="interaction">
    <interactant intactId="EBI-295890">
        <id>P29590</id>
    </interactant>
    <interactant intactId="EBI-714379">
        <id>Q9Y2M5</id>
        <label>KLHL20</label>
    </interactant>
    <organismsDiffer>false</organismsDiffer>
    <experiments>11</experiments>
</comment>
<comment type="interaction">
    <interactant intactId="EBI-295890">
        <id>P29590</id>
    </interactant>
    <interactant intactId="EBI-1213983">
        <id>Q13164</id>
        <label>MAPK7</label>
    </interactant>
    <organismsDiffer>false</organismsDiffer>
    <experiments>6</experiments>
</comment>
<comment type="interaction">
    <interactant intactId="EBI-295890">
        <id>P29590</id>
    </interactant>
    <interactant intactId="EBI-389668">
        <id>Q00987</id>
        <label>MDM2</label>
    </interactant>
    <organismsDiffer>false</organismsDiffer>
    <experiments>6</experiments>
</comment>
<comment type="interaction">
    <interactant intactId="EBI-295890">
        <id>P29590</id>
    </interactant>
    <interactant intactId="EBI-1054296">
        <id>O15055</id>
        <label>PER2</label>
    </interactant>
    <organismsDiffer>false</organismsDiffer>
    <experiments>3</experiments>
</comment>
<comment type="interaction">
    <interactant intactId="EBI-295890">
        <id>P29590</id>
    </interactant>
    <interactant intactId="EBI-348380">
        <id>P25788</id>
        <label>PSMA3</label>
    </interactant>
    <organismsDiffer>false</organismsDiffer>
    <experiments>2</experiments>
</comment>
<comment type="interaction">
    <interactant intactId="EBI-295890">
        <id>P29590</id>
    </interactant>
    <interactant intactId="EBI-80140">
        <id>P63165</id>
        <label>SUMO1</label>
    </interactant>
    <organismsDiffer>false</organismsDiffer>
    <experiments>6</experiments>
</comment>
<comment type="interaction">
    <interactant intactId="EBI-295890">
        <id>P29590</id>
    </interactant>
    <interactant intactId="EBI-2853051">
        <id>Q13207</id>
        <label>TBX2</label>
    </interactant>
    <organismsDiffer>false</organismsDiffer>
    <experiments>2</experiments>
</comment>
<comment type="interaction">
    <interactant intactId="EBI-295890">
        <id>P29590</id>
    </interactant>
    <interactant intactId="EBI-310727">
        <id>Q6N021</id>
        <label>TET2</label>
    </interactant>
    <organismsDiffer>false</organismsDiffer>
    <experiments>2</experiments>
</comment>
<comment type="interaction">
    <interactant intactId="EBI-295890">
        <id>P29590</id>
    </interactant>
    <interactant intactId="EBI-714215">
        <id>Q15583</id>
        <label>TGIF1</label>
    </interactant>
    <organismsDiffer>false</organismsDiffer>
    <experiments>3</experiments>
</comment>
<comment type="interaction">
    <interactant intactId="EBI-295890">
        <id>P29590</id>
    </interactant>
    <interactant intactId="EBI-366083">
        <id>P04637</id>
        <label>TP53</label>
    </interactant>
    <organismsDiffer>false</organismsDiffer>
    <experiments>4</experiments>
</comment>
<comment type="interaction">
    <interactant intactId="EBI-295890">
        <id>P29590</id>
    </interactant>
    <interactant intactId="EBI-356498">
        <id>P62258</id>
        <label>YWHAE</label>
    </interactant>
    <organismsDiffer>false</organismsDiffer>
    <experiments>2</experiments>
</comment>
<comment type="interaction">
    <interactant intactId="EBI-295890">
        <id>P29590</id>
    </interactant>
    <interactant intactId="EBI-711925">
        <id>Q05516</id>
        <label>ZBTB16</label>
    </interactant>
    <organismsDiffer>false</organismsDiffer>
    <experiments>7</experiments>
</comment>
<comment type="interaction">
    <interactant intactId="EBI-295890">
        <id>P29590</id>
    </interactant>
    <interactant intactId="EBI-6692904">
        <id>Q8UN00</id>
        <label>gag-pro-pol</label>
    </interactant>
    <organismsDiffer>true</organismsDiffer>
    <experiments>4</experiments>
</comment>
<comment type="interaction">
    <interactant intactId="EBI-295890">
        <id>P29590</id>
    </interactant>
    <interactant intactId="EBI-1927377">
        <id>P03243-1</id>
    </interactant>
    <organismsDiffer>true</organismsDiffer>
    <experiments>3</experiments>
</comment>
<comment type="interaction">
    <interactant intactId="EBI-295890">
        <id>P29590</id>
    </interactant>
    <interactant intactId="EBI-6377335">
        <id>PRO_0000037566</id>
        <dbReference type="UniProtKB" id="P27958"/>
    </interactant>
    <organismsDiffer>true</organismsDiffer>
    <experiments>6</experiments>
</comment>
<comment type="interaction">
    <interactant intactId="EBI-303992">
        <id>P29590-1</id>
    </interactant>
    <interactant intactId="EBI-714379">
        <id>Q9Y2M5</id>
        <label>KLHL20</label>
    </interactant>
    <organismsDiffer>false</organismsDiffer>
    <experiments>3</experiments>
</comment>
<comment type="interaction">
    <interactant intactId="EBI-303996">
        <id>P29590-2</id>
    </interactant>
    <interactant intactId="EBI-1927377">
        <id>P03243-1</id>
    </interactant>
    <organismsDiffer>true</organismsDiffer>
    <experiments>3</experiments>
</comment>
<comment type="interaction">
    <interactant intactId="EBI-8099068">
        <id>P29590-3</id>
    </interactant>
    <interactant intactId="EBI-6398911">
        <id>P04489</id>
    </interactant>
    <organismsDiffer>true</organismsDiffer>
    <experiments>4</experiments>
</comment>
<comment type="interaction">
    <interactant intactId="EBI-304008">
        <id>P29590-5</id>
    </interactant>
    <interactant intactId="EBI-389668">
        <id>Q00987</id>
        <label>MDM2</label>
    </interactant>
    <organismsDiffer>false</organismsDiffer>
    <experiments>6</experiments>
</comment>
<comment type="interaction">
    <interactant intactId="EBI-304008">
        <id>P29590-5</id>
    </interactant>
    <interactant intactId="EBI-1772203">
        <id>O14746</id>
        <label>TERT</label>
    </interactant>
    <organismsDiffer>false</organismsDiffer>
    <experiments>7</experiments>
</comment>
<comment type="interaction">
    <interactant intactId="EBI-304008">
        <id>P29590-5</id>
    </interactant>
    <interactant intactId="EBI-711925">
        <id>Q05516</id>
        <label>ZBTB16</label>
    </interactant>
    <organismsDiffer>false</organismsDiffer>
    <experiments>2</experiments>
</comment>
<comment type="interaction">
    <interactant intactId="EBI-304008">
        <id>P29590-5</id>
    </interactant>
    <interactant intactId="EBI-1927377">
        <id>P03243-1</id>
    </interactant>
    <organismsDiffer>true</organismsDiffer>
    <experiments>3</experiments>
</comment>
<comment type="interaction">
    <interactant intactId="EBI-304008">
        <id>P29590-5</id>
    </interactant>
    <interactant intactId="EBI-6726189">
        <id>PRO_0000039791</id>
        <dbReference type="UniProtKB" id="P03304"/>
    </interactant>
    <organismsDiffer>true</organismsDiffer>
    <experiments>3</experiments>
</comment>
<comment type="interaction">
    <interactant intactId="EBI-12368281">
        <id>P29590-13</id>
    </interactant>
    <interactant intactId="EBI-12368281">
        <id>P29590-13</id>
        <label>PML</label>
    </interactant>
    <organismsDiffer>false</organismsDiffer>
    <experiments>3</experiments>
</comment>
<comment type="subcellular location">
    <subcellularLocation>
        <location>Nucleus</location>
    </subcellularLocation>
    <subcellularLocation>
        <location>Nucleus</location>
        <location>Nucleoplasm</location>
    </subcellularLocation>
    <subcellularLocation>
        <location evidence="69">Cytoplasm</location>
    </subcellularLocation>
    <subcellularLocation>
        <location evidence="42 45 69 74">Nucleus</location>
        <location evidence="42 45 69 74">PML body</location>
    </subcellularLocation>
    <subcellularLocation>
        <location>Nucleus</location>
        <location>Nucleolus</location>
    </subcellularLocation>
    <subcellularLocation>
        <location evidence="1">Endoplasmic reticulum membrane</location>
        <topology evidence="1">Peripheral membrane protein</topology>
        <orientation evidence="1">Cytoplasmic side</orientation>
    </subcellularLocation>
    <subcellularLocation>
        <location>Early endosome membrane</location>
        <topology>Peripheral membrane protein</topology>
        <orientation>Cytoplasmic side</orientation>
    </subcellularLocation>
    <text>Isoform PML-1 can shuttle between the nucleus and cytoplasm. Isoform PML-2, isoform PML-3, isoform PML-4, isoform PML-5 and isoform PML-6 are nuclear isoforms whereas isoform PML-7 and isoform PML-14 lacking the nuclear localization signal are cytoplasmic isoforms. Detected in the nucleolus after DNA damage. Acetylation at Lys-487 is essential for its nuclear localization. Within the nucleus, most of PML is expressed in the diffuse nuclear fraction of the nucleoplasm and only a small fraction is found in the matrix-associated nuclear bodies (PML-NBs). The transfer of PML from the nucleoplasm to PML-NBs depends on its phosphorylation and sumoylation. The B1 box and the RING finger are also required for the localization in PML-NBs. Also found in specific membrane structures termed mitochondria-associated membranes (MAMs) which connect the endoplasmic reticulum (ER) and the mitochondria. Sequestered in the cytoplasm by interaction with rabies virus phosphoprotein.</text>
</comment>
<comment type="alternative products">
    <event type="alternative splicing"/>
    <isoform>
        <id>P29590-1</id>
        <name>PML-1</name>
        <name>PML-I</name>
        <name>TRIM19alpha</name>
        <sequence type="displayed"/>
    </isoform>
    <isoform>
        <id>P29590-8</id>
        <name>PML-2</name>
        <name>PML-II</name>
        <name>TRIM19kappa</name>
        <sequence type="described" ref="VSP_040595"/>
    </isoform>
    <isoform>
        <id>P29590-9</id>
        <name>PML-3</name>
        <name>PML-III</name>
        <sequence type="described" ref="VSP_040596 VSP_040597"/>
    </isoform>
    <isoform>
        <id>P29590-5</id>
        <name>PML-4</name>
        <name>PML-IV</name>
        <name>PML-X</name>
        <name>TRIM19zeta</name>
        <sequence type="described" ref="VSP_005744 VSP_005745"/>
    </isoform>
    <isoform>
        <id>P29590-2</id>
        <name>PML-5</name>
        <name>PML-2</name>
        <name>PML-V</name>
        <name>TRIM19beta</name>
        <sequence type="described" ref="VSP_005739 VSP_005740"/>
    </isoform>
    <isoform>
        <id>P29590-4</id>
        <name>PML-6</name>
        <name>PML-3B</name>
        <name>PML-VI</name>
        <name>TRIM19epsilon</name>
        <sequence type="described" ref="VSP_005742 VSP_005743"/>
    </isoform>
    <isoform>
        <id>P29590-10</id>
        <name>PML-7</name>
        <name>PML-VII</name>
        <name>TRIM19theta</name>
        <sequence type="described" ref="VSP_040591 VSP_040594"/>
    </isoform>
    <isoform>
        <id>P29590-3</id>
        <name>PML-8</name>
        <name>PML-2G</name>
        <name>PML-IIG</name>
        <name>TRIM19gamma</name>
        <sequence type="described" ref="VSP_005741"/>
    </isoform>
    <isoform>
        <id>P29590-11</id>
        <name>PML-11</name>
        <name>PML-1A</name>
        <name>PML-IA</name>
        <sequence type="described" ref="VSP_040590"/>
    </isoform>
    <isoform>
        <id>P29590-12</id>
        <name>PML-12</name>
        <name>PML-4A</name>
        <name>PML-IVA</name>
        <name>TRIM19lambda</name>
        <sequence type="described" ref="VSP_040590 VSP_005744 VSP_005745"/>
    </isoform>
    <isoform>
        <id>P29590-13</id>
        <name>PML-13</name>
        <name>PML-2A</name>
        <name>PML-IIA</name>
        <sequence type="described" ref="VSP_040590 VSP_040595"/>
    </isoform>
    <isoform>
        <id>P29590-14</id>
        <name>PML-14</name>
        <name>PML-6B</name>
        <name>PML-VIB</name>
        <name>TRIM19eta</name>
        <name>TRIM19iota</name>
        <sequence type="described" ref="VSP_040592 VSP_040593"/>
    </isoform>
</comment>
<comment type="induction">
    <text>By interferons alpha, beta and gamma. Up-regulated by IRF3 and p53/TP53.</text>
</comment>
<comment type="domain">
    <text evidence="35">The coiled-coil domain mediates a strong homo/multidimerization activity essential for core assembly of PML-NBs. Interacts with PKM via its coiled-coil domain (PubMed:18298799).</text>
</comment>
<comment type="domain">
    <text evidence="57">The B box-type zinc binding domain and the coiled-coil domain mediate its interaction with PIAS1.</text>
</comment>
<comment type="domain">
    <text evidence="41">Binds arsenic via the RING-type zinc finger.</text>
</comment>
<comment type="domain">
    <text evidence="71">(Microbial infection) The RING-type zinc finger is necessary for the sumoylation of human cytomegalovirus (HHV-5) immediate early protein IE1.</text>
</comment>
<comment type="domain">
    <text evidence="60">The unique C-terminal domains of isoform PML-2 and isoform PML-5 play an important role in regulating the localization, assembly dynamics, and functions of PML-NBs.</text>
</comment>
<comment type="domain">
    <text evidence="64">The Sumo interaction motif (SIM) is required for efficient ubiquitination, recruitment of proteasome components within PML-NBs and PML degradation in response to arsenic trioxide.</text>
</comment>
<comment type="PTM">
    <text evidence="2 37 50 53">Ubiquitinated; mediated by RNF4, RNF111, UHRF1, UBE3A/E6AP, BCR(KLHL20) E3 ubiquitin ligase complex E3 ligase complex, SIAH1 or SIAH2 and leading to subsequent proteasomal degradation (PubMed:18408734, PubMed:21840486, PubMed:22033920). Ubiquitination by BCR(KLHL20) E3 ubiquitin ligase complex E3 ligase complex requires CDK1/2-mediated phosphorylation at Ser-518 which in turn is recognized by prolyl-isopeptidase PIN1 and PIN1-catalyzed isomerization further potentiates PML interaction with KLHL20 (PubMed:21840486, PubMed:22033920). 'Lys-6'-, 'Lys-11'-, 'Lys-48'- and 'Lys-63'-linked polyubiquitination by RNF4 is polysumoylation-dependent (PubMed:18408734). Ubiquitination by RNF111 is polysumoylation-dependent (By similarity).</text>
</comment>
<comment type="PTM">
    <text evidence="19 37 47 55 57 69 77">Sumoylation regulates PML's: stability in response to extracellular or intracellular stimuli, transcription directly and indirectly, through sequestration of or dissociation of the transcription factors from PML-NBs, ability to regulate apoptosis and its anti-viral activities. It is also essential for: maintaining proper PML nuclear bodies (PML-NBs) structure and normal function, recruitment of components of PML-NBs, the turnover and retention of PML in PML-NBs and the integrity of PML-NBs. Undergoes 'Lys-11'-linked sumoylation. Sumoylation on all three sites (Lys-65, Lys-160 and Lys-490) is required for nuclear body formation. Sumoylation on Lys-160 is a prerequisite for sumoylation on Lys-65. Lys-65 and Lys-160 are sumoylated by PISA1 and PIAS2. PIAS1-mediated sumoylation of PML promotes its interaction with CSNK2A1/CK2 and phosphorylation at Ser-565 which in turn triggers its ubiquitin-mediated degradation. PIAS1-mediated sumoylation of PML-RARA promotes its ubiquitin-mediated degradation. The PML-RARA fusion protein requires the coiled-coil domain for sumoylation. Sumoylation at Lys-490 by RANBP2 is essential for the proper assembly of PML-NBs. SUMO1P1/SUMO5 conjugated PML at Lys-160, Lys-380, Lys-400, Lys-490 and Lys-497, but Lys-380, Lys-400 and Lys-497 are not key acceptor lysines. SUMO1P1/SUMO5 forms polymeric chain on Lys-160 of PML by successive conjugation at 'Lys-18'; facilitating recruitment of PML-NB components, which enlarges PML. SUMO1P1/SUMO5 conjugation of PML increases SUMO2/3 conjugation, which leads to the recruitment of RNF4 and ubiquitin-dependent disintegration of PML-NBs. SUMO1P1/SUMO5 monoconjugated Lys-490 (PubMed:27211601). DNA damage triggers its sumoylation while some but not all viral infections can abolish sumoylation. Desumoylated by SENP1, SENP2, SENP3, SENP5 and SENP6 (PubMed:12419228, PubMed:21148299, PubMed:27211601). Arsenic induces PML and PML-RARA polysumoylation and their subsequent RNF4-dependent ubiquitination and proteasomal degradation, and is used as treatment in acute promyelocytic leukemia (APL). The nuclear isoforms (isoform PML-1, isoform PML-2, isoform PML-3, isoform PML-4, isoform PML-5 and isoform PML-6) show an increased sumoylation in response to arsenic trioxide. The cytoplasmic isoform PML-7 is not sumoylated.</text>
</comment>
<comment type="PTM">
    <text evidence="18 27 39 45 50 53 57">Phosphorylation is a major regulatory mechanism that controls PML protein abundance and the number and size of PML nuclear bodies (PML-NBs). Phosphorylated in response to DNA damage, probably by ATR (PubMed:15195100). HIPK2-mediated phosphorylation at Ser-8, Ser-36 and Ser-38 leads to increased accumulation of PML protein and its sumoylation and is required for the maximal pro-apoptotic activity of PML after DNA damage (PubMed:19015637). CHEK2-mediated phosphorylation at Ser-117 is important for PML-mediated apoptosis following DNA damage (PubMed:12402044). MAPK1-mediated phosphorylations at Ser-403, Ser-505, Ser-527 and Ser-530 and CDK1/2-mediated phosphorylation at Ser-518 promote PIN1-dependent PML degradation (PubMed:21840486, PubMed:22033920). CK2-mediated phosphorylation at Ser-565 primes PML ubiquitination via an unidentified ubiquitin ligase (PubMed:20719947, PubMed:22406621).</text>
</comment>
<comment type="PTM">
    <text evidence="45">(Microbial infection) Upon infection with Epstein-Barr virus, phosphorylated by CK2. Viral EBNA1 increases the association of CK2 with PML proteins, which increases PML phosphorylation by CK2, triggering the USP7-dependent polyubiquitylation and degradation of PML.</text>
</comment>
<comment type="PTM">
    <text evidence="38 56">Acetylation at Lys-487 is essential for its nuclear localization. Deacetylated at Lys-487 by SIRT1 and this deacetylation promotes PML control of PER2 nuclear localization.</text>
</comment>
<comment type="PTM">
    <text evidence="7 26 70">(Microbial infection) Immediate early protein IE1 of human cytomegalovirus (HHV-5) interferes with the sumoylation of PML (PubMed:10233977, PubMed:15163746, PubMed:27903803). Immediate early protein IE1 inhibits PML de novo sumoylation (PubMed:27903803).</text>
</comment>
<comment type="PTM">
    <text evidence="73">(Microbial infection) Cleaved at two different sites by enterovirus 71 protease 3C, leading to impaired PML-Nuclear bodies formation.</text>
</comment>
<comment type="disease">
    <text evidence="31 34">A chromosomal aberration involving PML may be a cause of acute promyelocytic leukemia (APL). Translocation t(15;17)(q21;q21) with RARA. The PML breakpoints (type A and type B) lie on either side of an alternatively spliced exon.</text>
</comment>
<comment type="miscellaneous">
    <molecule>Isoform PML-8</molecule>
    <text evidence="87">Non-canonical splice sites. Might alternatively represent a polymorphic variation.</text>
</comment>
<comment type="sequence caution" evidence="87">
    <conflict type="erroneous initiation">
        <sequence resource="EMBL-CDS" id="AAA60351"/>
    </conflict>
    <text>Truncated N-terminus.</text>
</comment>
<comment type="sequence caution" evidence="87">
    <conflict type="erroneous initiation">
        <sequence resource="EMBL-CDS" id="AAA60352"/>
    </conflict>
    <text>Truncated N-terminus.</text>
</comment>
<comment type="sequence caution" evidence="87">
    <conflict type="erroneous initiation">
        <sequence resource="EMBL-CDS" id="AAA60388"/>
    </conflict>
    <text>Truncated N-terminus.</text>
</comment>
<comment type="sequence caution" evidence="87">
    <conflict type="erroneous initiation">
        <sequence resource="EMBL-CDS" id="AAA60390"/>
    </conflict>
    <text>Truncated N-terminus.</text>
</comment>
<comment type="sequence caution" evidence="87">
    <conflict type="miscellaneous discrepancy">
        <sequence resource="EMBL-CDS" id="BAB62809"/>
    </conflict>
    <text>Chimeric cDNA.</text>
</comment>
<comment type="sequence caution" evidence="87">
    <conflict type="erroneous initiation">
        <sequence resource="EMBL-CDS" id="BAD92648"/>
    </conflict>
    <text>Extended N-terminus.</text>
</comment>
<comment type="online information" name="Atlas of Genetics and Cytogenetics in Oncology and Haematology">
    <link uri="https://atlasgeneticsoncology.org/gene/41/PML"/>
</comment>
<proteinExistence type="evidence at protein level"/>
<accession>P29590</accession>
<accession>E9PBR7</accession>
<accession>P29591</accession>
<accession>P29592</accession>
<accession>P29593</accession>
<accession>Q00755</accession>
<accession>Q15959</accession>
<accession>Q59FP9</accession>
<accession>Q8WUA0</accession>
<accession>Q96S41</accession>
<accession>Q9BPW2</accession>
<accession>Q9BWP7</accession>
<accession>Q9BZX6</accession>
<accession>Q9BZX7</accession>
<accession>Q9BZX8</accession>
<accession>Q9BZX9</accession>
<accession>Q9BZY0</accession>
<accession>Q9BZY2</accession>
<accession>Q9BZY3</accession>
<evidence type="ECO:0000250" key="1"/>
<evidence type="ECO:0000250" key="2">
    <source>
        <dbReference type="UniProtKB" id="Q60953"/>
    </source>
</evidence>
<evidence type="ECO:0000255" key="3"/>
<evidence type="ECO:0000255" key="4">
    <source>
        <dbReference type="PROSITE-ProRule" id="PRU00024"/>
    </source>
</evidence>
<evidence type="ECO:0000255" key="5">
    <source>
        <dbReference type="PROSITE-ProRule" id="PRU00175"/>
    </source>
</evidence>
<evidence type="ECO:0000256" key="6">
    <source>
        <dbReference type="SAM" id="MobiDB-lite"/>
    </source>
</evidence>
<evidence type="ECO:0000269" key="7">
    <source>
    </source>
</evidence>
<evidence type="ECO:0000269" key="8">
    <source>
    </source>
</evidence>
<evidence type="ECO:0000269" key="9">
    <source>
    </source>
</evidence>
<evidence type="ECO:0000269" key="10">
    <source>
    </source>
</evidence>
<evidence type="ECO:0000269" key="11">
    <source>
    </source>
</evidence>
<evidence type="ECO:0000269" key="12">
    <source>
    </source>
</evidence>
<evidence type="ECO:0000269" key="13">
    <source>
    </source>
</evidence>
<evidence type="ECO:0000269" key="14">
    <source>
    </source>
</evidence>
<evidence type="ECO:0000269" key="15">
    <source>
    </source>
</evidence>
<evidence type="ECO:0000269" key="16">
    <source>
    </source>
</evidence>
<evidence type="ECO:0000269" key="17">
    <source>
    </source>
</evidence>
<evidence type="ECO:0000269" key="18">
    <source>
    </source>
</evidence>
<evidence type="ECO:0000269" key="19">
    <source>
    </source>
</evidence>
<evidence type="ECO:0000269" key="20">
    <source>
    </source>
</evidence>
<evidence type="ECO:0000269" key="21">
    <source>
    </source>
</evidence>
<evidence type="ECO:0000269" key="22">
    <source>
    </source>
</evidence>
<evidence type="ECO:0000269" key="23">
    <source>
    </source>
</evidence>
<evidence type="ECO:0000269" key="24">
    <source>
    </source>
</evidence>
<evidence type="ECO:0000269" key="25">
    <source>
    </source>
</evidence>
<evidence type="ECO:0000269" key="26">
    <source>
    </source>
</evidence>
<evidence type="ECO:0000269" key="27">
    <source>
    </source>
</evidence>
<evidence type="ECO:0000269" key="28">
    <source>
    </source>
</evidence>
<evidence type="ECO:0000269" key="29">
    <source>
    </source>
</evidence>
<evidence type="ECO:0000269" key="30">
    <source>
    </source>
</evidence>
<evidence type="ECO:0000269" key="31">
    <source>
    </source>
</evidence>
<evidence type="ECO:0000269" key="32">
    <source>
    </source>
</evidence>
<evidence type="ECO:0000269" key="33">
    <source>
    </source>
</evidence>
<evidence type="ECO:0000269" key="34">
    <source>
    </source>
</evidence>
<evidence type="ECO:0000269" key="35">
    <source>
    </source>
</evidence>
<evidence type="ECO:0000269" key="36">
    <source>
    </source>
</evidence>
<evidence type="ECO:0000269" key="37">
    <source>
    </source>
</evidence>
<evidence type="ECO:0000269" key="38">
    <source>
    </source>
</evidence>
<evidence type="ECO:0000269" key="39">
    <source>
    </source>
</evidence>
<evidence type="ECO:0000269" key="40">
    <source>
    </source>
</evidence>
<evidence type="ECO:0000269" key="41">
    <source>
    </source>
</evidence>
<evidence type="ECO:0000269" key="42">
    <source>
    </source>
</evidence>
<evidence type="ECO:0000269" key="43">
    <source>
    </source>
</evidence>
<evidence type="ECO:0000269" key="44">
    <source>
    </source>
</evidence>
<evidence type="ECO:0000269" key="45">
    <source>
    </source>
</evidence>
<evidence type="ECO:0000269" key="46">
    <source>
    </source>
</evidence>
<evidence type="ECO:0000269" key="47">
    <source>
    </source>
</evidence>
<evidence type="ECO:0000269" key="48">
    <source>
    </source>
</evidence>
<evidence type="ECO:0000269" key="49">
    <source>
    </source>
</evidence>
<evidence type="ECO:0000269" key="50">
    <source>
    </source>
</evidence>
<evidence type="ECO:0000269" key="51">
    <source>
    </source>
</evidence>
<evidence type="ECO:0000269" key="52">
    <source>
    </source>
</evidence>
<evidence type="ECO:0000269" key="53">
    <source>
    </source>
</evidence>
<evidence type="ECO:0000269" key="54">
    <source>
    </source>
</evidence>
<evidence type="ECO:0000269" key="55">
    <source>
    </source>
</evidence>
<evidence type="ECO:0000269" key="56">
    <source>
    </source>
</evidence>
<evidence type="ECO:0000269" key="57">
    <source>
    </source>
</evidence>
<evidence type="ECO:0000269" key="58">
    <source>
    </source>
</evidence>
<evidence type="ECO:0000269" key="59">
    <source>
    </source>
</evidence>
<evidence type="ECO:0000269" key="60">
    <source>
    </source>
</evidence>
<evidence type="ECO:0000269" key="61">
    <source>
    </source>
</evidence>
<evidence type="ECO:0000269" key="62">
    <source>
    </source>
</evidence>
<evidence type="ECO:0000269" key="63">
    <source>
    </source>
</evidence>
<evidence type="ECO:0000269" key="64">
    <source>
    </source>
</evidence>
<evidence type="ECO:0000269" key="65">
    <source>
    </source>
</evidence>
<evidence type="ECO:0000269" key="66">
    <source>
    </source>
</evidence>
<evidence type="ECO:0000269" key="67">
    <source>
    </source>
</evidence>
<evidence type="ECO:0000269" key="68">
    <source>
    </source>
</evidence>
<evidence type="ECO:0000269" key="69">
    <source>
    </source>
</evidence>
<evidence type="ECO:0000269" key="70">
    <source>
    </source>
</evidence>
<evidence type="ECO:0000269" key="71">
    <source>
    </source>
</evidence>
<evidence type="ECO:0000269" key="72">
    <source>
    </source>
</evidence>
<evidence type="ECO:0000269" key="73">
    <source>
    </source>
</evidence>
<evidence type="ECO:0000269" key="74">
    <source>
    </source>
</evidence>
<evidence type="ECO:0000269" key="75">
    <source>
    </source>
</evidence>
<evidence type="ECO:0000269" key="76">
    <source>
    </source>
</evidence>
<evidence type="ECO:0000269" key="77">
    <source>
    </source>
</evidence>
<evidence type="ECO:0000303" key="78">
    <source>
    </source>
</evidence>
<evidence type="ECO:0000303" key="79">
    <source>
    </source>
</evidence>
<evidence type="ECO:0000303" key="80">
    <source>
    </source>
</evidence>
<evidence type="ECO:0000303" key="81">
    <source>
    </source>
</evidence>
<evidence type="ECO:0000303" key="82">
    <source>
    </source>
</evidence>
<evidence type="ECO:0000303" key="83">
    <source>
    </source>
</evidence>
<evidence type="ECO:0000303" key="84">
    <source ref="6"/>
</evidence>
<evidence type="ECO:0000303" key="85">
    <source ref="7"/>
</evidence>
<evidence type="ECO:0000303" key="86">
    <source ref="8"/>
</evidence>
<evidence type="ECO:0000305" key="87"/>
<evidence type="ECO:0000305" key="88">
    <source>
    </source>
</evidence>
<evidence type="ECO:0000305" key="89">
    <source>
    </source>
</evidence>
<evidence type="ECO:0007744" key="90">
    <source>
    </source>
</evidence>
<evidence type="ECO:0007744" key="91">
    <source>
    </source>
</evidence>
<evidence type="ECO:0007744" key="92">
    <source>
    </source>
</evidence>
<evidence type="ECO:0007744" key="93">
    <source>
    </source>
</evidence>
<evidence type="ECO:0007744" key="94">
    <source>
    </source>
</evidence>
<evidence type="ECO:0007744" key="95">
    <source>
    </source>
</evidence>
<evidence type="ECO:0007744" key="96">
    <source>
    </source>
</evidence>
<evidence type="ECO:0007744" key="97">
    <source>
    </source>
</evidence>
<evidence type="ECO:0007744" key="98">
    <source>
    </source>
</evidence>
<evidence type="ECO:0007744" key="99">
    <source>
    </source>
</evidence>
<evidence type="ECO:0007744" key="100">
    <source>
    </source>
</evidence>
<evidence type="ECO:0007829" key="101">
    <source>
        <dbReference type="PDB" id="1BOR"/>
    </source>
</evidence>
<evidence type="ECO:0007829" key="102">
    <source>
        <dbReference type="PDB" id="5YUF"/>
    </source>
</evidence>
<evidence type="ECO:0007829" key="103">
    <source>
        <dbReference type="PDB" id="6IMQ"/>
    </source>
</evidence>
<evidence type="ECO:0007829" key="104">
    <source>
        <dbReference type="PDB" id="6UYR"/>
    </source>
</evidence>
<evidence type="ECO:0007829" key="105">
    <source>
        <dbReference type="PDB" id="8J2P"/>
    </source>
</evidence>
<protein>
    <recommendedName>
        <fullName>Protein PML</fullName>
    </recommendedName>
    <alternativeName>
        <fullName>E3 SUMO-protein ligase PML</fullName>
        <ecNumber evidence="46 71">2.3.2.-</ecNumber>
    </alternativeName>
    <alternativeName>
        <fullName>Promyelocytic leukemia protein</fullName>
    </alternativeName>
    <alternativeName>
        <fullName>RING finger protein 71</fullName>
    </alternativeName>
    <alternativeName>
        <fullName evidence="87">RING-type E3 SUMO transferase PML</fullName>
    </alternativeName>
    <alternativeName>
        <fullName>Tripartite motif-containing protein 19</fullName>
        <shortName>TRIM19</shortName>
    </alternativeName>
</protein>
<organism>
    <name type="scientific">Homo sapiens</name>
    <name type="common">Human</name>
    <dbReference type="NCBI Taxonomy" id="9606"/>
    <lineage>
        <taxon>Eukaryota</taxon>
        <taxon>Metazoa</taxon>
        <taxon>Chordata</taxon>
        <taxon>Craniata</taxon>
        <taxon>Vertebrata</taxon>
        <taxon>Euteleostomi</taxon>
        <taxon>Mammalia</taxon>
        <taxon>Eutheria</taxon>
        <taxon>Euarchontoglires</taxon>
        <taxon>Primates</taxon>
        <taxon>Haplorrhini</taxon>
        <taxon>Catarrhini</taxon>
        <taxon>Hominidae</taxon>
        <taxon>Homo</taxon>
    </lineage>
</organism>